<comment type="function">
    <text evidence="21 25 26 28 30 33 35 38 40 41 42 44 57">Tyrosine-protein kinase that acts as a cell-surface receptor for fibroblast growth factors and plays an essential role in the regulation of cell proliferation, differentiation, migration and apoptosis, and in the regulation of embryonic development. Required for normal embryonic patterning, trophoblast function, limb bud development, lung morphogenesis, osteogenesis and skin development. Plays an essential role in the regulation of osteoblast differentiation, proliferation and apoptosis, and is required for normal skeleton development. Promotes cell proliferation in keratinocytes and immature osteoblasts, but promotes apoptosis in differentiated osteoblasts. Phosphorylates PLCG1, FRS2 and PAK4. Ligand binding leads to the activation of several signaling cascades. Activation of PLCG1 leads to the production of the cellular signaling molecules diacylglycerol and inositol 1,4,5-trisphosphate. Phosphorylation of FRS2 triggers recruitment of GRB2, GAB1, PIK3R1 and SOS1, and mediates activation of RAS, MAPK1/ERK2, MAPK3/ERK1 and the MAP kinase signaling pathway, as well as of the AKT1 signaling pathway. FGFR2 signaling is down-regulated by ubiquitination, internalization and degradation. Mutations that lead to constitutive kinase activation or impair normal FGFR2 maturation, internalization and degradation lead to aberrant signaling. Over-expressed FGFR2 promotes activation of STAT1.</text>
</comment>
<comment type="catalytic activity">
    <reaction evidence="5 31 37 42 43">
        <text>L-tyrosyl-[protein] + ATP = O-phospho-L-tyrosyl-[protein] + ADP + H(+)</text>
        <dbReference type="Rhea" id="RHEA:10596"/>
        <dbReference type="Rhea" id="RHEA-COMP:10136"/>
        <dbReference type="Rhea" id="RHEA-COMP:20101"/>
        <dbReference type="ChEBI" id="CHEBI:15378"/>
        <dbReference type="ChEBI" id="CHEBI:30616"/>
        <dbReference type="ChEBI" id="CHEBI:46858"/>
        <dbReference type="ChEBI" id="CHEBI:61978"/>
        <dbReference type="ChEBI" id="CHEBI:456216"/>
        <dbReference type="EC" id="2.7.10.1"/>
    </reaction>
</comment>
<comment type="activity regulation">
    <text evidence="36 43">Present in an inactive conformation in the absence of bound ligand. Ligand binding leads to dimerization and activation by autophosphorylation on tyrosine residues. Inhibited by ARQ 523 and ARQ 069; these compounds maintain the kinase in an inactive conformation and inhibit autophosphorylation.</text>
</comment>
<comment type="subunit">
    <text evidence="1 9 12 15 18 21 22 23 24 25 26 28 30 31 35 36 37 39 40 43 57 61">Monomer. Homodimer after ligand binding. Interacts predominantly with FGF1 and FGF2, but can also interact with FGF3, FGF4, FGF6, FGF7, FGF8, FGF9, FGF10, FGF17, FGF18 and FGF22 (in vitro). Ligand specificity is determined by tissue-specific expression of isoforms, and differences in the third Ig-like domain are crucial for ligand specificity. Isoform 1 has high affinity for FGF1 and FGF2, but low affinity for FGF7. Isoform 3 has high affinity for FGF1 and FGF7, and has much higher affinity for FGF7 than isoform 1 (in vitro). Affinity for fibroblast growth factors (FGFs) is increased by heparan sulfate glycosaminoglycans that function as coreceptors. Likewise, KLB increases the affinity for FGF19 and FGF21. Interacts with PLCG1, GRB2 and PAK4. Interacts with FLRT2 (By similarity).</text>
</comment>
<comment type="interaction">
    <interactant intactId="EBI-1028658">
        <id>P21802</id>
    </interactant>
    <interactant intactId="EBI-698068">
        <id>P05230</id>
        <label>FGF1</label>
    </interactant>
    <organismsDiffer>false</organismsDiffer>
    <experiments>3</experiments>
</comment>
<comment type="interaction">
    <interactant intactId="EBI-1028658">
        <id>P21802</id>
    </interactant>
    <interactant intactId="EBI-6880860">
        <id>PRO_0000008908</id>
        <label>FGF1</label>
        <dbReference type="UniProtKB" id="P05230"/>
    </interactant>
    <organismsDiffer>false</organismsDiffer>
    <experiments>5</experiments>
</comment>
<comment type="interaction">
    <interactant intactId="EBI-1028658">
        <id>P21802</id>
    </interactant>
    <interactant intactId="EBI-1035684">
        <id>O15520</id>
        <label>FGF10</label>
    </interactant>
    <organismsDiffer>false</organismsDiffer>
    <experiments>2</experiments>
</comment>
<comment type="interaction">
    <interactant intactId="EBI-1028658">
        <id>P21802</id>
    </interactant>
    <interactant intactId="EBI-977447">
        <id>P09038</id>
        <label>FGF2</label>
    </interactant>
    <organismsDiffer>false</organismsDiffer>
    <experiments>5</experiments>
</comment>
<comment type="interaction">
    <interactant intactId="EBI-1028658">
        <id>P21802</id>
    </interactant>
    <interactant intactId="EBI-11122080">
        <id>P09038-2</id>
        <label>FGF2</label>
    </interactant>
    <organismsDiffer>false</organismsDiffer>
    <experiments>2</experiments>
</comment>
<comment type="interaction">
    <interactant intactId="EBI-1028658">
        <id>P21802</id>
    </interactant>
    <interactant intactId="EBI-1028277">
        <id>P11362</id>
        <label>FGFR1</label>
    </interactant>
    <organismsDiffer>false</organismsDiffer>
    <experiments>3</experiments>
</comment>
<comment type="interaction">
    <interactant intactId="EBI-1028658">
        <id>P21802</id>
    </interactant>
    <interactant intactId="EBI-401755">
        <id>P62993</id>
        <label>GRB2</label>
    </interactant>
    <organismsDiffer>false</organismsDiffer>
    <experiments>6</experiments>
</comment>
<comment type="interaction">
    <interactant intactId="EBI-1028658">
        <id>P21802</id>
    </interactant>
    <interactant intactId="EBI-6358090">
        <id>P03968</id>
        <label>FGF1</label>
    </interactant>
    <organismsDiffer>true</organismsDiffer>
    <experiments>2</experiments>
</comment>
<comment type="interaction">
    <interactant intactId="EBI-15489960">
        <id>P21802-1</id>
    </interactant>
    <interactant intactId="EBI-15489950">
        <id>P05230-1</id>
        <label>FGF1</label>
    </interactant>
    <organismsDiffer>false</organismsDiffer>
    <experiments>2</experiments>
</comment>
<comment type="interaction">
    <interactant intactId="EBI-15489960">
        <id>P21802-1</id>
    </interactant>
    <interactant intactId="EBI-977447">
        <id>P09038</id>
        <label>FGF2</label>
    </interactant>
    <organismsDiffer>false</organismsDiffer>
    <experiments>2</experiments>
</comment>
<comment type="interaction">
    <interactant intactId="EBI-15489960">
        <id>P21802-1</id>
    </interactant>
    <interactant intactId="EBI-15489960">
        <id>P21802-1</id>
        <label>FGFR2</label>
    </interactant>
    <organismsDiffer>false</organismsDiffer>
    <experiments>3</experiments>
</comment>
<comment type="interaction">
    <interactant intactId="EBI-15489960">
        <id>P21802-1</id>
    </interactant>
    <interactant intactId="EBI-79387">
        <id>P19174</id>
        <label>PLCG1</label>
    </interactant>
    <organismsDiffer>false</organismsDiffer>
    <experiments>9</experiments>
</comment>
<comment type="interaction">
    <interactant intactId="EBI-6354683">
        <id>P21802-3</id>
    </interactant>
    <interactant intactId="EBI-3937699">
        <id>P21781</id>
        <label>FGF7</label>
    </interactant>
    <organismsDiffer>false</organismsDiffer>
    <experiments>2</experiments>
</comment>
<comment type="interaction">
    <interactant intactId="EBI-6354683">
        <id>P21802-3</id>
    </interactant>
    <interactant intactId="EBI-6358090">
        <id>P03968</id>
        <label>FGF1</label>
    </interactant>
    <organismsDiffer>true</organismsDiffer>
    <experiments>2</experiments>
</comment>
<comment type="subcellular location">
    <subcellularLocation>
        <location>Cell membrane</location>
        <topology>Single-pass type I membrane protein</topology>
    </subcellularLocation>
    <subcellularLocation>
        <location>Golgi apparatus</location>
    </subcellularLocation>
    <subcellularLocation>
        <location>Cytoplasmic vesicle</location>
    </subcellularLocation>
    <text>Detected on osteoblast plasma membrane lipid rafts. After ligand binding, the activated receptor is rapidly internalized and degraded.</text>
</comment>
<comment type="subcellular location">
    <molecule>Isoform 1</molecule>
    <subcellularLocation>
        <location>Cell membrane</location>
        <topology>Single-pass type I membrane protein</topology>
    </subcellularLocation>
    <text>After ligand binding, the activated receptor is rapidly internalized and degraded.</text>
</comment>
<comment type="subcellular location">
    <molecule>Isoform 3</molecule>
    <subcellularLocation>
        <location>Cell membrane</location>
        <topology>Single-pass type I membrane protein</topology>
    </subcellularLocation>
    <text>After ligand binding, the activated receptor is rapidly internalized and degraded.</text>
</comment>
<comment type="subcellular location">
    <molecule>Isoform 8</molecule>
    <subcellularLocation>
        <location>Secreted</location>
    </subcellularLocation>
</comment>
<comment type="subcellular location">
    <molecule>Isoform 13</molecule>
    <subcellularLocation>
        <location>Secreted</location>
    </subcellularLocation>
</comment>
<comment type="alternative products">
    <event type="alternative splicing"/>
    <isoform>
        <id>P21802-1</id>
        <name>1</name>
        <name>BEK</name>
        <name>FGFR2IIIc</name>
        <sequence type="displayed"/>
    </isoform>
    <isoform>
        <id>P21802-2</id>
        <name>2</name>
        <name>Short</name>
        <sequence type="described" ref="VSP_002978"/>
    </isoform>
    <isoform>
        <id>P21802-3</id>
        <name>3</name>
        <name>BFR-1</name>
        <name>FGFR2IIIb</name>
        <name>KGFR</name>
        <sequence type="described" ref="VSP_002969 VSP_002970 VSP_002971 VSP_002972"/>
    </isoform>
    <isoform>
        <id>P21802-4</id>
        <name>4</name>
        <name>K-sam</name>
        <sequence type="described" ref="VSP_002964 VSP_002969 VSP_002970 VSP_002971 VSP_002972 VSP_002975 VSP_002976"/>
    </isoform>
    <isoform>
        <id>P21802-5</id>
        <name>5</name>
        <name>K-sam-I</name>
        <name>BEK</name>
        <name>IgIIIc</name>
        <sequence type="described" ref="VSP_002975"/>
    </isoform>
    <isoform>
        <id>P21802-6</id>
        <name>6</name>
        <name>K-sam-IIC2</name>
        <sequence type="described" ref="VSP_002975 VSP_002984"/>
    </isoform>
    <isoform>
        <id>P21802-8</id>
        <name>7</name>
        <name>K-sam-IIC3</name>
        <sequence type="described" ref="VSP_002975 VSP_002978"/>
    </isoform>
    <isoform>
        <id>P21802-14</id>
        <name>8</name>
        <name>K-sam-IV</name>
        <name>Soluble KGFR</name>
        <sequence type="described" ref="VSP_002965 VSP_002966"/>
    </isoform>
    <isoform>
        <id>P21802-15</id>
        <name>9</name>
        <name>K-sam-III</name>
        <sequence type="described" ref="VSP_002968"/>
    </isoform>
    <isoform>
        <id>P21802-16</id>
        <name>10</name>
        <name>TK14</name>
        <sequence type="described" ref="VSP_002967 VSP_002975"/>
    </isoform>
    <isoform>
        <id>P21802-17</id>
        <name>11</name>
        <sequence type="described" ref="VSP_002969 VSP_002970 VSP_002971 VSP_002972 VSP_002978"/>
    </isoform>
    <isoform>
        <id>P21802-18</id>
        <name>12</name>
        <name>K-sam-IIC1</name>
        <name>KGFR</name>
        <name>IgIIIb</name>
        <sequence type="described" ref="VSP_002969 VSP_002970 VSP_002971 VSP_002972 VSP_002975"/>
    </isoform>
    <isoform>
        <id>P21802-19</id>
        <name>13</name>
        <name>Soluble KGFR</name>
        <sequence type="described" ref="VSP_002969 VSP_002970 VSP_002971 VSP_002972 VSP_002973 VSP_002974"/>
    </isoform>
    <isoform>
        <id>P21802-20</id>
        <name>14</name>
        <sequence type="described" ref="VSP_019608 VSP_019609"/>
    </isoform>
    <isoform>
        <id>P21802-21</id>
        <name>15</name>
        <sequence type="described" ref="VSP_002964 VSP_041915"/>
    </isoform>
    <isoform>
        <id>P21802-22</id>
        <name>16</name>
        <sequence type="described" ref="VSP_002964 VSP_002969 VSP_002970 VSP_002971 VSP_002972 VSP_002978"/>
    </isoform>
    <isoform>
        <id>P21802-23</id>
        <name>17</name>
        <sequence type="described" ref="VSP_041914"/>
    </isoform>
</comment>
<comment type="domain">
    <text evidence="23 24 61">The second and third Ig-like domains directly interact with fibroblast growth factors (FGF) and heparan sulfate proteoglycans. Alternative splicing events affecting the third Ig-like domain are crucial for ligand selectivity.</text>
</comment>
<comment type="PTM">
    <text evidence="26 39">Autophosphorylated. Binding of FGF family members together with heparan sulfate proteoglycan or heparin promotes receptor dimerization and autophosphorylation on several tyrosine residues. Autophosphorylation occurs in trans between the two FGFR molecules present in the dimer. Phosphorylation at Tyr-769 is essential for interaction with PLCG1.</text>
</comment>
<comment type="PTM">
    <text evidence="31 33">N-glycosylated in the endoplasmic reticulum. The N-glycan chains undergo further maturation to an Endo H-resistant form in the Golgi apparatus.</text>
</comment>
<comment type="PTM">
    <text evidence="25 31 44">Ubiquitinated. FGFR2 is rapidly ubiquitinated after autophosphorylation, leading to internalization and degradation. Subject to degradation both in lysosomes and by the proteasome.</text>
</comment>
<comment type="disease" evidence="8 16 17 19 36 47 48 53 54 55 56 59 60 64 67 69 72">
    <disease id="DI-00383">
        <name>Crouzon syndrome</name>
        <acronym>CS</acronym>
        <description>An autosomal dominant syndrome characterized by craniosynostosis, hypertelorism, exophthalmos and external strabismus, parrot-beaked nose, short upper lip, hypoplastic maxilla, and a relative mandibular prognathism.</description>
        <dbReference type="MIM" id="123500"/>
    </disease>
    <text>The disease is caused by variants affecting the gene represented in this entry.</text>
</comment>
<comment type="disease" evidence="53 55 56 65 69">
    <disease id="DI-00602">
        <name>Jackson-Weiss syndrome</name>
        <acronym>JWS</acronym>
        <description>An autosomal dominant craniosynostosis syndrome characterized by craniofacial abnormalities and abnormality of the feet: broad great toes with medial deviation and tarsal-metatarsal coalescence.</description>
        <dbReference type="MIM" id="123150"/>
    </disease>
    <text>The disease is caused by variants affecting the gene represented in this entry.</text>
</comment>
<comment type="disease" evidence="18 19 25 49 51 62 66 69">
    <disease id="DI-00131">
        <name>Apert syndrome</name>
        <acronym>APRS</acronym>
        <description>A syndrome characterized by facio-cranio-synostosis, osseous and membranous syndactyly of the four extremities, and midface hypoplasia. The craniosynostosis is bicoronal and results in acrocephaly of brachysphenocephalic type. Syndactyly of the fingers and toes may be total (mitten hands and sock feet) or partial affecting the second, third, and fourth digits. Intellectual deficit is frequent and often severe, usually being associated with cerebral malformations.</description>
        <dbReference type="MIM" id="101200"/>
    </disease>
    <text>The disease is caused by variants affecting the gene represented in this entry.</text>
</comment>
<comment type="disease" evidence="7 13 16 19 31 36 50 52 56 62 63 70 71">
    <disease id="DI-00924">
        <name>Pfeiffer syndrome</name>
        <acronym>PS</acronym>
        <description>A syndrome characterized by the association of craniosynostosis, broad and deviated thumbs and big toes, and partial syndactyly of the fingers and toes. Three subtypes are known: mild autosomal dominant form (type 1); cloverleaf skull, elbow ankylosis, early death, sporadic (type 2); craniosynostosis, early demise, sporadic (type 3).</description>
        <dbReference type="MIM" id="101600"/>
    </disease>
    <text>The disease is caused by variants affecting the gene represented in this entry.</text>
</comment>
<comment type="disease" evidence="20 58">
    <disease id="DI-01270">
        <name>Beare-Stevenson cutis gyrata syndrome</name>
        <acronym>BSTVS</acronym>
        <description>An autosomal dominant disease characterized by craniofacial anomalies, particularly craniosynostosis, and ear defects, cutis gyrata, acanthosis nigricans, anogenital anomalies, skin tags, and prominent umbilical stump. The skin furrows have a corrugated appearance and are widespread. Cutis gyrata variably affects the scalp, forehead, face, preauricular area, neck, trunk, hands, and feet.</description>
        <dbReference type="MIM" id="123790"/>
    </disease>
    <text>The disease is caused by variants affecting the gene represented in this entry.</text>
</comment>
<comment type="disease" evidence="27 36">
    <disease id="DI-00498">
        <name>Familial scaphocephaly syndrome</name>
        <acronym>FSPC</acronym>
        <description>An autosomal dominant craniosynostosis syndrome characterized by scaphocephaly, macrocephaly, hypertelorism, maxillary retrusion, and mild intellectual disability. Scaphocephaly is the most common of the craniosynostosis conditions and is characterized by a long, narrow head. It is due to premature fusion of the sagittal suture or from external deformation.</description>
        <dbReference type="MIM" id="609579"/>
    </disease>
    <text>The disease is caused by variants affecting the gene represented in this entry.</text>
</comment>
<comment type="disease" evidence="29 37">
    <disease id="DI-00627">
        <name>Lacrimo-auriculo-dento-digital syndrome 1</name>
        <acronym>LADD1</acronym>
        <description>A form of lacrimo-auriculo-dento-digital syndrome, an autosomal dominant disease characterized by aplastic/hypoplastic lacrimal and salivary glands and ducts, cup-shaped ears, hearing loss, hypodontia and enamel hypoplasia, and distal limb segments anomalies. In addition to these cardinal features, facial dysmorphism, malformations of the kidney and respiratory system and abnormal genitalia have been reported. Craniosynostosis and severe syndactyly are not observed.</description>
        <dbReference type="MIM" id="149730"/>
    </disease>
    <text>The disease is caused by variants affecting the gene represented in this entry.</text>
</comment>
<comment type="disease" evidence="11">
    <disease id="DI-00125">
        <name>Antley-Bixler syndrome, without genital anomalies or disordered steroidogenesis</name>
        <acronym>ABS2</acronym>
        <description>A rare syndrome characterized by craniosynostosis, radiohumeral synostosis present from the perinatal period, midface hypoplasia, choanal stenosis or atresia, femoral bowing and multiple joint contractures. Arachnodactyly and/or camptodactyly have also been reported.</description>
        <dbReference type="MIM" id="207410"/>
    </disease>
    <text>The disease is caused by variants affecting the gene represented in this entry.</text>
</comment>
<comment type="disease" evidence="45">
    <disease id="DI-03429">
        <name>Bent bone dysplasia syndrome 1</name>
        <acronym>BBDS1</acronym>
        <description>A perinatal lethal skeletal dysplasia characterized by poor mineralization of the calvarium, craniosynostosis, dysmorphic facial features, prenatal teeth, hypoplastic pubis and clavicles, osteopenia, and bent long bones. Dysmorphic facial features included low-set ears, hypertelorism, midface hypoplasia, prematurely erupted fetal teeth, and micrognathia.</description>
        <dbReference type="MIM" id="614592"/>
    </disease>
    <text>The disease is caused by variants affecting the gene represented in this entry.</text>
</comment>
<comment type="disease" evidence="68">
    <disease id="DI-01006">
        <name>Saethre-Chotzen syndrome</name>
        <acronym>SCS</acronym>
        <description>A craniosynostosis syndrome characterized by coronal synostosis, brachycephaly, low frontal hairline, facial asymmetry, hypertelorism, broad halluces, and clinodactyly.</description>
        <dbReference type="MIM" id="101400"/>
    </disease>
    <text>The disease is caused by variants affecting the gene represented in this entry.</text>
</comment>
<comment type="similarity">
    <text evidence="4">Belongs to the protein kinase superfamily. Tyr protein kinase family. Fibroblast growth factor receptor subfamily.</text>
</comment>
<comment type="sequence caution" evidence="86">
    <conflict type="miscellaneous discrepancy">
        <sequence resource="EMBL-CDS" id="BAA89296"/>
    </conflict>
    <text>Contaminating sequence. Somatic variant that appeared in a cancer cell line as a result of genome instability.</text>
</comment>
<comment type="sequence caution" evidence="86">
    <conflict type="miscellaneous discrepancy">
        <sequence resource="EMBL-CDS" id="BAA89297"/>
    </conflict>
    <text>Contaminating sequence. Somatic variant that appeared in a cancer cell line as a result of genome instability.</text>
</comment>
<comment type="sequence caution" evidence="86">
    <conflict type="miscellaneous discrepancy">
        <sequence resource="EMBL-CDS" id="BAA89298"/>
    </conflict>
    <text>Contaminating sequence. Somatic variant that appeared in a cancer cell line as a result of genome instability.</text>
</comment>
<comment type="sequence caution" evidence="86">
    <conflict type="miscellaneous discrepancy">
        <sequence resource="EMBL-CDS" id="BAA89299"/>
    </conflict>
    <text>Contaminating sequence. Somatic variant that appeared in a cancer cell line as a result of genome instability.</text>
</comment>
<comment type="sequence caution" evidence="86">
    <conflict type="miscellaneous discrepancy">
        <sequence resource="EMBL-CDS" id="BAA89300"/>
    </conflict>
    <text>Contaminating sequence. Somatic variant that appeared in a cancer cell line as a result of genome instability.</text>
</comment>
<comment type="sequence caution" evidence="86">
    <conflict type="miscellaneous discrepancy">
        <sequence resource="EMBL-CDS" id="BAA89301"/>
    </conflict>
    <text>Contaminating sequence. Somatic variant that appeared in a cancer cell line as a result of genome instability.</text>
</comment>
<comment type="sequence caution" evidence="85">
    <conflict type="erroneous initiation">
        <sequence resource="EMBL-CDS" id="BAG57383"/>
    </conflict>
    <text>Extended N-terminus.</text>
</comment>
<comment type="online information" name="Atlas of Genetics and Cytogenetics in Oncology and Haematology">
    <link uri="https://atlasgeneticsoncology.org/gene/40570/FGFR2"/>
</comment>
<evidence type="ECO:0000250" key="1">
    <source>
        <dbReference type="UniProtKB" id="P21803"/>
    </source>
</evidence>
<evidence type="ECO:0000255" key="2"/>
<evidence type="ECO:0000255" key="3">
    <source>
        <dbReference type="PROSITE-ProRule" id="PRU00114"/>
    </source>
</evidence>
<evidence type="ECO:0000255" key="4">
    <source>
        <dbReference type="PROSITE-ProRule" id="PRU00159"/>
    </source>
</evidence>
<evidence type="ECO:0000255" key="5">
    <source>
        <dbReference type="PROSITE-ProRule" id="PRU10028"/>
    </source>
</evidence>
<evidence type="ECO:0000256" key="6">
    <source>
        <dbReference type="SAM" id="MobiDB-lite"/>
    </source>
</evidence>
<evidence type="ECO:0000269" key="7">
    <source>
    </source>
</evidence>
<evidence type="ECO:0000269" key="8">
    <source>
    </source>
</evidence>
<evidence type="ECO:0000269" key="9">
    <source>
    </source>
</evidence>
<evidence type="ECO:0000269" key="10">
    <source>
    </source>
</evidence>
<evidence type="ECO:0000269" key="11">
    <source>
    </source>
</evidence>
<evidence type="ECO:0000269" key="12">
    <source>
    </source>
</evidence>
<evidence type="ECO:0000269" key="13">
    <source>
    </source>
</evidence>
<evidence type="ECO:0000269" key="14">
    <source>
    </source>
</evidence>
<evidence type="ECO:0000269" key="15">
    <source>
    </source>
</evidence>
<evidence type="ECO:0000269" key="16">
    <source>
    </source>
</evidence>
<evidence type="ECO:0000269" key="17">
    <source>
    </source>
</evidence>
<evidence type="ECO:0000269" key="18">
    <source>
    </source>
</evidence>
<evidence type="ECO:0000269" key="19">
    <source>
    </source>
</evidence>
<evidence type="ECO:0000269" key="20">
    <source>
    </source>
</evidence>
<evidence type="ECO:0000269" key="21">
    <source>
    </source>
</evidence>
<evidence type="ECO:0000269" key="22">
    <source>
    </source>
</evidence>
<evidence type="ECO:0000269" key="23">
    <source>
    </source>
</evidence>
<evidence type="ECO:0000269" key="24">
    <source>
    </source>
</evidence>
<evidence type="ECO:0000269" key="25">
    <source>
    </source>
</evidence>
<evidence type="ECO:0000269" key="26">
    <source>
    </source>
</evidence>
<evidence type="ECO:0000269" key="27">
    <source>
    </source>
</evidence>
<evidence type="ECO:0000269" key="28">
    <source>
    </source>
</evidence>
<evidence type="ECO:0000269" key="29">
    <source>
    </source>
</evidence>
<evidence type="ECO:0000269" key="30">
    <source>
    </source>
</evidence>
<evidence type="ECO:0000269" key="31">
    <source>
    </source>
</evidence>
<evidence type="ECO:0000269" key="32">
    <source>
    </source>
</evidence>
<evidence type="ECO:0000269" key="33">
    <source>
    </source>
</evidence>
<evidence type="ECO:0000269" key="34">
    <source>
    </source>
</evidence>
<evidence type="ECO:0000269" key="35">
    <source>
    </source>
</evidence>
<evidence type="ECO:0000269" key="36">
    <source>
    </source>
</evidence>
<evidence type="ECO:0000269" key="37">
    <source>
    </source>
</evidence>
<evidence type="ECO:0000269" key="38">
    <source>
    </source>
</evidence>
<evidence type="ECO:0000269" key="39">
    <source>
    </source>
</evidence>
<evidence type="ECO:0000269" key="40">
    <source>
    </source>
</evidence>
<evidence type="ECO:0000269" key="41">
    <source>
    </source>
</evidence>
<evidence type="ECO:0000269" key="42">
    <source>
    </source>
</evidence>
<evidence type="ECO:0000269" key="43">
    <source>
    </source>
</evidence>
<evidence type="ECO:0000269" key="44">
    <source>
    </source>
</evidence>
<evidence type="ECO:0000269" key="45">
    <source>
    </source>
</evidence>
<evidence type="ECO:0000269" key="46">
    <source>
    </source>
</evidence>
<evidence type="ECO:0000269" key="47">
    <source>
    </source>
</evidence>
<evidence type="ECO:0000269" key="48">
    <source>
    </source>
</evidence>
<evidence type="ECO:0000269" key="49">
    <source>
    </source>
</evidence>
<evidence type="ECO:0000269" key="50">
    <source>
    </source>
</evidence>
<evidence type="ECO:0000269" key="51">
    <source>
    </source>
</evidence>
<evidence type="ECO:0000269" key="52">
    <source>
    </source>
</evidence>
<evidence type="ECO:0000269" key="53">
    <source>
    </source>
</evidence>
<evidence type="ECO:0000269" key="54">
    <source>
    </source>
</evidence>
<evidence type="ECO:0000269" key="55">
    <source>
    </source>
</evidence>
<evidence type="ECO:0000269" key="56">
    <source>
    </source>
</evidence>
<evidence type="ECO:0000269" key="57">
    <source>
    </source>
</evidence>
<evidence type="ECO:0000269" key="58">
    <source>
    </source>
</evidence>
<evidence type="ECO:0000269" key="59">
    <source>
    </source>
</evidence>
<evidence type="ECO:0000269" key="60">
    <source>
    </source>
</evidence>
<evidence type="ECO:0000269" key="61">
    <source>
    </source>
</evidence>
<evidence type="ECO:0000269" key="62">
    <source>
    </source>
</evidence>
<evidence type="ECO:0000269" key="63">
    <source>
    </source>
</evidence>
<evidence type="ECO:0000269" key="64">
    <source>
    </source>
</evidence>
<evidence type="ECO:0000269" key="65">
    <source>
    </source>
</evidence>
<evidence type="ECO:0000269" key="66">
    <source>
    </source>
</evidence>
<evidence type="ECO:0000269" key="67">
    <source>
    </source>
</evidence>
<evidence type="ECO:0000269" key="68">
    <source>
    </source>
</evidence>
<evidence type="ECO:0000269" key="69">
    <source>
    </source>
</evidence>
<evidence type="ECO:0000269" key="70">
    <source>
    </source>
</evidence>
<evidence type="ECO:0000269" key="71">
    <source>
    </source>
</evidence>
<evidence type="ECO:0000269" key="72">
    <source ref="10"/>
</evidence>
<evidence type="ECO:0000269" key="73">
    <source ref="15"/>
</evidence>
<evidence type="ECO:0000303" key="74">
    <source>
    </source>
</evidence>
<evidence type="ECO:0000303" key="75">
    <source>
    </source>
</evidence>
<evidence type="ECO:0000303" key="76">
    <source>
    </source>
</evidence>
<evidence type="ECO:0000303" key="77">
    <source>
    </source>
</evidence>
<evidence type="ECO:0000303" key="78">
    <source>
    </source>
</evidence>
<evidence type="ECO:0000303" key="79">
    <source>
    </source>
</evidence>
<evidence type="ECO:0000303" key="80">
    <source>
    </source>
</evidence>
<evidence type="ECO:0000303" key="81">
    <source>
    </source>
</evidence>
<evidence type="ECO:0000303" key="82">
    <source>
    </source>
</evidence>
<evidence type="ECO:0000303" key="83">
    <source>
    </source>
</evidence>
<evidence type="ECO:0000303" key="84">
    <source ref="14"/>
</evidence>
<evidence type="ECO:0000305" key="85"/>
<evidence type="ECO:0000305" key="86">
    <source>
    </source>
</evidence>
<evidence type="ECO:0007744" key="87">
    <source>
    </source>
</evidence>
<evidence type="ECO:0007829" key="88">
    <source>
        <dbReference type="PDB" id="1IIL"/>
    </source>
</evidence>
<evidence type="ECO:0007829" key="89">
    <source>
        <dbReference type="PDB" id="1OEC"/>
    </source>
</evidence>
<evidence type="ECO:0007829" key="90">
    <source>
        <dbReference type="PDB" id="2FDB"/>
    </source>
</evidence>
<evidence type="ECO:0007829" key="91">
    <source>
        <dbReference type="PDB" id="2PVF"/>
    </source>
</evidence>
<evidence type="ECO:0007829" key="92">
    <source>
        <dbReference type="PDB" id="2PVY"/>
    </source>
</evidence>
<evidence type="ECO:0007829" key="93">
    <source>
        <dbReference type="PDB" id="2PZ5"/>
    </source>
</evidence>
<evidence type="ECO:0007829" key="94">
    <source>
        <dbReference type="PDB" id="2PZR"/>
    </source>
</evidence>
<evidence type="ECO:0007829" key="95">
    <source>
        <dbReference type="PDB" id="3CAF"/>
    </source>
</evidence>
<evidence type="ECO:0007829" key="96">
    <source>
        <dbReference type="PDB" id="3CLY"/>
    </source>
</evidence>
<evidence type="ECO:0007829" key="97">
    <source>
        <dbReference type="PDB" id="3OJ2"/>
    </source>
</evidence>
<evidence type="ECO:0007829" key="98">
    <source>
        <dbReference type="PDB" id="3OJM"/>
    </source>
</evidence>
<evidence type="ECO:0007829" key="99">
    <source>
        <dbReference type="PDB" id="4J99"/>
    </source>
</evidence>
<evidence type="ECO:0007829" key="100">
    <source>
        <dbReference type="PDB" id="4WV1"/>
    </source>
</evidence>
<evidence type="ECO:0007829" key="101">
    <source>
        <dbReference type="PDB" id="5UGL"/>
    </source>
</evidence>
<evidence type="ECO:0007829" key="102">
    <source>
        <dbReference type="PDB" id="5UI0"/>
    </source>
</evidence>
<gene>
    <name type="primary">FGFR2</name>
    <name type="synonym">BEK</name>
    <name type="synonym">KGFR</name>
    <name type="synonym">KSAM</name>
</gene>
<proteinExistence type="evidence at protein level"/>
<dbReference type="EC" id="2.7.10.1" evidence="31 37 42 43"/>
<dbReference type="EMBL" id="X52832">
    <property type="protein sequence ID" value="CAA37014.1"/>
    <property type="molecule type" value="mRNA"/>
</dbReference>
<dbReference type="EMBL" id="M55614">
    <property type="protein sequence ID" value="AAA61188.1"/>
    <property type="molecule type" value="mRNA"/>
</dbReference>
<dbReference type="EMBL" id="X56191">
    <property type="protein sequence ID" value="CAA39654.1"/>
    <property type="molecule type" value="mRNA"/>
</dbReference>
<dbReference type="EMBL" id="M35718">
    <property type="protein sequence ID" value="AAA36152.1"/>
    <property type="molecule type" value="mRNA"/>
</dbReference>
<dbReference type="EMBL" id="M87770">
    <property type="protein sequence ID" value="AAA59470.1"/>
    <property type="molecule type" value="mRNA"/>
</dbReference>
<dbReference type="EMBL" id="M87771">
    <property type="protein sequence ID" value="AAA59471.1"/>
    <property type="molecule type" value="mRNA"/>
</dbReference>
<dbReference type="EMBL" id="M87772">
    <property type="protein sequence ID" value="AAA59472.1"/>
    <property type="molecule type" value="mRNA"/>
</dbReference>
<dbReference type="EMBL" id="M97193">
    <property type="protein sequence ID" value="AAA52449.1"/>
    <property type="molecule type" value="mRNA"/>
</dbReference>
<dbReference type="EMBL" id="U11814">
    <property type="protein sequence ID" value="AAA68514.1"/>
    <property type="molecule type" value="mRNA"/>
</dbReference>
<dbReference type="EMBL" id="M80634">
    <property type="protein sequence ID" value="AAA36147.1"/>
    <property type="molecule type" value="mRNA"/>
</dbReference>
<dbReference type="EMBL" id="Z71929">
    <property type="protein sequence ID" value="CAA96492.1"/>
    <property type="molecule type" value="mRNA"/>
</dbReference>
<dbReference type="EMBL" id="AB030073">
    <property type="protein sequence ID" value="BAA89296.1"/>
    <property type="status" value="ALT_SEQ"/>
    <property type="molecule type" value="mRNA"/>
</dbReference>
<dbReference type="EMBL" id="AB030074">
    <property type="protein sequence ID" value="BAA89297.1"/>
    <property type="status" value="ALT_SEQ"/>
    <property type="molecule type" value="mRNA"/>
</dbReference>
<dbReference type="EMBL" id="AB030075">
    <property type="protein sequence ID" value="BAA89298.1"/>
    <property type="status" value="ALT_SEQ"/>
    <property type="molecule type" value="mRNA"/>
</dbReference>
<dbReference type="EMBL" id="AB030076">
    <property type="protein sequence ID" value="BAA89299.1"/>
    <property type="status" value="ALT_SEQ"/>
    <property type="molecule type" value="mRNA"/>
</dbReference>
<dbReference type="EMBL" id="AB030077">
    <property type="protein sequence ID" value="BAA89300.1"/>
    <property type="status" value="ALT_SEQ"/>
    <property type="molecule type" value="mRNA"/>
</dbReference>
<dbReference type="EMBL" id="AB030078">
    <property type="protein sequence ID" value="BAA89301.1"/>
    <property type="status" value="ALT_SEQ"/>
    <property type="molecule type" value="mRNA"/>
</dbReference>
<dbReference type="EMBL" id="AF360695">
    <property type="protein sequence ID" value="AAK94205.1"/>
    <property type="molecule type" value="Genomic_DNA"/>
</dbReference>
<dbReference type="EMBL" id="AF410480">
    <property type="protein sequence ID" value="AAK94205.1"/>
    <property type="status" value="JOINED"/>
    <property type="molecule type" value="Genomic_DNA"/>
</dbReference>
<dbReference type="EMBL" id="AF360695">
    <property type="protein sequence ID" value="AAK94206.1"/>
    <property type="molecule type" value="Genomic_DNA"/>
</dbReference>
<dbReference type="EMBL" id="AF410480">
    <property type="protein sequence ID" value="AAK94206.1"/>
    <property type="status" value="JOINED"/>
    <property type="molecule type" value="Genomic_DNA"/>
</dbReference>
<dbReference type="EMBL" id="AF360695">
    <property type="protein sequence ID" value="AAK94207.1"/>
    <property type="molecule type" value="Genomic_DNA"/>
</dbReference>
<dbReference type="EMBL" id="AF410480">
    <property type="protein sequence ID" value="AAK94207.1"/>
    <property type="status" value="JOINED"/>
    <property type="molecule type" value="Genomic_DNA"/>
</dbReference>
<dbReference type="EMBL" id="AF360695">
    <property type="protein sequence ID" value="AAK94208.1"/>
    <property type="molecule type" value="Genomic_DNA"/>
</dbReference>
<dbReference type="EMBL" id="AF410480">
    <property type="protein sequence ID" value="AAK94208.1"/>
    <property type="status" value="JOINED"/>
    <property type="molecule type" value="Genomic_DNA"/>
</dbReference>
<dbReference type="EMBL" id="AF360695">
    <property type="protein sequence ID" value="AAK94209.1"/>
    <property type="molecule type" value="Genomic_DNA"/>
</dbReference>
<dbReference type="EMBL" id="AF410480">
    <property type="protein sequence ID" value="AAK94209.1"/>
    <property type="status" value="JOINED"/>
    <property type="molecule type" value="Genomic_DNA"/>
</dbReference>
<dbReference type="EMBL" id="AF487553">
    <property type="protein sequence ID" value="AAM74056.1"/>
    <property type="molecule type" value="Genomic_DNA"/>
</dbReference>
<dbReference type="EMBL" id="AB084153">
    <property type="protein sequence ID" value="BAC45037.1"/>
    <property type="molecule type" value="mRNA"/>
</dbReference>
<dbReference type="EMBL" id="DQ493927">
    <property type="protein sequence ID" value="ABE96832.1"/>
    <property type="molecule type" value="Genomic_DNA"/>
</dbReference>
<dbReference type="EMBL" id="AK294026">
    <property type="protein sequence ID" value="BAG57383.1"/>
    <property type="status" value="ALT_INIT"/>
    <property type="molecule type" value="mRNA"/>
</dbReference>
<dbReference type="EMBL" id="AC009988">
    <property type="status" value="NOT_ANNOTATED_CDS"/>
    <property type="molecule type" value="Genomic_DNA"/>
</dbReference>
<dbReference type="EMBL" id="BC039243">
    <property type="protein sequence ID" value="AAH39243.2"/>
    <property type="molecule type" value="mRNA"/>
</dbReference>
<dbReference type="EMBL" id="AF169399">
    <property type="protein sequence ID" value="AAF43273.1"/>
    <property type="molecule type" value="Genomic_DNA"/>
</dbReference>
<dbReference type="EMBL" id="AF169399">
    <property type="protein sequence ID" value="AAF43274.1"/>
    <property type="molecule type" value="Genomic_DNA"/>
</dbReference>
<dbReference type="EMBL" id="AF097353">
    <property type="protein sequence ID" value="AAD31560.1"/>
    <property type="molecule type" value="Genomic_DNA"/>
</dbReference>
<dbReference type="EMBL" id="AF097341">
    <property type="protein sequence ID" value="AAD31560.1"/>
    <property type="status" value="JOINED"/>
    <property type="molecule type" value="Genomic_DNA"/>
</dbReference>
<dbReference type="EMBL" id="AF097342">
    <property type="protein sequence ID" value="AAD31560.1"/>
    <property type="status" value="JOINED"/>
    <property type="molecule type" value="Genomic_DNA"/>
</dbReference>
<dbReference type="EMBL" id="AF097343">
    <property type="protein sequence ID" value="AAD31560.1"/>
    <property type="status" value="JOINED"/>
    <property type="molecule type" value="Genomic_DNA"/>
</dbReference>
<dbReference type="EMBL" id="AF097345">
    <property type="protein sequence ID" value="AAD31560.1"/>
    <property type="status" value="JOINED"/>
    <property type="molecule type" value="Genomic_DNA"/>
</dbReference>
<dbReference type="EMBL" id="AF097346">
    <property type="protein sequence ID" value="AAD31560.1"/>
    <property type="status" value="JOINED"/>
    <property type="molecule type" value="Genomic_DNA"/>
</dbReference>
<dbReference type="EMBL" id="AF097347">
    <property type="protein sequence ID" value="AAD31560.1"/>
    <property type="status" value="JOINED"/>
    <property type="molecule type" value="Genomic_DNA"/>
</dbReference>
<dbReference type="EMBL" id="AF097348">
    <property type="protein sequence ID" value="AAD31560.1"/>
    <property type="status" value="JOINED"/>
    <property type="molecule type" value="Genomic_DNA"/>
</dbReference>
<dbReference type="EMBL" id="AF097349">
    <property type="protein sequence ID" value="AAD31560.1"/>
    <property type="status" value="JOINED"/>
    <property type="molecule type" value="Genomic_DNA"/>
</dbReference>
<dbReference type="EMBL" id="AF097350">
    <property type="protein sequence ID" value="AAD31560.1"/>
    <property type="status" value="JOINED"/>
    <property type="molecule type" value="Genomic_DNA"/>
</dbReference>
<dbReference type="EMBL" id="AF097351">
    <property type="protein sequence ID" value="AAD31560.1"/>
    <property type="status" value="JOINED"/>
    <property type="molecule type" value="Genomic_DNA"/>
</dbReference>
<dbReference type="EMBL" id="AF097352">
    <property type="protein sequence ID" value="AAD31560.1"/>
    <property type="status" value="JOINED"/>
    <property type="molecule type" value="Genomic_DNA"/>
</dbReference>
<dbReference type="EMBL" id="AF097353">
    <property type="protein sequence ID" value="AAD31561.1"/>
    <property type="molecule type" value="Genomic_DNA"/>
</dbReference>
<dbReference type="EMBL" id="AF097341">
    <property type="protein sequence ID" value="AAD31561.1"/>
    <property type="status" value="JOINED"/>
    <property type="molecule type" value="Genomic_DNA"/>
</dbReference>
<dbReference type="EMBL" id="AF097342">
    <property type="protein sequence ID" value="AAD31561.1"/>
    <property type="status" value="JOINED"/>
    <property type="molecule type" value="Genomic_DNA"/>
</dbReference>
<dbReference type="EMBL" id="AF097344">
    <property type="protein sequence ID" value="AAD31561.1"/>
    <property type="status" value="JOINED"/>
    <property type="molecule type" value="Genomic_DNA"/>
</dbReference>
<dbReference type="EMBL" id="AF097345">
    <property type="protein sequence ID" value="AAD31561.1"/>
    <property type="status" value="JOINED"/>
    <property type="molecule type" value="Genomic_DNA"/>
</dbReference>
<dbReference type="EMBL" id="AF097346">
    <property type="protein sequence ID" value="AAD31561.1"/>
    <property type="status" value="JOINED"/>
    <property type="molecule type" value="Genomic_DNA"/>
</dbReference>
<dbReference type="EMBL" id="AF097347">
    <property type="protein sequence ID" value="AAD31561.1"/>
    <property type="status" value="JOINED"/>
    <property type="molecule type" value="Genomic_DNA"/>
</dbReference>
<dbReference type="EMBL" id="AF097348">
    <property type="protein sequence ID" value="AAD31561.1"/>
    <property type="status" value="JOINED"/>
    <property type="molecule type" value="Genomic_DNA"/>
</dbReference>
<dbReference type="EMBL" id="AF097349">
    <property type="protein sequence ID" value="AAD31561.1"/>
    <property type="status" value="JOINED"/>
    <property type="molecule type" value="Genomic_DNA"/>
</dbReference>
<dbReference type="EMBL" id="AF097350">
    <property type="protein sequence ID" value="AAD31561.1"/>
    <property type="status" value="JOINED"/>
    <property type="molecule type" value="Genomic_DNA"/>
</dbReference>
<dbReference type="EMBL" id="AF097351">
    <property type="protein sequence ID" value="AAD31561.1"/>
    <property type="status" value="JOINED"/>
    <property type="molecule type" value="Genomic_DNA"/>
</dbReference>
<dbReference type="EMBL" id="AF097352">
    <property type="protein sequence ID" value="AAD31561.1"/>
    <property type="status" value="JOINED"/>
    <property type="molecule type" value="Genomic_DNA"/>
</dbReference>
<dbReference type="EMBL" id="AF097340">
    <property type="protein sequence ID" value="AAD31562.1"/>
    <property type="molecule type" value="Genomic_DNA"/>
</dbReference>
<dbReference type="EMBL" id="AF097337">
    <property type="protein sequence ID" value="AAD31562.1"/>
    <property type="status" value="JOINED"/>
    <property type="molecule type" value="Genomic_DNA"/>
</dbReference>
<dbReference type="EMBL" id="AF097338">
    <property type="protein sequence ID" value="AAD31562.1"/>
    <property type="status" value="JOINED"/>
    <property type="molecule type" value="Genomic_DNA"/>
</dbReference>
<dbReference type="EMBL" id="AF097339">
    <property type="protein sequence ID" value="AAD31562.1"/>
    <property type="status" value="JOINED"/>
    <property type="molecule type" value="Genomic_DNA"/>
</dbReference>
<dbReference type="EMBL" id="AF097354">
    <property type="protein sequence ID" value="AAD31565.1"/>
    <property type="molecule type" value="Genomic_DNA"/>
</dbReference>
<dbReference type="EMBL" id="AF097341">
    <property type="protein sequence ID" value="AAD31567.1"/>
    <property type="molecule type" value="Genomic_DNA"/>
</dbReference>
<dbReference type="EMBL" id="S82438">
    <property type="protein sequence ID" value="AAD14392.1"/>
    <property type="molecule type" value="Genomic_DNA"/>
</dbReference>
<dbReference type="EMBL" id="Y17131">
    <property type="protein sequence ID" value="CAA76643.1"/>
    <property type="molecule type" value="Genomic_DNA"/>
</dbReference>
<dbReference type="EMBL" id="L49237">
    <property type="protein sequence ID" value="AAC41933.1"/>
    <property type="molecule type" value="Genomic_DNA"/>
</dbReference>
<dbReference type="EMBL" id="L49242">
    <property type="protein sequence ID" value="AAC41934.1"/>
    <property type="molecule type" value="Genomic_DNA"/>
</dbReference>
<dbReference type="EMBL" id="L49238">
    <property type="protein sequence ID" value="AAC41935.1"/>
    <property type="molecule type" value="Genomic_DNA"/>
</dbReference>
<dbReference type="EMBL" id="L49239">
    <property type="protein sequence ID" value="AAC41936.1"/>
    <property type="molecule type" value="Genomic_DNA"/>
</dbReference>
<dbReference type="EMBL" id="L49240">
    <property type="protein sequence ID" value="AAC41937.1"/>
    <property type="molecule type" value="Genomic_DNA"/>
</dbReference>
<dbReference type="EMBL" id="L49241">
    <property type="protein sequence ID" value="AAC41938.1"/>
    <property type="molecule type" value="Genomic_DNA"/>
</dbReference>
<dbReference type="CCDS" id="CCDS31298.1">
    <molecule id="P21802-1"/>
</dbReference>
<dbReference type="CCDS" id="CCDS44485.1">
    <molecule id="P21802-20"/>
</dbReference>
<dbReference type="CCDS" id="CCDS44486.1">
    <molecule id="P21802-23"/>
</dbReference>
<dbReference type="CCDS" id="CCDS44487.1">
    <molecule id="P21802-15"/>
</dbReference>
<dbReference type="CCDS" id="CCDS44488.1">
    <molecule id="P21802-22"/>
</dbReference>
<dbReference type="CCDS" id="CCDS44489.1">
    <molecule id="P21802-17"/>
</dbReference>
<dbReference type="CCDS" id="CCDS53584.1">
    <molecule id="P21802-21"/>
</dbReference>
<dbReference type="CCDS" id="CCDS7620.2">
    <molecule id="P21802-3"/>
</dbReference>
<dbReference type="CCDS" id="CCDS81515.1">
    <molecule id="P21802-5"/>
</dbReference>
<dbReference type="PIR" id="A35969">
    <property type="entry name" value="A35969"/>
</dbReference>
<dbReference type="PIR" id="A42691">
    <property type="entry name" value="TVHUF2"/>
</dbReference>
<dbReference type="PIR" id="A45081">
    <property type="entry name" value="A45081"/>
</dbReference>
<dbReference type="PIR" id="C42691">
    <property type="entry name" value="C42691"/>
</dbReference>
<dbReference type="PIR" id="S16236">
    <property type="entry name" value="S16236"/>
</dbReference>
<dbReference type="RefSeq" id="NP_000132.3">
    <molecule id="P21802-1"/>
    <property type="nucleotide sequence ID" value="NM_000141.5"/>
</dbReference>
<dbReference type="RefSeq" id="NP_001138385.1">
    <molecule id="P21802-17"/>
    <property type="nucleotide sequence ID" value="NM_001144913.1"/>
</dbReference>
<dbReference type="RefSeq" id="NP_001138386.1">
    <molecule id="P21802-23"/>
    <property type="nucleotide sequence ID" value="NM_001144914.1"/>
</dbReference>
<dbReference type="RefSeq" id="NP_001138387.1">
    <molecule id="P21802-21"/>
    <property type="nucleotide sequence ID" value="NM_001144915.2"/>
</dbReference>
<dbReference type="RefSeq" id="NP_001138388.1">
    <property type="nucleotide sequence ID" value="NM_001144916.1"/>
</dbReference>
<dbReference type="RefSeq" id="NP_001138389.1">
    <molecule id="P21802-15"/>
    <property type="nucleotide sequence ID" value="NM_001144917.2"/>
</dbReference>
<dbReference type="RefSeq" id="NP_001138390.1">
    <molecule id="P21802-20"/>
    <property type="nucleotide sequence ID" value="NM_001144918.2"/>
</dbReference>
<dbReference type="RefSeq" id="NP_001138391.1">
    <molecule id="P21802-22"/>
    <property type="nucleotide sequence ID" value="NM_001144919.2"/>
</dbReference>
<dbReference type="RefSeq" id="NP_001307583.1">
    <property type="nucleotide sequence ID" value="NM_001320654.1"/>
</dbReference>
<dbReference type="RefSeq" id="NP_001307587.1">
    <molecule id="P21802-5"/>
    <property type="nucleotide sequence ID" value="NM_001320658.2"/>
</dbReference>
<dbReference type="RefSeq" id="NP_075259.4">
    <molecule id="P21802-3"/>
    <property type="nucleotide sequence ID" value="NM_022970.4"/>
</dbReference>
<dbReference type="RefSeq" id="NP_075418.1">
    <property type="nucleotide sequence ID" value="NM_023029.2"/>
</dbReference>
<dbReference type="PDB" id="1DJS">
    <property type="method" value="X-ray"/>
    <property type="resolution" value="2.40 A"/>
    <property type="chains" value="A=153-362"/>
</dbReference>
<dbReference type="PDB" id="1E0O">
    <property type="method" value="X-ray"/>
    <property type="resolution" value="2.80 A"/>
    <property type="chains" value="B/D=148-366"/>
</dbReference>
<dbReference type="PDB" id="1EV2">
    <property type="method" value="X-ray"/>
    <property type="resolution" value="2.20 A"/>
    <property type="chains" value="E/F/G/H=147-366"/>
</dbReference>
<dbReference type="PDB" id="1GJO">
    <property type="method" value="X-ray"/>
    <property type="resolution" value="2.40 A"/>
    <property type="chains" value="A=456-768"/>
</dbReference>
<dbReference type="PDB" id="1II4">
    <property type="method" value="X-ray"/>
    <property type="resolution" value="2.70 A"/>
    <property type="chains" value="E/F/G/H=147-366"/>
</dbReference>
<dbReference type="PDB" id="1IIL">
    <property type="method" value="X-ray"/>
    <property type="resolution" value="2.30 A"/>
    <property type="chains" value="E/F/G/H=147-366"/>
</dbReference>
<dbReference type="PDB" id="1NUN">
    <property type="method" value="X-ray"/>
    <property type="resolution" value="2.90 A"/>
    <property type="chains" value="B=140-368"/>
</dbReference>
<dbReference type="PDB" id="1OEC">
    <property type="method" value="X-ray"/>
    <property type="resolution" value="2.40 A"/>
    <property type="chains" value="A=456-768"/>
</dbReference>
<dbReference type="PDB" id="1WVZ">
    <property type="method" value="NMR"/>
    <property type="chains" value="A=147-249"/>
</dbReference>
<dbReference type="PDB" id="2FDB">
    <property type="method" value="X-ray"/>
    <property type="resolution" value="2.28 A"/>
    <property type="chains" value="P/R=149-368"/>
</dbReference>
<dbReference type="PDB" id="2PSQ">
    <property type="method" value="X-ray"/>
    <property type="resolution" value="2.40 A"/>
    <property type="chains" value="A/B=413-768"/>
</dbReference>
<dbReference type="PDB" id="2PVF">
    <property type="method" value="X-ray"/>
    <property type="resolution" value="1.80 A"/>
    <property type="chains" value="A=458-778, B=764-778"/>
</dbReference>
<dbReference type="PDB" id="2PVY">
    <property type="method" value="X-ray"/>
    <property type="resolution" value="2.20 A"/>
    <property type="chains" value="A/B/C/D=458-768"/>
</dbReference>
<dbReference type="PDB" id="2PWL">
    <property type="method" value="X-ray"/>
    <property type="resolution" value="2.40 A"/>
    <property type="chains" value="A/B=458-768"/>
</dbReference>
<dbReference type="PDB" id="2PY3">
    <property type="method" value="X-ray"/>
    <property type="resolution" value="2.30 A"/>
    <property type="chains" value="A/B=458-768"/>
</dbReference>
<dbReference type="PDB" id="2PZ5">
    <property type="method" value="X-ray"/>
    <property type="resolution" value="2.40 A"/>
    <property type="chains" value="A/B=458-768"/>
</dbReference>
<dbReference type="PDB" id="2PZP">
    <property type="method" value="X-ray"/>
    <property type="resolution" value="2.40 A"/>
    <property type="chains" value="A/B=458-768"/>
</dbReference>
<dbReference type="PDB" id="2PZR">
    <property type="method" value="X-ray"/>
    <property type="resolution" value="3.00 A"/>
    <property type="chains" value="A/B=458-768"/>
</dbReference>
<dbReference type="PDB" id="2Q0B">
    <property type="method" value="X-ray"/>
    <property type="resolution" value="2.90 A"/>
    <property type="chains" value="A/B=458-768"/>
</dbReference>
<dbReference type="PDB" id="3B2T">
    <property type="method" value="X-ray"/>
    <property type="resolution" value="1.80 A"/>
    <property type="chains" value="A/B=458-766"/>
</dbReference>
<dbReference type="PDB" id="3CAF">
    <property type="method" value="X-ray"/>
    <property type="resolution" value="1.96 A"/>
    <property type="chains" value="A=150-249"/>
</dbReference>
<dbReference type="PDB" id="3CLY">
    <property type="method" value="X-ray"/>
    <property type="resolution" value="2.00 A"/>
    <property type="chains" value="A=458-778"/>
</dbReference>
<dbReference type="PDB" id="3CU1">
    <property type="method" value="X-ray"/>
    <property type="resolution" value="2.60 A"/>
    <property type="chains" value="A/C=150-249"/>
</dbReference>
<dbReference type="PDB" id="3DAR">
    <property type="method" value="X-ray"/>
    <property type="resolution" value="2.20 A"/>
    <property type="chains" value="A/B=146-249"/>
</dbReference>
<dbReference type="PDB" id="3EUU">
    <property type="method" value="X-ray"/>
    <property type="resolution" value="2.34 A"/>
    <property type="chains" value="A/B=150-249"/>
</dbReference>
<dbReference type="PDB" id="3OJ2">
    <property type="method" value="X-ray"/>
    <property type="resolution" value="2.20 A"/>
    <property type="chains" value="C/D=140-313"/>
</dbReference>
<dbReference type="PDB" id="3OJM">
    <property type="method" value="X-ray"/>
    <property type="resolution" value="2.10 A"/>
    <property type="chains" value="B=140-313"/>
</dbReference>
<dbReference type="PDB" id="3RI1">
    <property type="method" value="X-ray"/>
    <property type="resolution" value="2.10 A"/>
    <property type="chains" value="A/B=458-768"/>
</dbReference>
<dbReference type="PDB" id="4J23">
    <property type="method" value="X-ray"/>
    <property type="resolution" value="3.88 A"/>
    <property type="chains" value="A=147-366"/>
</dbReference>
<dbReference type="PDB" id="4J95">
    <property type="method" value="X-ray"/>
    <property type="resolution" value="2.38 A"/>
    <property type="chains" value="A/B/C/D=458-768"/>
</dbReference>
<dbReference type="PDB" id="4J96">
    <property type="method" value="X-ray"/>
    <property type="resolution" value="2.30 A"/>
    <property type="chains" value="A/B=458-768"/>
</dbReference>
<dbReference type="PDB" id="4J97">
    <property type="method" value="X-ray"/>
    <property type="resolution" value="2.55 A"/>
    <property type="chains" value="A/B/C/D=458-768"/>
</dbReference>
<dbReference type="PDB" id="4J98">
    <property type="method" value="X-ray"/>
    <property type="resolution" value="2.31 A"/>
    <property type="chains" value="A/B=458-768"/>
</dbReference>
<dbReference type="PDB" id="4J99">
    <property type="method" value="X-ray"/>
    <property type="resolution" value="1.85 A"/>
    <property type="chains" value="A/B/C/D=458-768"/>
</dbReference>
<dbReference type="PDB" id="4WV1">
    <property type="method" value="X-ray"/>
    <property type="resolution" value="2.36 A"/>
    <property type="chains" value="C/F=153-251"/>
</dbReference>
<dbReference type="PDB" id="5EG3">
    <property type="method" value="X-ray"/>
    <property type="resolution" value="2.61 A"/>
    <property type="chains" value="A=458-778"/>
</dbReference>
<dbReference type="PDB" id="5UGL">
    <property type="method" value="X-ray"/>
    <property type="resolution" value="1.86 A"/>
    <property type="chains" value="A/B=458-768"/>
</dbReference>
<dbReference type="PDB" id="5UGX">
    <property type="method" value="X-ray"/>
    <property type="resolution" value="2.35 A"/>
    <property type="chains" value="A/B=458-768"/>
</dbReference>
<dbReference type="PDB" id="5UHN">
    <property type="method" value="X-ray"/>
    <property type="resolution" value="2.91 A"/>
    <property type="chains" value="A/B=458-768"/>
</dbReference>
<dbReference type="PDB" id="5UI0">
    <property type="method" value="X-ray"/>
    <property type="resolution" value="2.05 A"/>
    <property type="chains" value="A/B=458-768"/>
</dbReference>
<dbReference type="PDB" id="6AGX">
    <property type="method" value="X-ray"/>
    <property type="resolution" value="2.95 A"/>
    <property type="chains" value="A/B/C/D=467-764"/>
</dbReference>
<dbReference type="PDB" id="6LVK">
    <property type="method" value="X-ray"/>
    <property type="resolution" value="2.29 A"/>
    <property type="chains" value="A/B=459-768"/>
</dbReference>
<dbReference type="PDB" id="6LVL">
    <property type="method" value="X-ray"/>
    <property type="resolution" value="2.98 A"/>
    <property type="chains" value="A/B=459-768"/>
</dbReference>
<dbReference type="PDB" id="6V6Q">
    <property type="method" value="X-ray"/>
    <property type="resolution" value="2.46 A"/>
    <property type="chains" value="A/B/C/D=413-821"/>
</dbReference>
<dbReference type="PDB" id="7KIA">
    <property type="method" value="X-ray"/>
    <property type="resolution" value="2.22 A"/>
    <property type="chains" value="A/B=461-768"/>
</dbReference>
<dbReference type="PDB" id="7KIE">
    <property type="method" value="X-ray"/>
    <property type="resolution" value="2.47 A"/>
    <property type="chains" value="A/B=461-768"/>
</dbReference>
<dbReference type="PDB" id="7OZY">
    <property type="method" value="X-ray"/>
    <property type="resolution" value="2.28 A"/>
    <property type="chains" value="AAA/BBB=465-763"/>
</dbReference>
<dbReference type="PDB" id="8E1X">
    <property type="method" value="X-ray"/>
    <property type="resolution" value="2.68 A"/>
    <property type="chains" value="A/B=459-768"/>
</dbReference>
<dbReference type="PDB" id="8H75">
    <property type="method" value="X-ray"/>
    <property type="resolution" value="3.75 A"/>
    <property type="chains" value="A/B/C/D=459-768"/>
</dbReference>
<dbReference type="PDB" id="8STG">
    <property type="method" value="X-ray"/>
    <property type="resolution" value="3.79 A"/>
    <property type="chains" value="A/B=458-769"/>
</dbReference>
<dbReference type="PDB" id="8SWE">
    <property type="method" value="X-ray"/>
    <property type="resolution" value="2.24 A"/>
    <property type="chains" value="A/B=458-768"/>
</dbReference>
<dbReference type="PDB" id="8U1F">
    <property type="method" value="X-ray"/>
    <property type="resolution" value="3.33 A"/>
    <property type="chains" value="A/B=458-768"/>
</dbReference>
<dbReference type="PDB" id="8W2X">
    <property type="method" value="X-ray"/>
    <property type="resolution" value="2.98 A"/>
    <property type="chains" value="A/B=458-768"/>
</dbReference>
<dbReference type="PDB" id="8W38">
    <property type="method" value="X-ray"/>
    <property type="resolution" value="2.60 A"/>
    <property type="chains" value="A/B/C/D=458-768"/>
</dbReference>
<dbReference type="PDB" id="8W3B">
    <property type="method" value="X-ray"/>
    <property type="resolution" value="2.23 A"/>
    <property type="chains" value="A/B/C/D=458-768"/>
</dbReference>
<dbReference type="PDB" id="8W3D">
    <property type="method" value="X-ray"/>
    <property type="resolution" value="2.04 A"/>
    <property type="chains" value="A/B/C/D=458-768"/>
</dbReference>
<dbReference type="PDBsum" id="1DJS"/>
<dbReference type="PDBsum" id="1E0O"/>
<dbReference type="PDBsum" id="1EV2"/>
<dbReference type="PDBsum" id="1GJO"/>
<dbReference type="PDBsum" id="1II4"/>
<dbReference type="PDBsum" id="1IIL"/>
<dbReference type="PDBsum" id="1NUN"/>
<dbReference type="PDBsum" id="1OEC"/>
<dbReference type="PDBsum" id="1WVZ"/>
<dbReference type="PDBsum" id="2FDB"/>
<dbReference type="PDBsum" id="2PSQ"/>
<dbReference type="PDBsum" id="2PVF"/>
<dbReference type="PDBsum" id="2PVY"/>
<dbReference type="PDBsum" id="2PWL"/>
<dbReference type="PDBsum" id="2PY3"/>
<dbReference type="PDBsum" id="2PZ5"/>
<dbReference type="PDBsum" id="2PZP"/>
<dbReference type="PDBsum" id="2PZR"/>
<dbReference type="PDBsum" id="2Q0B"/>
<dbReference type="PDBsum" id="3B2T"/>
<dbReference type="PDBsum" id="3CAF"/>
<dbReference type="PDBsum" id="3CLY"/>
<dbReference type="PDBsum" id="3CU1"/>
<dbReference type="PDBsum" id="3DAR"/>
<dbReference type="PDBsum" id="3EUU"/>
<dbReference type="PDBsum" id="3OJ2"/>
<dbReference type="PDBsum" id="3OJM"/>
<dbReference type="PDBsum" id="3RI1"/>
<dbReference type="PDBsum" id="4J23"/>
<dbReference type="PDBsum" id="4J95"/>
<dbReference type="PDBsum" id="4J96"/>
<dbReference type="PDBsum" id="4J97"/>
<dbReference type="PDBsum" id="4J98"/>
<dbReference type="PDBsum" id="4J99"/>
<dbReference type="PDBsum" id="4WV1"/>
<dbReference type="PDBsum" id="5EG3"/>
<dbReference type="PDBsum" id="5UGL"/>
<dbReference type="PDBsum" id="5UGX"/>
<dbReference type="PDBsum" id="5UHN"/>
<dbReference type="PDBsum" id="5UI0"/>
<dbReference type="PDBsum" id="6AGX"/>
<dbReference type="PDBsum" id="6LVK"/>
<dbReference type="PDBsum" id="6LVL"/>
<dbReference type="PDBsum" id="6V6Q"/>
<dbReference type="PDBsum" id="7KIA"/>
<dbReference type="PDBsum" id="7KIE"/>
<dbReference type="PDBsum" id="7OZY"/>
<dbReference type="PDBsum" id="8E1X"/>
<dbReference type="PDBsum" id="8H75"/>
<dbReference type="PDBsum" id="8STG"/>
<dbReference type="PDBsum" id="8SWE"/>
<dbReference type="PDBsum" id="8U1F"/>
<dbReference type="PDBsum" id="8W2X"/>
<dbReference type="PDBsum" id="8W38"/>
<dbReference type="PDBsum" id="8W3B"/>
<dbReference type="PDBsum" id="8W3D"/>
<dbReference type="BMRB" id="P21802"/>
<dbReference type="SMR" id="P21802"/>
<dbReference type="BioGRID" id="108554">
    <property type="interactions" value="231"/>
</dbReference>
<dbReference type="CORUM" id="P21802"/>
<dbReference type="DIP" id="DIP-3788N"/>
<dbReference type="FunCoup" id="P21802">
    <property type="interactions" value="1763"/>
</dbReference>
<dbReference type="IntAct" id="P21802">
    <property type="interactions" value="198"/>
</dbReference>
<dbReference type="MINT" id="P21802"/>
<dbReference type="STRING" id="9606.ENSP00000410294"/>
<dbReference type="BindingDB" id="P21802"/>
<dbReference type="ChEMBL" id="CHEMBL4142"/>
<dbReference type="DrugBank" id="DB02058">
    <property type="generic name" value="3-[4-(1-formylpiperazin-4-yl)-benzylidenyl]-2-indolinone"/>
</dbReference>
<dbReference type="DrugBank" id="DB02491">
    <property type="generic name" value="4-[4-(1-Amino-1-Methylethyl)Phenyl]-5-Chloro-N-[4-(2-Morpholin-4-Ylethyl)Phenyl]Pyrimidin-2-Amine"/>
</dbReference>
<dbReference type="DrugBank" id="DB12558">
    <property type="generic name" value="AEE-788"/>
</dbReference>
<dbReference type="DrugBank" id="DB12903">
    <property type="generic name" value="DEBIO-1347"/>
</dbReference>
<dbReference type="DrugBank" id="DB12147">
    <property type="generic name" value="Erdafitinib"/>
</dbReference>
<dbReference type="DrugBank" id="DB10770">
    <property type="generic name" value="Foreskin fibroblast (neonatal)"/>
</dbReference>
<dbReference type="DrugBank" id="DB10772">
    <property type="generic name" value="Foreskin keratinocyte (neonatal)"/>
</dbReference>
<dbReference type="DrugBank" id="DB12010">
    <property type="generic name" value="Fostamatinib"/>
</dbReference>
<dbReference type="DrugBank" id="DB15149">
    <property type="generic name" value="Futibatinib"/>
</dbReference>
<dbReference type="DrugBank" id="DB01109">
    <property type="generic name" value="Heparin"/>
</dbReference>
<dbReference type="DrugBank" id="DB11886">
    <property type="generic name" value="Infigratinib"/>
</dbReference>
<dbReference type="DrugBank" id="DB17587">
    <property type="generic name" value="KIN-3248"/>
</dbReference>
<dbReference type="DrugBank" id="DB09078">
    <property type="generic name" value="Lenvatinib"/>
</dbReference>
<dbReference type="DrugBank" id="DB11845">
    <property type="generic name" value="Lucitanib"/>
</dbReference>
<dbReference type="DrugBank" id="DB13022">
    <property type="generic name" value="LY-2874455"/>
</dbReference>
<dbReference type="DrugBank" id="DB09079">
    <property type="generic name" value="Nintedanib"/>
</dbReference>
<dbReference type="DrugBank" id="DB00039">
    <property type="generic name" value="Palifermin"/>
</dbReference>
<dbReference type="DrugBank" id="DB15102">
    <property type="generic name" value="Pemigatinib"/>
</dbReference>
<dbReference type="DrugBank" id="DB08901">
    <property type="generic name" value="Ponatinib"/>
</dbReference>
<dbReference type="DrugBank" id="DB15822">
    <property type="generic name" value="Pralsetinib"/>
</dbReference>
<dbReference type="DrugBank" id="DB08896">
    <property type="generic name" value="Regorafenib"/>
</dbReference>
<dbReference type="DrugBank" id="DB15685">
    <property type="generic name" value="Selpercatinib"/>
</dbReference>
<dbReference type="DrugBank" id="DB01901">
    <property type="generic name" value="Sucrosofate"/>
</dbReference>
<dbReference type="DrugCentral" id="P21802"/>
<dbReference type="GuidetoPHARMACOLOGY" id="1809"/>
<dbReference type="GlyConnect" id="1997">
    <property type="glycosylation" value="1 N-Linked glycan (1 site)"/>
</dbReference>
<dbReference type="GlyCosmos" id="P21802">
    <property type="glycosylation" value="9 sites, 2 glycans"/>
</dbReference>
<dbReference type="GlyGen" id="P21802">
    <property type="glycosylation" value="9 sites, 4 N-linked glycans (3 sites), 1 O-linked glycan (1 site)"/>
</dbReference>
<dbReference type="iPTMnet" id="P21802"/>
<dbReference type="PhosphoSitePlus" id="P21802"/>
<dbReference type="BioMuta" id="FGFR2"/>
<dbReference type="DMDM" id="120049"/>
<dbReference type="CPTAC" id="CPTAC-3175"/>
<dbReference type="jPOST" id="P21802"/>
<dbReference type="MassIVE" id="P21802"/>
<dbReference type="PaxDb" id="9606-ENSP00000410294"/>
<dbReference type="PeptideAtlas" id="P21802"/>
<dbReference type="ProteomicsDB" id="53905">
    <molecule id="P21802-1"/>
</dbReference>
<dbReference type="ProteomicsDB" id="53910">
    <molecule id="P21802-14"/>
</dbReference>
<dbReference type="ProteomicsDB" id="53911">
    <molecule id="P21802-15"/>
</dbReference>
<dbReference type="ProteomicsDB" id="53912">
    <molecule id="P21802-16"/>
</dbReference>
<dbReference type="ProteomicsDB" id="53913">
    <molecule id="P21802-17"/>
</dbReference>
<dbReference type="ProteomicsDB" id="53914">
    <molecule id="P21802-18"/>
</dbReference>
<dbReference type="ProteomicsDB" id="53915">
    <molecule id="P21802-19"/>
</dbReference>
<dbReference type="ProteomicsDB" id="53916">
    <molecule id="P21802-2"/>
</dbReference>
<dbReference type="ProteomicsDB" id="53917">
    <molecule id="P21802-20"/>
</dbReference>
<dbReference type="ProteomicsDB" id="53918">
    <molecule id="P21802-21"/>
</dbReference>
<dbReference type="ProteomicsDB" id="53919">
    <molecule id="P21802-22"/>
</dbReference>
<dbReference type="ProteomicsDB" id="53920">
    <molecule id="P21802-23"/>
</dbReference>
<dbReference type="ProteomicsDB" id="53921">
    <molecule id="P21802-3"/>
</dbReference>
<dbReference type="ProteomicsDB" id="53922">
    <molecule id="P21802-4"/>
</dbReference>
<dbReference type="ProteomicsDB" id="53923">
    <molecule id="P21802-5"/>
</dbReference>
<dbReference type="ProteomicsDB" id="53924">
    <molecule id="P21802-6"/>
</dbReference>
<dbReference type="ProteomicsDB" id="53926">
    <molecule id="P21802-8"/>
</dbReference>
<dbReference type="TopDownProteomics" id="P21802-8">
    <molecule id="P21802-8"/>
</dbReference>
<dbReference type="ABCD" id="P21802">
    <property type="antibodies" value="5 sequenced antibodies"/>
</dbReference>
<dbReference type="Antibodypedia" id="4393">
    <property type="antibodies" value="1417 antibodies from 47 providers"/>
</dbReference>
<dbReference type="DNASU" id="2263"/>
<dbReference type="Ensembl" id="ENST00000346997.6">
    <molecule id="P21802-5"/>
    <property type="protein sequence ID" value="ENSP00000263451.5"/>
    <property type="gene ID" value="ENSG00000066468.24"/>
</dbReference>
<dbReference type="Ensembl" id="ENST00000351936.11">
    <molecule id="P21802-5"/>
    <property type="protein sequence ID" value="ENSP00000309878.10"/>
    <property type="gene ID" value="ENSG00000066468.24"/>
</dbReference>
<dbReference type="Ensembl" id="ENST00000356226.8">
    <molecule id="P21802-20"/>
    <property type="protein sequence ID" value="ENSP00000348559.4"/>
    <property type="gene ID" value="ENSG00000066468.24"/>
</dbReference>
<dbReference type="Ensembl" id="ENST00000357555.9">
    <molecule id="P21802-21"/>
    <property type="protein sequence ID" value="ENSP00000350166.5"/>
    <property type="gene ID" value="ENSG00000066468.24"/>
</dbReference>
<dbReference type="Ensembl" id="ENST00000358487.10">
    <molecule id="P21802-1"/>
    <property type="protein sequence ID" value="ENSP00000351276.6"/>
    <property type="gene ID" value="ENSG00000066468.24"/>
</dbReference>
<dbReference type="Ensembl" id="ENST00000359354.6">
    <molecule id="P21802-14"/>
    <property type="protein sequence ID" value="ENSP00000352309.2"/>
    <property type="gene ID" value="ENSG00000066468.24"/>
</dbReference>
<dbReference type="Ensembl" id="ENST00000360144.7">
    <molecule id="P21802-22"/>
    <property type="protein sequence ID" value="ENSP00000353262.3"/>
    <property type="gene ID" value="ENSG00000066468.24"/>
</dbReference>
<dbReference type="Ensembl" id="ENST00000369056.5">
    <molecule id="P21802-17"/>
    <property type="protein sequence ID" value="ENSP00000358052.1"/>
    <property type="gene ID" value="ENSG00000066468.24"/>
</dbReference>
<dbReference type="Ensembl" id="ENST00000369060.8">
    <molecule id="P21802-15"/>
    <property type="protein sequence ID" value="ENSP00000358056.4"/>
    <property type="gene ID" value="ENSG00000066468.24"/>
</dbReference>
<dbReference type="Ensembl" id="ENST00000369061.8">
    <molecule id="P21802-23"/>
    <property type="protein sequence ID" value="ENSP00000358057.4"/>
    <property type="gene ID" value="ENSG00000066468.24"/>
</dbReference>
<dbReference type="Ensembl" id="ENST00000457416.7">
    <molecule id="P21802-3"/>
    <property type="protein sequence ID" value="ENSP00000410294.2"/>
    <property type="gene ID" value="ENSG00000066468.24"/>
</dbReference>
<dbReference type="Ensembl" id="ENST00000682550.1">
    <molecule id="P21802-20"/>
    <property type="protein sequence ID" value="ENSP00000507633.1"/>
    <property type="gene ID" value="ENSG00000066468.24"/>
</dbReference>
<dbReference type="Ensembl" id="ENST00000683211.1">
    <molecule id="P21802-5"/>
    <property type="protein sequence ID" value="ENSP00000508257.1"/>
    <property type="gene ID" value="ENSG00000066468.24"/>
</dbReference>
<dbReference type="GeneID" id="2263"/>
<dbReference type="KEGG" id="hsa:2263"/>
<dbReference type="MANE-Select" id="ENST00000358487.10">
    <property type="protein sequence ID" value="ENSP00000351276.6"/>
    <property type="RefSeq nucleotide sequence ID" value="NM_000141.5"/>
    <property type="RefSeq protein sequence ID" value="NP_000132.3"/>
</dbReference>
<dbReference type="UCSC" id="uc010qtl.3">
    <molecule id="P21802-1"/>
    <property type="organism name" value="human"/>
</dbReference>
<dbReference type="AGR" id="HGNC:3689"/>
<dbReference type="CTD" id="2263"/>
<dbReference type="DisGeNET" id="2263"/>
<dbReference type="GeneCards" id="FGFR2"/>
<dbReference type="GeneReviews" id="FGFR2"/>
<dbReference type="HGNC" id="HGNC:3689">
    <property type="gene designation" value="FGFR2"/>
</dbReference>
<dbReference type="HPA" id="ENSG00000066468">
    <property type="expression patterns" value="Tissue enriched (brain)"/>
</dbReference>
<dbReference type="MalaCards" id="FGFR2"/>
<dbReference type="MIM" id="101200">
    <property type="type" value="phenotype"/>
</dbReference>
<dbReference type="MIM" id="101400">
    <property type="type" value="phenotype"/>
</dbReference>
<dbReference type="MIM" id="101600">
    <property type="type" value="phenotype"/>
</dbReference>
<dbReference type="MIM" id="123150">
    <property type="type" value="phenotype"/>
</dbReference>
<dbReference type="MIM" id="123500">
    <property type="type" value="phenotype"/>
</dbReference>
<dbReference type="MIM" id="123790">
    <property type="type" value="phenotype"/>
</dbReference>
<dbReference type="MIM" id="149730">
    <property type="type" value="phenotype"/>
</dbReference>
<dbReference type="MIM" id="176943">
    <property type="type" value="gene"/>
</dbReference>
<dbReference type="MIM" id="207410">
    <property type="type" value="phenotype"/>
</dbReference>
<dbReference type="MIM" id="609579">
    <property type="type" value="phenotype"/>
</dbReference>
<dbReference type="MIM" id="614592">
    <property type="type" value="phenotype"/>
</dbReference>
<dbReference type="neXtProt" id="NX_P21802"/>
<dbReference type="OpenTargets" id="ENSG00000066468"/>
<dbReference type="Orphanet" id="596008">
    <property type="disease" value="Antley-Bixler syndrome without genital anomaly or disorder of steroidogenesis"/>
</dbReference>
<dbReference type="Orphanet" id="87">
    <property type="disease" value="Apert syndrome"/>
</dbReference>
<dbReference type="Orphanet" id="207">
    <property type="disease" value="Crouzon syndrome"/>
</dbReference>
<dbReference type="Orphanet" id="1555">
    <property type="disease" value="Cutis gyrata-acanthosis nigricans-craniosynostosis syndrome"/>
</dbReference>
<dbReference type="Orphanet" id="168624">
    <property type="disease" value="Familial scaphocephaly syndrome, McGillivray type"/>
</dbReference>
<dbReference type="Orphanet" id="313855">
    <property type="disease" value="FGFR2-related bent bone dysplasia"/>
</dbReference>
<dbReference type="Orphanet" id="1540">
    <property type="disease" value="Jackson-Weiss syndrome"/>
</dbReference>
<dbReference type="Orphanet" id="2363">
    <property type="disease" value="Lacrimoauriculodentodigital syndrome"/>
</dbReference>
<dbReference type="Orphanet" id="93258">
    <property type="disease" value="Pfeiffer syndrome type 1"/>
</dbReference>
<dbReference type="Orphanet" id="93259">
    <property type="disease" value="Pfeiffer syndrome type 2"/>
</dbReference>
<dbReference type="Orphanet" id="93260">
    <property type="disease" value="Pfeiffer syndrome type 3"/>
</dbReference>
<dbReference type="Orphanet" id="794">
    <property type="disease" value="Saethre-Chotzen syndrome"/>
</dbReference>
<dbReference type="PharmGKB" id="PA28128"/>
<dbReference type="VEuPathDB" id="HostDB:ENSG00000066468"/>
<dbReference type="eggNOG" id="KOG0200">
    <property type="taxonomic scope" value="Eukaryota"/>
</dbReference>
<dbReference type="GeneTree" id="ENSGT00940000155447"/>
<dbReference type="HOGENOM" id="CLU_000288_74_2_1"/>
<dbReference type="InParanoid" id="P21802"/>
<dbReference type="OMA" id="PANCTSE"/>
<dbReference type="OrthoDB" id="5984265at2759"/>
<dbReference type="PAN-GO" id="P21802">
    <property type="GO annotations" value="7 GO annotations based on evolutionary models"/>
</dbReference>
<dbReference type="PhylomeDB" id="P21802"/>
<dbReference type="TreeFam" id="TF316307"/>
<dbReference type="BRENDA" id="2.7.10.1">
    <property type="organism ID" value="2681"/>
</dbReference>
<dbReference type="PathwayCommons" id="P21802"/>
<dbReference type="Reactome" id="R-HSA-109704">
    <property type="pathway name" value="PI3K Cascade"/>
</dbReference>
<dbReference type="Reactome" id="R-HSA-1257604">
    <property type="pathway name" value="PIP3 activates AKT signaling"/>
</dbReference>
<dbReference type="Reactome" id="R-HSA-190375">
    <property type="pathway name" value="FGFR2c ligand binding and activation"/>
</dbReference>
<dbReference type="Reactome" id="R-HSA-190377">
    <property type="pathway name" value="FGFR2b ligand binding and activation"/>
</dbReference>
<dbReference type="Reactome" id="R-HSA-2023837">
    <property type="pathway name" value="Signaling by FGFR2 amplification mutants"/>
</dbReference>
<dbReference type="Reactome" id="R-HSA-2033519">
    <property type="pathway name" value="Activated point mutants of FGFR2"/>
</dbReference>
<dbReference type="Reactome" id="R-HSA-2219530">
    <property type="pathway name" value="Constitutive Signaling by Aberrant PI3K in Cancer"/>
</dbReference>
<dbReference type="Reactome" id="R-HSA-5654221">
    <property type="pathway name" value="Phospholipase C-mediated cascade, FGFR2"/>
</dbReference>
<dbReference type="Reactome" id="R-HSA-5654695">
    <property type="pathway name" value="PI-3K cascade:FGFR2"/>
</dbReference>
<dbReference type="Reactome" id="R-HSA-5654699">
    <property type="pathway name" value="SHC-mediated cascade:FGFR2"/>
</dbReference>
<dbReference type="Reactome" id="R-HSA-5654700">
    <property type="pathway name" value="FRS-mediated FGFR2 signaling"/>
</dbReference>
<dbReference type="Reactome" id="R-HSA-5654727">
    <property type="pathway name" value="Negative regulation of FGFR2 signaling"/>
</dbReference>
<dbReference type="Reactome" id="R-HSA-5655253">
    <property type="pathway name" value="Signaling by FGFR2 in disease"/>
</dbReference>
<dbReference type="Reactome" id="R-HSA-5673001">
    <property type="pathway name" value="RAF/MAP kinase cascade"/>
</dbReference>
<dbReference type="Reactome" id="R-HSA-6811558">
    <property type="pathway name" value="PI5P, PP2A and IER3 Regulate PI3K/AKT Signaling"/>
</dbReference>
<dbReference type="Reactome" id="R-HSA-8851708">
    <property type="pathway name" value="Signaling by FGFR2 IIIa TM"/>
</dbReference>
<dbReference type="Reactome" id="R-HSA-8853333">
    <property type="pathway name" value="Signaling by FGFR2 fusions"/>
</dbReference>
<dbReference type="SignaLink" id="P21802"/>
<dbReference type="SIGNOR" id="P21802"/>
<dbReference type="BioGRID-ORCS" id="2263">
    <property type="hits" value="24 hits in 1187 CRISPR screens"/>
</dbReference>
<dbReference type="CD-CODE" id="91857CE7">
    <property type="entry name" value="Nucleolus"/>
</dbReference>
<dbReference type="ChiTaRS" id="FGFR2">
    <property type="organism name" value="human"/>
</dbReference>
<dbReference type="EvolutionaryTrace" id="P21802"/>
<dbReference type="GeneWiki" id="Fibroblast_growth_factor_receptor_2"/>
<dbReference type="GenomeRNAi" id="2263"/>
<dbReference type="Pharos" id="P21802">
    <property type="development level" value="Tclin"/>
</dbReference>
<dbReference type="PRO" id="PR:P21802"/>
<dbReference type="Proteomes" id="UP000005640">
    <property type="component" value="Chromosome 10"/>
</dbReference>
<dbReference type="RNAct" id="P21802">
    <property type="molecule type" value="protein"/>
</dbReference>
<dbReference type="Bgee" id="ENSG00000066468">
    <property type="expression patterns" value="Expressed in C1 segment of cervical spinal cord and 202 other cell types or tissues"/>
</dbReference>
<dbReference type="ExpressionAtlas" id="P21802">
    <property type="expression patterns" value="baseline and differential"/>
</dbReference>
<dbReference type="GO" id="GO:0005938">
    <property type="term" value="C:cell cortex"/>
    <property type="evidence" value="ECO:0000314"/>
    <property type="project" value="UniProtKB"/>
</dbReference>
<dbReference type="GO" id="GO:0009986">
    <property type="term" value="C:cell surface"/>
    <property type="evidence" value="ECO:0000314"/>
    <property type="project" value="UniProtKB"/>
</dbReference>
<dbReference type="GO" id="GO:0005737">
    <property type="term" value="C:cytoplasm"/>
    <property type="evidence" value="ECO:0000314"/>
    <property type="project" value="UniProtKB"/>
</dbReference>
<dbReference type="GO" id="GO:0031410">
    <property type="term" value="C:cytoplasmic vesicle"/>
    <property type="evidence" value="ECO:0007669"/>
    <property type="project" value="UniProtKB-KW"/>
</dbReference>
<dbReference type="GO" id="GO:0060076">
    <property type="term" value="C:excitatory synapse"/>
    <property type="evidence" value="ECO:0000250"/>
    <property type="project" value="UniProtKB"/>
</dbReference>
<dbReference type="GO" id="GO:0005576">
    <property type="term" value="C:extracellular region"/>
    <property type="evidence" value="ECO:0007669"/>
    <property type="project" value="UniProtKB-SubCell"/>
</dbReference>
<dbReference type="GO" id="GO:0005794">
    <property type="term" value="C:Golgi apparatus"/>
    <property type="evidence" value="ECO:0007669"/>
    <property type="project" value="UniProtKB-SubCell"/>
</dbReference>
<dbReference type="GO" id="GO:0016020">
    <property type="term" value="C:membrane"/>
    <property type="evidence" value="ECO:0000303"/>
    <property type="project" value="UniProtKB"/>
</dbReference>
<dbReference type="GO" id="GO:0005634">
    <property type="term" value="C:nucleus"/>
    <property type="evidence" value="ECO:0000314"/>
    <property type="project" value="UniProtKB"/>
</dbReference>
<dbReference type="GO" id="GO:0005886">
    <property type="term" value="C:plasma membrane"/>
    <property type="evidence" value="ECO:0000314"/>
    <property type="project" value="UniProtKB"/>
</dbReference>
<dbReference type="GO" id="GO:0043235">
    <property type="term" value="C:receptor complex"/>
    <property type="evidence" value="ECO:0000318"/>
    <property type="project" value="GO_Central"/>
</dbReference>
<dbReference type="GO" id="GO:0005524">
    <property type="term" value="F:ATP binding"/>
    <property type="evidence" value="ECO:0007669"/>
    <property type="project" value="UniProtKB-KW"/>
</dbReference>
<dbReference type="GO" id="GO:0017134">
    <property type="term" value="F:fibroblast growth factor binding"/>
    <property type="evidence" value="ECO:0000314"/>
    <property type="project" value="UniProtKB"/>
</dbReference>
<dbReference type="GO" id="GO:0005007">
    <property type="term" value="F:fibroblast growth factor receptor activity"/>
    <property type="evidence" value="ECO:0000314"/>
    <property type="project" value="UniProtKB"/>
</dbReference>
<dbReference type="GO" id="GO:0008201">
    <property type="term" value="F:heparin binding"/>
    <property type="evidence" value="ECO:0007669"/>
    <property type="project" value="UniProtKB-KW"/>
</dbReference>
<dbReference type="GO" id="GO:0042802">
    <property type="term" value="F:identical protein binding"/>
    <property type="evidence" value="ECO:0000353"/>
    <property type="project" value="IntAct"/>
</dbReference>
<dbReference type="GO" id="GO:0042803">
    <property type="term" value="F:protein homodimerization activity"/>
    <property type="evidence" value="ECO:0000353"/>
    <property type="project" value="UniProtKB"/>
</dbReference>
<dbReference type="GO" id="GO:0004713">
    <property type="term" value="F:protein tyrosine kinase activity"/>
    <property type="evidence" value="ECO:0000303"/>
    <property type="project" value="UniProtKB"/>
</dbReference>
<dbReference type="GO" id="GO:0001525">
    <property type="term" value="P:angiogenesis"/>
    <property type="evidence" value="ECO:0000250"/>
    <property type="project" value="UniProtKB"/>
</dbReference>
<dbReference type="GO" id="GO:0009887">
    <property type="term" value="P:animal organ morphogenesis"/>
    <property type="evidence" value="ECO:0000250"/>
    <property type="project" value="UniProtKB"/>
</dbReference>
<dbReference type="GO" id="GO:0006915">
    <property type="term" value="P:apoptotic process"/>
    <property type="evidence" value="ECO:0007669"/>
    <property type="project" value="UniProtKB-KW"/>
</dbReference>
<dbReference type="GO" id="GO:0007409">
    <property type="term" value="P:axonogenesis"/>
    <property type="evidence" value="ECO:0000250"/>
    <property type="project" value="UniProtKB"/>
</dbReference>
<dbReference type="GO" id="GO:0060348">
    <property type="term" value="P:bone development"/>
    <property type="evidence" value="ECO:0000250"/>
    <property type="project" value="UniProtKB"/>
</dbReference>
<dbReference type="GO" id="GO:0030282">
    <property type="term" value="P:bone mineralization"/>
    <property type="evidence" value="ECO:0000250"/>
    <property type="project" value="UniProtKB"/>
</dbReference>
<dbReference type="GO" id="GO:0060349">
    <property type="term" value="P:bone morphogenesis"/>
    <property type="evidence" value="ECO:0000250"/>
    <property type="project" value="UniProtKB"/>
</dbReference>
<dbReference type="GO" id="GO:0060667">
    <property type="term" value="P:branch elongation involved in salivary gland morphogenesis"/>
    <property type="evidence" value="ECO:0000250"/>
    <property type="project" value="UniProtKB"/>
</dbReference>
<dbReference type="GO" id="GO:0060670">
    <property type="term" value="P:branching involved in labyrinthine layer morphogenesis"/>
    <property type="evidence" value="ECO:0000250"/>
    <property type="project" value="UniProtKB"/>
</dbReference>
<dbReference type="GO" id="GO:0060442">
    <property type="term" value="P:branching involved in prostate gland morphogenesis"/>
    <property type="evidence" value="ECO:0000250"/>
    <property type="project" value="UniProtKB"/>
</dbReference>
<dbReference type="GO" id="GO:0060445">
    <property type="term" value="P:branching involved in salivary gland morphogenesis"/>
    <property type="evidence" value="ECO:0000250"/>
    <property type="project" value="UniProtKB"/>
</dbReference>
<dbReference type="GO" id="GO:0048755">
    <property type="term" value="P:branching morphogenesis of a nerve"/>
    <property type="evidence" value="ECO:0000250"/>
    <property type="project" value="UniProtKB"/>
</dbReference>
<dbReference type="GO" id="GO:0060449">
    <property type="term" value="P:bud elongation involved in lung branching"/>
    <property type="evidence" value="ECO:0000250"/>
    <property type="project" value="UniProtKB"/>
</dbReference>
<dbReference type="GO" id="GO:0045165">
    <property type="term" value="P:cell fate commitment"/>
    <property type="evidence" value="ECO:0000250"/>
    <property type="project" value="UniProtKB"/>
</dbReference>
<dbReference type="GO" id="GO:0007267">
    <property type="term" value="P:cell-cell signaling"/>
    <property type="evidence" value="ECO:0000250"/>
    <property type="project" value="UniProtKB"/>
</dbReference>
<dbReference type="GO" id="GO:0071456">
    <property type="term" value="P:cellular response to hypoxia"/>
    <property type="evidence" value="ECO:0007669"/>
    <property type="project" value="Ensembl"/>
</dbReference>
<dbReference type="GO" id="GO:0071300">
    <property type="term" value="P:cellular response to retinoic acid"/>
    <property type="evidence" value="ECO:0007669"/>
    <property type="project" value="Ensembl"/>
</dbReference>
<dbReference type="GO" id="GO:0071560">
    <property type="term" value="P:cellular response to transforming growth factor beta stimulus"/>
    <property type="evidence" value="ECO:0007669"/>
    <property type="project" value="Ensembl"/>
</dbReference>
<dbReference type="GO" id="GO:0048565">
    <property type="term" value="P:digestive tract development"/>
    <property type="evidence" value="ECO:0000250"/>
    <property type="project" value="UniProtKB"/>
</dbReference>
<dbReference type="GO" id="GO:0048701">
    <property type="term" value="P:embryonic cranial skeleton morphogenesis"/>
    <property type="evidence" value="ECO:0000315"/>
    <property type="project" value="BHF-UCL"/>
</dbReference>
<dbReference type="GO" id="GO:0048557">
    <property type="term" value="P:embryonic digestive tract morphogenesis"/>
    <property type="evidence" value="ECO:0000250"/>
    <property type="project" value="UniProtKB"/>
</dbReference>
<dbReference type="GO" id="GO:0048568">
    <property type="term" value="P:embryonic organ development"/>
    <property type="evidence" value="ECO:0000250"/>
    <property type="project" value="UniProtKB"/>
</dbReference>
<dbReference type="GO" id="GO:0048562">
    <property type="term" value="P:embryonic organ morphogenesis"/>
    <property type="evidence" value="ECO:0000250"/>
    <property type="project" value="UniProtKB"/>
</dbReference>
<dbReference type="GO" id="GO:0009880">
    <property type="term" value="P:embryonic pattern specification"/>
    <property type="evidence" value="ECO:0000250"/>
    <property type="project" value="UniProtKB"/>
</dbReference>
<dbReference type="GO" id="GO:0003416">
    <property type="term" value="P:endochondral bone growth"/>
    <property type="evidence" value="ECO:0007669"/>
    <property type="project" value="Ensembl"/>
</dbReference>
<dbReference type="GO" id="GO:0048730">
    <property type="term" value="P:epidermis morphogenesis"/>
    <property type="evidence" value="ECO:0000250"/>
    <property type="project" value="UniProtKB"/>
</dbReference>
<dbReference type="GO" id="GO:0030855">
    <property type="term" value="P:epithelial cell differentiation"/>
    <property type="evidence" value="ECO:0000250"/>
    <property type="project" value="UniProtKB"/>
</dbReference>
<dbReference type="GO" id="GO:0060664">
    <property type="term" value="P:epithelial cell proliferation involved in salivary gland morphogenesis"/>
    <property type="evidence" value="ECO:0000250"/>
    <property type="project" value="UniProtKB"/>
</dbReference>
<dbReference type="GO" id="GO:0001837">
    <property type="term" value="P:epithelial to mesenchymal transition"/>
    <property type="evidence" value="ECO:0007669"/>
    <property type="project" value="Ensembl"/>
</dbReference>
<dbReference type="GO" id="GO:0008543">
    <property type="term" value="P:fibroblast growth factor receptor signaling pathway"/>
    <property type="evidence" value="ECO:0000314"/>
    <property type="project" value="UniProtKB"/>
</dbReference>
<dbReference type="GO" id="GO:0035603">
    <property type="term" value="P:fibroblast growth factor receptor signaling pathway involved in hemopoiesis"/>
    <property type="evidence" value="ECO:0000250"/>
    <property type="project" value="UniProtKB"/>
</dbReference>
<dbReference type="GO" id="GO:0060595">
    <property type="term" value="P:fibroblast growth factor receptor signaling pathway involved in mammary gland specification"/>
    <property type="evidence" value="ECO:0000250"/>
    <property type="project" value="UniProtKB"/>
</dbReference>
<dbReference type="GO" id="GO:0035602">
    <property type="term" value="P:fibroblast growth factor receptor signaling pathway involved in negative regulation of apoptotic process in bone marrow cell"/>
    <property type="evidence" value="ECO:0000250"/>
    <property type="project" value="UniProtKB"/>
</dbReference>
<dbReference type="GO" id="GO:0035607">
    <property type="term" value="P:fibroblast growth factor receptor signaling pathway involved in orbitofrontal cortex development"/>
    <property type="evidence" value="ECO:0000250"/>
    <property type="project" value="UniProtKB"/>
</dbReference>
<dbReference type="GO" id="GO:0035604">
    <property type="term" value="P:fibroblast growth factor receptor signaling pathway involved in positive regulation of cell proliferation in bone marrow"/>
    <property type="evidence" value="ECO:0000250"/>
    <property type="project" value="UniProtKB"/>
</dbReference>
<dbReference type="GO" id="GO:0022612">
    <property type="term" value="P:gland morphogenesis"/>
    <property type="evidence" value="ECO:0000250"/>
    <property type="project" value="UniProtKB"/>
</dbReference>
<dbReference type="GO" id="GO:0031069">
    <property type="term" value="P:hair follicle morphogenesis"/>
    <property type="evidence" value="ECO:0000250"/>
    <property type="project" value="UniProtKB"/>
</dbReference>
<dbReference type="GO" id="GO:0001701">
    <property type="term" value="P:in utero embryonic development"/>
    <property type="evidence" value="ECO:0000250"/>
    <property type="project" value="UniProtKB"/>
</dbReference>
<dbReference type="GO" id="GO:0042472">
    <property type="term" value="P:inner ear morphogenesis"/>
    <property type="evidence" value="ECO:0000250"/>
    <property type="project" value="UniProtKB"/>
</dbReference>
<dbReference type="GO" id="GO:0032808">
    <property type="term" value="P:lacrimal gland development"/>
    <property type="evidence" value="ECO:0000250"/>
    <property type="project" value="UniProtKB"/>
</dbReference>
<dbReference type="GO" id="GO:0060601">
    <property type="term" value="P:lateral sprouting from an epithelium"/>
    <property type="evidence" value="ECO:0000250"/>
    <property type="project" value="UniProtKB"/>
</dbReference>
<dbReference type="GO" id="GO:0060174">
    <property type="term" value="P:limb bud formation"/>
    <property type="evidence" value="ECO:0000250"/>
    <property type="project" value="UniProtKB"/>
</dbReference>
<dbReference type="GO" id="GO:0048286">
    <property type="term" value="P:lung alveolus development"/>
    <property type="evidence" value="ECO:0000250"/>
    <property type="project" value="UniProtKB"/>
</dbReference>
<dbReference type="GO" id="GO:0030324">
    <property type="term" value="P:lung development"/>
    <property type="evidence" value="ECO:0000250"/>
    <property type="project" value="UniProtKB"/>
</dbReference>
<dbReference type="GO" id="GO:0060463">
    <property type="term" value="P:lung lobe morphogenesis"/>
    <property type="evidence" value="ECO:0000250"/>
    <property type="project" value="UniProtKB"/>
</dbReference>
<dbReference type="GO" id="GO:0060484">
    <property type="term" value="P:lung-associated mesenchyme development"/>
    <property type="evidence" value="ECO:0000250"/>
    <property type="project" value="UniProtKB"/>
</dbReference>
<dbReference type="GO" id="GO:0060615">
    <property type="term" value="P:mammary gland bud formation"/>
    <property type="evidence" value="ECO:0000250"/>
    <property type="project" value="UniProtKB"/>
</dbReference>
<dbReference type="GO" id="GO:0003149">
    <property type="term" value="P:membranous septum morphogenesis"/>
    <property type="evidence" value="ECO:0000250"/>
    <property type="project" value="UniProtKB"/>
</dbReference>
<dbReference type="GO" id="GO:0048762">
    <property type="term" value="P:mesenchymal cell differentiation"/>
    <property type="evidence" value="ECO:0000250"/>
    <property type="project" value="UniProtKB"/>
</dbReference>
<dbReference type="GO" id="GO:0060915">
    <property type="term" value="P:mesenchymal cell differentiation involved in lung development"/>
    <property type="evidence" value="ECO:0000250"/>
    <property type="project" value="UniProtKB"/>
</dbReference>
<dbReference type="GO" id="GO:0060916">
    <property type="term" value="P:mesenchymal cell proliferation involved in lung development"/>
    <property type="evidence" value="ECO:0000250"/>
    <property type="project" value="UniProtKB"/>
</dbReference>
<dbReference type="GO" id="GO:0048333">
    <property type="term" value="P:mesodermal cell differentiation"/>
    <property type="evidence" value="ECO:0007669"/>
    <property type="project" value="Ensembl"/>
</dbReference>
<dbReference type="GO" id="GO:0030901">
    <property type="term" value="P:midbrain development"/>
    <property type="evidence" value="ECO:0000250"/>
    <property type="project" value="UniProtKB"/>
</dbReference>
<dbReference type="GO" id="GO:0016331">
    <property type="term" value="P:morphogenesis of embryonic epithelium"/>
    <property type="evidence" value="ECO:0000250"/>
    <property type="project" value="UniProtKB"/>
</dbReference>
<dbReference type="GO" id="GO:0010839">
    <property type="term" value="P:negative regulation of keratinocyte proliferation"/>
    <property type="evidence" value="ECO:0000315"/>
    <property type="project" value="BHF-UCL"/>
</dbReference>
<dbReference type="GO" id="GO:0000122">
    <property type="term" value="P:negative regulation of transcription by RNA polymerase II"/>
    <property type="evidence" value="ECO:0000250"/>
    <property type="project" value="UniProtKB"/>
</dbReference>
<dbReference type="GO" id="GO:0042476">
    <property type="term" value="P:odontogenesis"/>
    <property type="evidence" value="ECO:0000250"/>
    <property type="project" value="UniProtKB"/>
</dbReference>
<dbReference type="GO" id="GO:0021769">
    <property type="term" value="P:orbitofrontal cortex development"/>
    <property type="evidence" value="ECO:0000250"/>
    <property type="project" value="UniProtKB"/>
</dbReference>
<dbReference type="GO" id="GO:0035265">
    <property type="term" value="P:organ growth"/>
    <property type="evidence" value="ECO:0000250"/>
    <property type="project" value="UniProtKB"/>
</dbReference>
<dbReference type="GO" id="GO:0030916">
    <property type="term" value="P:otic vesicle formation"/>
    <property type="evidence" value="ECO:0000250"/>
    <property type="project" value="UniProtKB"/>
</dbReference>
<dbReference type="GO" id="GO:0003148">
    <property type="term" value="P:outflow tract septum morphogenesis"/>
    <property type="evidence" value="ECO:0000250"/>
    <property type="project" value="UniProtKB"/>
</dbReference>
<dbReference type="GO" id="GO:0018108">
    <property type="term" value="P:peptidyl-tyrosine phosphorylation"/>
    <property type="evidence" value="ECO:0000314"/>
    <property type="project" value="UniProtKB"/>
</dbReference>
<dbReference type="GO" id="GO:0090263">
    <property type="term" value="P:positive regulation of canonical Wnt signaling pathway"/>
    <property type="evidence" value="ECO:0000250"/>
    <property type="project" value="UniProtKB"/>
</dbReference>
<dbReference type="GO" id="GO:0060045">
    <property type="term" value="P:positive regulation of cardiac muscle cell proliferation"/>
    <property type="evidence" value="ECO:0000250"/>
    <property type="project" value="UniProtKB"/>
</dbReference>
<dbReference type="GO" id="GO:0045787">
    <property type="term" value="P:positive regulation of cell cycle"/>
    <property type="evidence" value="ECO:0000250"/>
    <property type="project" value="UniProtKB"/>
</dbReference>
<dbReference type="GO" id="GO:0051781">
    <property type="term" value="P:positive regulation of cell division"/>
    <property type="evidence" value="ECO:0000250"/>
    <property type="project" value="UniProtKB"/>
</dbReference>
<dbReference type="GO" id="GO:0008284">
    <property type="term" value="P:positive regulation of cell population proliferation"/>
    <property type="evidence" value="ECO:0000314"/>
    <property type="project" value="UniProtKB"/>
</dbReference>
<dbReference type="GO" id="GO:0050679">
    <property type="term" value="P:positive regulation of epithelial cell proliferation"/>
    <property type="evidence" value="ECO:0000250"/>
    <property type="project" value="UniProtKB"/>
</dbReference>
<dbReference type="GO" id="GO:0060501">
    <property type="term" value="P:positive regulation of epithelial cell proliferation involved in lung morphogenesis"/>
    <property type="evidence" value="ECO:0000250"/>
    <property type="project" value="UniProtKB"/>
</dbReference>
<dbReference type="GO" id="GO:0070374">
    <property type="term" value="P:positive regulation of ERK1 and ERK2 cascade"/>
    <property type="evidence" value="ECO:0000250"/>
    <property type="project" value="UniProtKB"/>
</dbReference>
<dbReference type="GO" id="GO:0043410">
    <property type="term" value="P:positive regulation of MAPK cascade"/>
    <property type="evidence" value="ECO:0000315"/>
    <property type="project" value="UniProtKB"/>
</dbReference>
<dbReference type="GO" id="GO:0002053">
    <property type="term" value="P:positive regulation of mesenchymal cell proliferation"/>
    <property type="evidence" value="ECO:0000250"/>
    <property type="project" value="UniProtKB"/>
</dbReference>
<dbReference type="GO" id="GO:0010518">
    <property type="term" value="P:positive regulation of phospholipase activity"/>
    <property type="evidence" value="ECO:0000315"/>
    <property type="project" value="UniProtKB"/>
</dbReference>
<dbReference type="GO" id="GO:0045944">
    <property type="term" value="P:positive regulation of transcription by RNA polymerase II"/>
    <property type="evidence" value="ECO:0000250"/>
    <property type="project" value="UniProtKB"/>
</dbReference>
<dbReference type="GO" id="GO:1904707">
    <property type="term" value="P:positive regulation of vascular associated smooth muscle cell proliferation"/>
    <property type="evidence" value="ECO:0007669"/>
    <property type="project" value="Ensembl"/>
</dbReference>
<dbReference type="GO" id="GO:0030177">
    <property type="term" value="P:positive regulation of Wnt signaling pathway"/>
    <property type="evidence" value="ECO:0000250"/>
    <property type="project" value="UniProtKB"/>
</dbReference>
<dbReference type="GO" id="GO:0009791">
    <property type="term" value="P:post-embryonic development"/>
    <property type="evidence" value="ECO:0000250"/>
    <property type="project" value="UniProtKB"/>
</dbReference>
<dbReference type="GO" id="GO:0060527">
    <property type="term" value="P:prostate epithelial cord arborization involved in prostate glandular acinus morphogenesis"/>
    <property type="evidence" value="ECO:0000250"/>
    <property type="project" value="UniProtKB"/>
</dbReference>
<dbReference type="GO" id="GO:0060523">
    <property type="term" value="P:prostate epithelial cord elongation"/>
    <property type="evidence" value="ECO:0000250"/>
    <property type="project" value="UniProtKB"/>
</dbReference>
<dbReference type="GO" id="GO:0060512">
    <property type="term" value="P:prostate gland morphogenesis"/>
    <property type="evidence" value="ECO:0000250"/>
    <property type="project" value="UniProtKB"/>
</dbReference>
<dbReference type="GO" id="GO:0046777">
    <property type="term" value="P:protein autophosphorylation"/>
    <property type="evidence" value="ECO:0000314"/>
    <property type="project" value="UniProtKB"/>
</dbReference>
<dbReference type="GO" id="GO:0021860">
    <property type="term" value="P:pyramidal neuron development"/>
    <property type="evidence" value="ECO:0000250"/>
    <property type="project" value="UniProtKB"/>
</dbReference>
<dbReference type="GO" id="GO:0070372">
    <property type="term" value="P:regulation of ERK1 and ERK2 cascade"/>
    <property type="evidence" value="ECO:0000250"/>
    <property type="project" value="UniProtKB"/>
</dbReference>
<dbReference type="GO" id="GO:0060688">
    <property type="term" value="P:regulation of morphogenesis of a branching structure"/>
    <property type="evidence" value="ECO:0000250"/>
    <property type="project" value="UniProtKB"/>
</dbReference>
<dbReference type="GO" id="GO:0045667">
    <property type="term" value="P:regulation of osteoblast differentiation"/>
    <property type="evidence" value="ECO:0000304"/>
    <property type="project" value="UniProtKB"/>
</dbReference>
<dbReference type="GO" id="GO:0033688">
    <property type="term" value="P:regulation of osteoblast proliferation"/>
    <property type="evidence" value="ECO:0000304"/>
    <property type="project" value="UniProtKB"/>
</dbReference>
<dbReference type="GO" id="GO:0051150">
    <property type="term" value="P:regulation of smooth muscle cell differentiation"/>
    <property type="evidence" value="ECO:0000250"/>
    <property type="project" value="UniProtKB"/>
</dbReference>
<dbReference type="GO" id="GO:0008589">
    <property type="term" value="P:regulation of smoothened signaling pathway"/>
    <property type="evidence" value="ECO:0000250"/>
    <property type="project" value="UniProtKB"/>
</dbReference>
<dbReference type="GO" id="GO:0048608">
    <property type="term" value="P:reproductive structure development"/>
    <property type="evidence" value="ECO:0000250"/>
    <property type="project" value="UniProtKB"/>
</dbReference>
<dbReference type="GO" id="GO:0045471">
    <property type="term" value="P:response to ethanol"/>
    <property type="evidence" value="ECO:0007669"/>
    <property type="project" value="Ensembl"/>
</dbReference>
<dbReference type="GO" id="GO:0032496">
    <property type="term" value="P:response to lipopolysaccharide"/>
    <property type="evidence" value="ECO:0007669"/>
    <property type="project" value="Ensembl"/>
</dbReference>
<dbReference type="GO" id="GO:0048705">
    <property type="term" value="P:skeletal system morphogenesis"/>
    <property type="evidence" value="ECO:0000304"/>
    <property type="project" value="UniProtKB"/>
</dbReference>
<dbReference type="GO" id="GO:0060529">
    <property type="term" value="P:squamous basal epithelial stem cell differentiation involved in prostate gland acinus development"/>
    <property type="evidence" value="ECO:0000250"/>
    <property type="project" value="UniProtKB"/>
</dbReference>
<dbReference type="GO" id="GO:0001657">
    <property type="term" value="P:ureteric bud development"/>
    <property type="evidence" value="ECO:0000250"/>
    <property type="project" value="UniProtKB"/>
</dbReference>
<dbReference type="GO" id="GO:0055010">
    <property type="term" value="P:ventricular cardiac muscle tissue morphogenesis"/>
    <property type="evidence" value="ECO:0000250"/>
    <property type="project" value="UniProtKB"/>
</dbReference>
<dbReference type="GO" id="GO:0021847">
    <property type="term" value="P:ventricular zone neuroblast division"/>
    <property type="evidence" value="ECO:0000250"/>
    <property type="project" value="UniProtKB"/>
</dbReference>
<dbReference type="CDD" id="cd04973">
    <property type="entry name" value="IgI_1_FGFR"/>
    <property type="match status" value="1"/>
</dbReference>
<dbReference type="CDD" id="cd05857">
    <property type="entry name" value="IgI_2_FGFR"/>
    <property type="match status" value="1"/>
</dbReference>
<dbReference type="CDD" id="cd05858">
    <property type="entry name" value="IgI_3_FGFR2"/>
    <property type="match status" value="1"/>
</dbReference>
<dbReference type="CDD" id="cd05101">
    <property type="entry name" value="PTKc_FGFR2"/>
    <property type="match status" value="1"/>
</dbReference>
<dbReference type="FunFam" id="1.10.510.10:FF:000007">
    <property type="entry name" value="Fibroblast growth factor receptor"/>
    <property type="match status" value="1"/>
</dbReference>
<dbReference type="FunFam" id="2.60.40.10:FF:000016">
    <property type="entry name" value="Fibroblast growth factor receptor"/>
    <property type="match status" value="1"/>
</dbReference>
<dbReference type="FunFam" id="2.60.40.10:FF:000020">
    <property type="entry name" value="Fibroblast growth factor receptor"/>
    <property type="match status" value="1"/>
</dbReference>
<dbReference type="FunFam" id="2.60.40.10:FF:000252">
    <property type="entry name" value="Fibroblast growth factor receptor"/>
    <property type="match status" value="1"/>
</dbReference>
<dbReference type="FunFam" id="3.30.200.20:FF:000011">
    <property type="entry name" value="Fibroblast growth factor receptor"/>
    <property type="match status" value="1"/>
</dbReference>
<dbReference type="Gene3D" id="2.60.40.10">
    <property type="entry name" value="Immunoglobulins"/>
    <property type="match status" value="3"/>
</dbReference>
<dbReference type="Gene3D" id="3.30.200.20">
    <property type="entry name" value="Phosphorylase Kinase, domain 1"/>
    <property type="match status" value="1"/>
</dbReference>
<dbReference type="Gene3D" id="1.10.510.10">
    <property type="entry name" value="Transferase(Phosphotransferase) domain 1"/>
    <property type="match status" value="1"/>
</dbReference>
<dbReference type="IDEAL" id="IID00546"/>
<dbReference type="InterPro" id="IPR016248">
    <property type="entry name" value="FGF_rcpt_fam"/>
</dbReference>
<dbReference type="InterPro" id="IPR007110">
    <property type="entry name" value="Ig-like_dom"/>
</dbReference>
<dbReference type="InterPro" id="IPR036179">
    <property type="entry name" value="Ig-like_dom_sf"/>
</dbReference>
<dbReference type="InterPro" id="IPR013783">
    <property type="entry name" value="Ig-like_fold"/>
</dbReference>
<dbReference type="InterPro" id="IPR013098">
    <property type="entry name" value="Ig_I-set"/>
</dbReference>
<dbReference type="InterPro" id="IPR003599">
    <property type="entry name" value="Ig_sub"/>
</dbReference>
<dbReference type="InterPro" id="IPR003598">
    <property type="entry name" value="Ig_sub2"/>
</dbReference>
<dbReference type="InterPro" id="IPR011009">
    <property type="entry name" value="Kinase-like_dom_sf"/>
</dbReference>
<dbReference type="InterPro" id="IPR000719">
    <property type="entry name" value="Prot_kinase_dom"/>
</dbReference>
<dbReference type="InterPro" id="IPR017441">
    <property type="entry name" value="Protein_kinase_ATP_BS"/>
</dbReference>
<dbReference type="InterPro" id="IPR050122">
    <property type="entry name" value="RTK"/>
</dbReference>
<dbReference type="InterPro" id="IPR001245">
    <property type="entry name" value="Ser-Thr/Tyr_kinase_cat_dom"/>
</dbReference>
<dbReference type="InterPro" id="IPR008266">
    <property type="entry name" value="Tyr_kinase_AS"/>
</dbReference>
<dbReference type="InterPro" id="IPR020635">
    <property type="entry name" value="Tyr_kinase_cat_dom"/>
</dbReference>
<dbReference type="PANTHER" id="PTHR24416:SF130">
    <property type="entry name" value="FIBROBLAST GROWTH FACTOR RECEPTOR 2"/>
    <property type="match status" value="1"/>
</dbReference>
<dbReference type="PANTHER" id="PTHR24416">
    <property type="entry name" value="TYROSINE-PROTEIN KINASE RECEPTOR"/>
    <property type="match status" value="1"/>
</dbReference>
<dbReference type="Pfam" id="PF07679">
    <property type="entry name" value="I-set"/>
    <property type="match status" value="1"/>
</dbReference>
<dbReference type="Pfam" id="PF13927">
    <property type="entry name" value="Ig_3"/>
    <property type="match status" value="2"/>
</dbReference>
<dbReference type="Pfam" id="PF07714">
    <property type="entry name" value="PK_Tyr_Ser-Thr"/>
    <property type="match status" value="1"/>
</dbReference>
<dbReference type="PIRSF" id="PIRSF000628">
    <property type="entry name" value="FGFR"/>
    <property type="match status" value="1"/>
</dbReference>
<dbReference type="PRINTS" id="PR00109">
    <property type="entry name" value="TYRKINASE"/>
</dbReference>
<dbReference type="SMART" id="SM00409">
    <property type="entry name" value="IG"/>
    <property type="match status" value="3"/>
</dbReference>
<dbReference type="SMART" id="SM00408">
    <property type="entry name" value="IGc2"/>
    <property type="match status" value="3"/>
</dbReference>
<dbReference type="SMART" id="SM00219">
    <property type="entry name" value="TyrKc"/>
    <property type="match status" value="1"/>
</dbReference>
<dbReference type="SUPFAM" id="SSF48726">
    <property type="entry name" value="Immunoglobulin"/>
    <property type="match status" value="3"/>
</dbReference>
<dbReference type="SUPFAM" id="SSF56112">
    <property type="entry name" value="Protein kinase-like (PK-like)"/>
    <property type="match status" value="1"/>
</dbReference>
<dbReference type="PROSITE" id="PS50835">
    <property type="entry name" value="IG_LIKE"/>
    <property type="match status" value="3"/>
</dbReference>
<dbReference type="PROSITE" id="PS00107">
    <property type="entry name" value="PROTEIN_KINASE_ATP"/>
    <property type="match status" value="1"/>
</dbReference>
<dbReference type="PROSITE" id="PS50011">
    <property type="entry name" value="PROTEIN_KINASE_DOM"/>
    <property type="match status" value="1"/>
</dbReference>
<dbReference type="PROSITE" id="PS00109">
    <property type="entry name" value="PROTEIN_KINASE_TYR"/>
    <property type="match status" value="1"/>
</dbReference>
<protein>
    <recommendedName>
        <fullName>Fibroblast growth factor receptor 2</fullName>
        <shortName>FGFR-2</shortName>
        <ecNumber evidence="31 37 42 43">2.7.10.1</ecNumber>
    </recommendedName>
    <alternativeName>
        <fullName>K-sam</fullName>
        <shortName>KGFR</shortName>
    </alternativeName>
    <alternativeName>
        <fullName>Keratinocyte growth factor receptor</fullName>
    </alternativeName>
    <cdAntigenName>CD332</cdAntigenName>
</protein>
<name>FGFR2_HUMAN</name>
<accession>P21802</accession>
<accession>B4DFC2</accession>
<accession>E7EVR6</accession>
<accession>E9PCR0</accession>
<accession>P18443</accession>
<accession>Q01742</accession>
<accession>Q12922</accession>
<accession>Q14300</accession>
<accession>Q14301</accession>
<accession>Q14302</accession>
<accession>Q14303</accession>
<accession>Q14304</accession>
<accession>Q14305</accession>
<accession>Q14672</accession>
<accession>Q14718</accession>
<accession>Q14719</accession>
<accession>Q1KHY5</accession>
<accession>Q86YI4</accession>
<accession>Q8IXC7</accession>
<accession>Q96KL9</accession>
<accession>Q96KM0</accession>
<accession>Q96KM1</accession>
<accession>Q96KM2</accession>
<accession>Q9NZU2</accession>
<accession>Q9NZU3</accession>
<accession>Q9UD01</accession>
<accession>Q9UD02</accession>
<accession>Q9UIH3</accession>
<accession>Q9UIH4</accession>
<accession>Q9UIH5</accession>
<accession>Q9UIH6</accession>
<accession>Q9UIH7</accession>
<accession>Q9UIH8</accession>
<accession>Q9UM87</accession>
<accession>Q9UMC6</accession>
<accession>Q9UNS7</accession>
<accession>Q9UQH7</accession>
<accession>Q9UQH8</accession>
<accession>Q9UQH9</accession>
<accession>Q9UQI0</accession>
<keyword id="KW-0002">3D-structure</keyword>
<keyword id="KW-0025">Alternative splicing</keyword>
<keyword id="KW-0053">Apoptosis</keyword>
<keyword id="KW-0067">ATP-binding</keyword>
<keyword id="KW-1003">Cell membrane</keyword>
<keyword id="KW-0989">Craniosynostosis</keyword>
<keyword id="KW-0968">Cytoplasmic vesicle</keyword>
<keyword id="KW-0225">Disease variant</keyword>
<keyword id="KW-1015">Disulfide bond</keyword>
<keyword id="KW-0038">Ectodermal dysplasia</keyword>
<keyword id="KW-0325">Glycoprotein</keyword>
<keyword id="KW-0333">Golgi apparatus</keyword>
<keyword id="KW-0358">Heparin-binding</keyword>
<keyword id="KW-0393">Immunoglobulin domain</keyword>
<keyword id="KW-0991">Intellectual disability</keyword>
<keyword id="KW-0418">Kinase</keyword>
<keyword id="KW-0953">Lacrimo-auriculo-dento-digital syndrome</keyword>
<keyword id="KW-0472">Membrane</keyword>
<keyword id="KW-0547">Nucleotide-binding</keyword>
<keyword id="KW-0597">Phosphoprotein</keyword>
<keyword id="KW-1267">Proteomics identification</keyword>
<keyword id="KW-0656">Proto-oncogene</keyword>
<keyword id="KW-0675">Receptor</keyword>
<keyword id="KW-1185">Reference proteome</keyword>
<keyword id="KW-0677">Repeat</keyword>
<keyword id="KW-0964">Secreted</keyword>
<keyword id="KW-0732">Signal</keyword>
<keyword id="KW-0808">Transferase</keyword>
<keyword id="KW-0812">Transmembrane</keyword>
<keyword id="KW-1133">Transmembrane helix</keyword>
<keyword id="KW-0829">Tyrosine-protein kinase</keyword>
<keyword id="KW-0832">Ubl conjugation</keyword>
<sequence>MVSWGRFICLVVVTMATLSLARPSFSLVEDTTLEPEEPPTKYQISQPEVYVAAPGESLEVRCLLKDAAVISWTKDGVHLGPNNRTVLIGEYLQIKGATPRDSGLYACTASRTVDSETWYFMVNVTDAISSGDDEDDTDGAEDFVSENSNNKRAPYWTNTEKMEKRLHAVPAANTVKFRCPAGGNPMPTMRWLKNGKEFKQEHRIGGYKVRNQHWSLIMESVVPSDKGNYTCVVENEYGSINHTYHLDVVERSPHRPILQAGLPANASTVVGGDVEFVCKVYSDAQPHIQWIKHVEKNGSKYGPDGLPYLKVLKAAGVNTTDKEIEVLYIRNVTFEDAGEYTCLAGNSIGISFHSAWLTVLPAPGREKEITASPDYLEIAIYCIGVFLIACMVVTVILCRMKNTTKKPDFSSQPAVHKLTKRIPLRRQVTVSAESSSSMNSNTPLVRITTRLSSTADTPMLAGVSEYELPEDPKWEFPRDKLTLGKPLGEGCFGQVVMAEAVGIDKDKPKEAVTVAVKMLKDDATEKDLSDLVSEMEMMKMIGKHKNIINLLGACTQDGPLYVIVEYASKGNLREYLRARRPPGMEYSYDINRVPEEQMTFKDLVSCTYQLARGMEYLASQKCIHRDLAARNVLVTENNVMKIADFGLARDINNIDYYKKTTNGRLPVKWMAPEALFDRVYTHQSDVWSFGVLMWEIFTLGGSPYPGIPVEELFKLLKEGHRMDKPANCTNELYMMMRDCWHAVPSQRPTFKQLVEDLDRILTLTTNEEYLDLSQPLEQYSPSYPDTRSSCSSGDDSVFSPDPMPYEPCLPQYPHINGSVKT</sequence>
<reference key="1">
    <citation type="journal article" date="1990" name="EMBO J.">
        <title>Cloning and expression of two distinct high-affinity receptors cross-reacting with acidic and basic fibroblast growth factors.</title>
        <authorList>
            <person name="Dionne C.A."/>
            <person name="Crumley G.R."/>
            <person name="Bellot F."/>
            <person name="Kaplow J.M."/>
            <person name="Searfoss G."/>
            <person name="Ruta M."/>
            <person name="Burgess W.H."/>
            <person name="Jaye M."/>
            <person name="Schlessinger J."/>
        </authorList>
    </citation>
    <scope>NUCLEOTIDE SEQUENCE [MRNA] (ISOFORM 1)</scope>
    <source>
        <tissue>Neonatal brain stem</tissue>
    </source>
</reference>
<reference key="2">
    <citation type="journal article" date="1990" name="Proc. Natl. Acad. Sci. U.S.A.">
        <title>Related fibroblast growth factor receptor genes exist in the human genome.</title>
        <authorList>
            <person name="Houssaint E."/>
            <person name="Blanquet P.R."/>
            <person name="Champion-Arnaud P."/>
            <person name="Gesnel M.-C."/>
            <person name="Torriglia A."/>
            <person name="Courtois Y."/>
            <person name="Breathnach R."/>
        </authorList>
    </citation>
    <scope>NUCLEOTIDE SEQUENCE [MRNA] (ISOFORM 10)</scope>
</reference>
<reference key="3">
    <citation type="journal article" date="1991" name="Biochim. Biophys. Acta">
        <title>Two cDNAs encoding novel human FGF receptor.</title>
        <authorList>
            <person name="Seno M."/>
            <person name="Sasada R."/>
            <person name="Watanabe T."/>
            <person name="Ishimaru K."/>
            <person name="Igarashi K."/>
        </authorList>
    </citation>
    <scope>NUCLEOTIDE SEQUENCE [MRNA] (ISOFORM 11)</scope>
</reference>
<reference key="4">
    <citation type="journal article" date="1990" name="Proc. Natl. Acad. Sci. U.S.A.">
        <title>K-sam, an amplified gene in stomach cancer, is a member of the heparin-binding growth factor receptor genes.</title>
        <authorList>
            <person name="Hattori Y."/>
            <person name="Odagiri H."/>
            <person name="Nakatani H."/>
            <person name="Miyagawa K."/>
            <person name="Naito K."/>
            <person name="Sakamoto H."/>
            <person name="Katoh O."/>
            <person name="Yoshida T."/>
            <person name="Sugimura T."/>
            <person name="Terada M."/>
        </authorList>
    </citation>
    <scope>NUCLEOTIDE SEQUENCE [MRNA] (ISOFORM 4)</scope>
    <source>
        <tissue>Stomach cancer</tissue>
    </source>
</reference>
<reference key="5">
    <citation type="journal article" date="1992" name="Proc. Natl. Acad. Sci. U.S.A.">
        <title>K-sam gene encodes secreted as well as transmembrane receptor tyrosine kinase.</title>
        <authorList>
            <person name="Katoh M."/>
            <person name="Hattori Y."/>
            <person name="Sasaki H."/>
            <person name="Tanaka M."/>
            <person name="Sugano K."/>
            <person name="Yazaki Y."/>
            <person name="Sugimura T."/>
            <person name="Terada M."/>
        </authorList>
    </citation>
    <scope>NUCLEOTIDE SEQUENCE [MRNA] (ISOFORMS 5; 8; 9 AND 16)</scope>
</reference>
<reference key="6">
    <citation type="journal article" date="1992" name="J. Biol. Chem.">
        <title>A novel form of fibroblast growth factor receptor 2. Alternative splicing of the third immunoglobulin-like domain confers ligand binding specificity.</title>
        <authorList>
            <person name="Dell K.R."/>
            <person name="Williams L.T."/>
        </authorList>
    </citation>
    <scope>NUCLEOTIDE SEQUENCE [MRNA] (ISOFORMS 3 AND 16)</scope>
    <scope>DOMAIN</scope>
    <scope>SUBUNIT</scope>
    <source>
        <tissue>Placenta</tissue>
    </source>
</reference>
<reference key="7">
    <citation type="journal article" date="1992" name="Proc. Natl. Acad. Sci. U.S.A.">
        <title>Determination of ligand-binding specificity by alternative splicing: two distinct growth factor receptors encoded by a single gene.</title>
        <authorList>
            <person name="Miki T."/>
            <person name="Bottaro D.P."/>
            <person name="Fleming T.P."/>
            <person name="Smith C.L."/>
            <person name="Burgess W.H."/>
            <person name="Chan A.M.-L."/>
            <person name="Aaronson S.A."/>
        </authorList>
    </citation>
    <scope>NUCLEOTIDE SEQUENCE [MRNA] (ISOFORMS 3; 13 AND 16)</scope>
    <scope>SUBUNIT</scope>
    <scope>DOMAIN</scope>
    <scope>VARIANT ARG-613</scope>
    <source>
        <tissue>Mammary gland</tissue>
    </source>
</reference>
<reference key="8">
    <citation type="journal article" date="1994" name="Cell. Mol. Biol. Res.">
        <title>Hepatocyte growth factor (HGF), keratinocyte growth factor (KGF), and their receptors in human breast cells and tissues: alternative receptors.</title>
        <authorList>
            <person name="Wilson S.E."/>
            <person name="Weng J."/>
            <person name="Chwang E.L."/>
            <person name="Gollahon L."/>
            <person name="Leitch A.M."/>
            <person name="Shay J.W."/>
        </authorList>
    </citation>
    <scope>NUCLEOTIDE SEQUENCE [MRNA] (ISOFORM 13)</scope>
    <source>
        <tissue>Cornea</tissue>
        <tissue>Mammary gland</tissue>
    </source>
</reference>
<reference key="9">
    <citation type="journal article" date="1994" name="Cell. Mol. Biol. Res.">
        <authorList>
            <person name="Wilson S.E."/>
            <person name="Weng J."/>
            <person name="Chwang E.L."/>
            <person name="Gollahon L."/>
            <person name="Leitch A.M."/>
            <person name="Shay J.W."/>
        </authorList>
    </citation>
    <scope>ERRATUM OF PUBMED:7866434</scope>
</reference>
<reference key="10">
    <citation type="submission" date="1996-04" db="EMBL/GenBank/DDBJ databases">
        <authorList>
            <person name="Steinberger D."/>
            <person name="Mueller U."/>
        </authorList>
    </citation>
    <scope>NUCLEOTIDE SEQUENCE [MRNA] (ISOFORM 1)</scope>
    <scope>VARIANT CS SER-342</scope>
    <source>
        <tissue>Blood</tissue>
    </source>
</reference>
<reference key="11">
    <citation type="journal article" date="1999" name="Cancer Res.">
        <title>Deletion of the carboxyl-terminal exons of K-sam/FGFR2 by short homology-mediated recombination, generating preferential expression of specific messenger RNAs.</title>
        <authorList>
            <person name="Ueda T."/>
            <person name="Sasaki H."/>
            <person name="Kuwahara Y."/>
            <person name="Nezu M."/>
            <person name="Shibuya T."/>
            <person name="Sakamoto H."/>
            <person name="Ishii H."/>
            <person name="Yanagihara K."/>
            <person name="Mafune K."/>
            <person name="Makuuchi M."/>
            <person name="Terada M."/>
        </authorList>
    </citation>
    <scope>NUCLEOTIDE SEQUENCE [MRNA]</scope>
    <scope>VARIANT ARG-613</scope>
</reference>
<reference key="12">
    <citation type="journal article" date="2001" name="Cytogenet. Cell Genet.">
        <title>Fibroblast growth factor receptor 2 (FGFR2): genomic sequence and variations.</title>
        <authorList>
            <person name="Ingersoll R.G."/>
            <person name="Paznekas W.A."/>
            <person name="Tran A.K."/>
            <person name="Scott A.F."/>
            <person name="Jiang G."/>
            <person name="Jabs E.W."/>
        </authorList>
    </citation>
    <scope>NUCLEOTIDE SEQUENCE [GENOMIC DNA] (ISOFORMS 5; 6; 7; 8 AND 12)</scope>
</reference>
<reference key="13">
    <citation type="submission" date="2002-02" db="EMBL/GenBank/DDBJ databases">
        <title>Sequence and polymorphisms in fibroblast growth factor receptor 2 (FGFR2) gene in humans.</title>
        <authorList>
            <person name="Lind D.L."/>
            <person name="Cox D.R."/>
        </authorList>
    </citation>
    <scope>NUCLEOTIDE SEQUENCE [GENOMIC DNA] (ISOFORM 3)</scope>
</reference>
<reference key="14">
    <citation type="submission" date="2002-04" db="EMBL/GenBank/DDBJ databases">
        <title>Identification of a novel variant of FGFR2.</title>
        <authorList>
            <person name="Jang J."/>
        </authorList>
    </citation>
    <scope>NUCLEOTIDE SEQUENCE [MRNA] (ISOFORM 17)</scope>
</reference>
<reference key="15">
    <citation type="submission" date="2006-04" db="EMBL/GenBank/DDBJ databases">
        <authorList>
            <consortium name="NIEHS SNPs program"/>
        </authorList>
    </citation>
    <scope>NUCLEOTIDE SEQUENCE [GENOMIC DNA]</scope>
    <scope>VARIANTS PRO-6 AND THR-186</scope>
</reference>
<reference key="16">
    <citation type="journal article" date="2004" name="Nat. Genet.">
        <title>Complete sequencing and characterization of 21,243 full-length human cDNAs.</title>
        <authorList>
            <person name="Ota T."/>
            <person name="Suzuki Y."/>
            <person name="Nishikawa T."/>
            <person name="Otsuki T."/>
            <person name="Sugiyama T."/>
            <person name="Irie R."/>
            <person name="Wakamatsu A."/>
            <person name="Hayashi K."/>
            <person name="Sato H."/>
            <person name="Nagai K."/>
            <person name="Kimura K."/>
            <person name="Makita H."/>
            <person name="Sekine M."/>
            <person name="Obayashi M."/>
            <person name="Nishi T."/>
            <person name="Shibahara T."/>
            <person name="Tanaka T."/>
            <person name="Ishii S."/>
            <person name="Yamamoto J."/>
            <person name="Saito K."/>
            <person name="Kawai Y."/>
            <person name="Isono Y."/>
            <person name="Nakamura Y."/>
            <person name="Nagahari K."/>
            <person name="Murakami K."/>
            <person name="Yasuda T."/>
            <person name="Iwayanagi T."/>
            <person name="Wagatsuma M."/>
            <person name="Shiratori A."/>
            <person name="Sudo H."/>
            <person name="Hosoiri T."/>
            <person name="Kaku Y."/>
            <person name="Kodaira H."/>
            <person name="Kondo H."/>
            <person name="Sugawara M."/>
            <person name="Takahashi M."/>
            <person name="Kanda K."/>
            <person name="Yokoi T."/>
            <person name="Furuya T."/>
            <person name="Kikkawa E."/>
            <person name="Omura Y."/>
            <person name="Abe K."/>
            <person name="Kamihara K."/>
            <person name="Katsuta N."/>
            <person name="Sato K."/>
            <person name="Tanikawa M."/>
            <person name="Yamazaki M."/>
            <person name="Ninomiya K."/>
            <person name="Ishibashi T."/>
            <person name="Yamashita H."/>
            <person name="Murakawa K."/>
            <person name="Fujimori K."/>
            <person name="Tanai H."/>
            <person name="Kimata M."/>
            <person name="Watanabe M."/>
            <person name="Hiraoka S."/>
            <person name="Chiba Y."/>
            <person name="Ishida S."/>
            <person name="Ono Y."/>
            <person name="Takiguchi S."/>
            <person name="Watanabe S."/>
            <person name="Yosida M."/>
            <person name="Hotuta T."/>
            <person name="Kusano J."/>
            <person name="Kanehori K."/>
            <person name="Takahashi-Fujii A."/>
            <person name="Hara H."/>
            <person name="Tanase T.-O."/>
            <person name="Nomura Y."/>
            <person name="Togiya S."/>
            <person name="Komai F."/>
            <person name="Hara R."/>
            <person name="Takeuchi K."/>
            <person name="Arita M."/>
            <person name="Imose N."/>
            <person name="Musashino K."/>
            <person name="Yuuki H."/>
            <person name="Oshima A."/>
            <person name="Sasaki N."/>
            <person name="Aotsuka S."/>
            <person name="Yoshikawa Y."/>
            <person name="Matsunawa H."/>
            <person name="Ichihara T."/>
            <person name="Shiohata N."/>
            <person name="Sano S."/>
            <person name="Moriya S."/>
            <person name="Momiyama H."/>
            <person name="Satoh N."/>
            <person name="Takami S."/>
            <person name="Terashima Y."/>
            <person name="Suzuki O."/>
            <person name="Nakagawa S."/>
            <person name="Senoh A."/>
            <person name="Mizoguchi H."/>
            <person name="Goto Y."/>
            <person name="Shimizu F."/>
            <person name="Wakebe H."/>
            <person name="Hishigaki H."/>
            <person name="Watanabe T."/>
            <person name="Sugiyama A."/>
            <person name="Takemoto M."/>
            <person name="Kawakami B."/>
            <person name="Yamazaki M."/>
            <person name="Watanabe K."/>
            <person name="Kumagai A."/>
            <person name="Itakura S."/>
            <person name="Fukuzumi Y."/>
            <person name="Fujimori Y."/>
            <person name="Komiyama M."/>
            <person name="Tashiro H."/>
            <person name="Tanigami A."/>
            <person name="Fujiwara T."/>
            <person name="Ono T."/>
            <person name="Yamada K."/>
            <person name="Fujii Y."/>
            <person name="Ozaki K."/>
            <person name="Hirao M."/>
            <person name="Ohmori Y."/>
            <person name="Kawabata A."/>
            <person name="Hikiji T."/>
            <person name="Kobatake N."/>
            <person name="Inagaki H."/>
            <person name="Ikema Y."/>
            <person name="Okamoto S."/>
            <person name="Okitani R."/>
            <person name="Kawakami T."/>
            <person name="Noguchi S."/>
            <person name="Itoh T."/>
            <person name="Shigeta K."/>
            <person name="Senba T."/>
            <person name="Matsumura K."/>
            <person name="Nakajima Y."/>
            <person name="Mizuno T."/>
            <person name="Morinaga M."/>
            <person name="Sasaki M."/>
            <person name="Togashi T."/>
            <person name="Oyama M."/>
            <person name="Hata H."/>
            <person name="Watanabe M."/>
            <person name="Komatsu T."/>
            <person name="Mizushima-Sugano J."/>
            <person name="Satoh T."/>
            <person name="Shirai Y."/>
            <person name="Takahashi Y."/>
            <person name="Nakagawa K."/>
            <person name="Okumura K."/>
            <person name="Nagase T."/>
            <person name="Nomura N."/>
            <person name="Kikuchi H."/>
            <person name="Masuho Y."/>
            <person name="Yamashita R."/>
            <person name="Nakai K."/>
            <person name="Yada T."/>
            <person name="Nakamura Y."/>
            <person name="Ohara O."/>
            <person name="Isogai T."/>
            <person name="Sugano S."/>
        </authorList>
    </citation>
    <scope>NUCLEOTIDE SEQUENCE [LARGE SCALE MRNA] (ISOFORM 15)</scope>
    <source>
        <tissue>Cerebellum</tissue>
    </source>
</reference>
<reference key="17">
    <citation type="journal article" date="2004" name="Nature">
        <title>The DNA sequence and comparative analysis of human chromosome 10.</title>
        <authorList>
            <person name="Deloukas P."/>
            <person name="Earthrowl M.E."/>
            <person name="Grafham D.V."/>
            <person name="Rubenfield M."/>
            <person name="French L."/>
            <person name="Steward C.A."/>
            <person name="Sims S.K."/>
            <person name="Jones M.C."/>
            <person name="Searle S."/>
            <person name="Scott C."/>
            <person name="Howe K."/>
            <person name="Hunt S.E."/>
            <person name="Andrews T.D."/>
            <person name="Gilbert J.G.R."/>
            <person name="Swarbreck D."/>
            <person name="Ashurst J.L."/>
            <person name="Taylor A."/>
            <person name="Battles J."/>
            <person name="Bird C.P."/>
            <person name="Ainscough R."/>
            <person name="Almeida J.P."/>
            <person name="Ashwell R.I.S."/>
            <person name="Ambrose K.D."/>
            <person name="Babbage A.K."/>
            <person name="Bagguley C.L."/>
            <person name="Bailey J."/>
            <person name="Banerjee R."/>
            <person name="Bates K."/>
            <person name="Beasley H."/>
            <person name="Bray-Allen S."/>
            <person name="Brown A.J."/>
            <person name="Brown J.Y."/>
            <person name="Burford D.C."/>
            <person name="Burrill W."/>
            <person name="Burton J."/>
            <person name="Cahill P."/>
            <person name="Camire D."/>
            <person name="Carter N.P."/>
            <person name="Chapman J.C."/>
            <person name="Clark S.Y."/>
            <person name="Clarke G."/>
            <person name="Clee C.M."/>
            <person name="Clegg S."/>
            <person name="Corby N."/>
            <person name="Coulson A."/>
            <person name="Dhami P."/>
            <person name="Dutta I."/>
            <person name="Dunn M."/>
            <person name="Faulkner L."/>
            <person name="Frankish A."/>
            <person name="Frankland J.A."/>
            <person name="Garner P."/>
            <person name="Garnett J."/>
            <person name="Gribble S."/>
            <person name="Griffiths C."/>
            <person name="Grocock R."/>
            <person name="Gustafson E."/>
            <person name="Hammond S."/>
            <person name="Harley J.L."/>
            <person name="Hart E."/>
            <person name="Heath P.D."/>
            <person name="Ho T.P."/>
            <person name="Hopkins B."/>
            <person name="Horne J."/>
            <person name="Howden P.J."/>
            <person name="Huckle E."/>
            <person name="Hynds C."/>
            <person name="Johnson C."/>
            <person name="Johnson D."/>
            <person name="Kana A."/>
            <person name="Kay M."/>
            <person name="Kimberley A.M."/>
            <person name="Kershaw J.K."/>
            <person name="Kokkinaki M."/>
            <person name="Laird G.K."/>
            <person name="Lawlor S."/>
            <person name="Lee H.M."/>
            <person name="Leongamornlert D.A."/>
            <person name="Laird G."/>
            <person name="Lloyd C."/>
            <person name="Lloyd D.M."/>
            <person name="Loveland J."/>
            <person name="Lovell J."/>
            <person name="McLaren S."/>
            <person name="McLay K.E."/>
            <person name="McMurray A."/>
            <person name="Mashreghi-Mohammadi M."/>
            <person name="Matthews L."/>
            <person name="Milne S."/>
            <person name="Nickerson T."/>
            <person name="Nguyen M."/>
            <person name="Overton-Larty E."/>
            <person name="Palmer S.A."/>
            <person name="Pearce A.V."/>
            <person name="Peck A.I."/>
            <person name="Pelan S."/>
            <person name="Phillimore B."/>
            <person name="Porter K."/>
            <person name="Rice C.M."/>
            <person name="Rogosin A."/>
            <person name="Ross M.T."/>
            <person name="Sarafidou T."/>
            <person name="Sehra H.K."/>
            <person name="Shownkeen R."/>
            <person name="Skuce C.D."/>
            <person name="Smith M."/>
            <person name="Standring L."/>
            <person name="Sycamore N."/>
            <person name="Tester J."/>
            <person name="Thorpe A."/>
            <person name="Torcasso W."/>
            <person name="Tracey A."/>
            <person name="Tromans A."/>
            <person name="Tsolas J."/>
            <person name="Wall M."/>
            <person name="Walsh J."/>
            <person name="Wang H."/>
            <person name="Weinstock K."/>
            <person name="West A.P."/>
            <person name="Willey D.L."/>
            <person name="Whitehead S.L."/>
            <person name="Wilming L."/>
            <person name="Wray P.W."/>
            <person name="Young L."/>
            <person name="Chen Y."/>
            <person name="Lovering R.C."/>
            <person name="Moschonas N.K."/>
            <person name="Siebert R."/>
            <person name="Fechtel K."/>
            <person name="Bentley D."/>
            <person name="Durbin R.M."/>
            <person name="Hubbard T."/>
            <person name="Doucette-Stamm L."/>
            <person name="Beck S."/>
            <person name="Smith D.R."/>
            <person name="Rogers J."/>
        </authorList>
    </citation>
    <scope>NUCLEOTIDE SEQUENCE [LARGE SCALE GENOMIC DNA]</scope>
</reference>
<reference key="18">
    <citation type="journal article" date="2004" name="Genome Res.">
        <title>The status, quality, and expansion of the NIH full-length cDNA project: the Mammalian Gene Collection (MGC).</title>
        <authorList>
            <consortium name="The MGC Project Team"/>
        </authorList>
    </citation>
    <scope>NUCLEOTIDE SEQUENCE [LARGE SCALE MRNA] (ISOFORM 14)</scope>
    <source>
        <tissue>Brain</tissue>
    </source>
</reference>
<reference key="19">
    <citation type="journal article" date="2000" name="Am. J. Hum. Genet.">
        <title>Paternal origin of FGFR2 mutations in sporadic cases of Crouzon syndrome and Pfeiffer syndrome.</title>
        <authorList>
            <person name="Glaser R.L."/>
            <person name="Jiang W."/>
            <person name="Boyadjiev S.A."/>
            <person name="Tran A.K."/>
            <person name="Zachary A.A."/>
            <person name="Van Maldergem L."/>
            <person name="Johnson D."/>
            <person name="Walsh S."/>
            <person name="Oldridge M."/>
            <person name="Wall S.A."/>
            <person name="Wilkie A.O.M."/>
            <person name="Jabs E.W."/>
        </authorList>
    </citation>
    <scope>NUCLEOTIDE SEQUENCE [GENOMIC DNA] OF 314-427</scope>
</reference>
<reference key="20">
    <citation type="journal article" date="1999" name="Gene">
        <title>Genomic organization of the human fibroblast growth factor receptor 2 (FGFR2) gene and comparative analysis of the human FGFR gene family.</title>
        <authorList>
            <person name="Zhang Y."/>
            <person name="Gorry M.C."/>
            <person name="Post J.C."/>
            <person name="Ehrlich G.D."/>
        </authorList>
    </citation>
    <scope>NUCLEOTIDE SEQUENCE [GENOMIC DNA] OF 1-209; 212-767 AND 771-821 (ISOFORMS 5; 8 AND 12)</scope>
</reference>
<reference key="21">
    <citation type="journal article" date="1995" name="Am. J. Hum. Genet.">
        <title>Analysis of phenotypic features and FGFR2 mutations in Apert syndrome.</title>
        <authorList>
            <person name="Park W.-J."/>
            <person name="Theda C."/>
            <person name="Maestri N.E."/>
            <person name="Meyers G.A."/>
            <person name="Fryburg J.S."/>
            <person name="Dufresne C."/>
            <person name="Cohen M.M. Jr."/>
            <person name="Jabs E.W."/>
        </authorList>
    </citation>
    <scope>NUCLEOTIDE SEQUENCE [GENOMIC DNA] OF 249-313</scope>
    <scope>VARIANTS APRS TRP-252 AND ARG-253</scope>
</reference>
<reference key="22">
    <citation type="journal article" date="1996" name="Rinsho Byori">
        <title>Nucleotide sequences at intron 6 and exon 7 junction of fibroblast growth factor receptor 2 and rapid mutational analysis in Apert syndrome.</title>
        <authorList>
            <person name="Wada C."/>
            <person name="Ishigaki M."/>
            <person name="Toyo-oka Y."/>
            <person name="Yamabe H."/>
            <person name="Ohnuki Y."/>
            <person name="Takada F."/>
            <person name="Yamazaki Y."/>
            <person name="Ohtani H."/>
        </authorList>
    </citation>
    <scope>NUCLEOTIDE SEQUENCE [GENOMIC DNA] OF 251-259</scope>
</reference>
<reference key="23">
    <citation type="journal article" date="1996" name="Nat. Genet.">
        <title>Exclusive paternal origin of new mutations in Apert syndrome.</title>
        <authorList>
            <person name="Moloney D.M."/>
            <person name="Slaney S.F."/>
            <person name="Oldridge M."/>
            <person name="Wall S.A."/>
            <person name="Sahlin P."/>
            <person name="Stenman G."/>
            <person name="Wilkie A.O.M."/>
        </authorList>
    </citation>
    <scope>NUCLEOTIDE SEQUENCE [GENOMIC DNA] OF 251-318</scope>
</reference>
<reference key="24">
    <citation type="journal article" date="1995" name="Hum. Mol. Genet.">
        <title>Crouzon syndrome: mutations in two spliceoforms of FGFR2 and a common point mutation shared with Jackson-Weiss syndrome.</title>
        <authorList>
            <person name="Gorry M.C."/>
            <person name="Preston R.A."/>
            <person name="White G.J."/>
            <person name="Zhang Y."/>
            <person name="Singhal V.K."/>
            <person name="Losken H.W."/>
            <person name="Parker M.G."/>
            <person name="Nwokoro N.A."/>
            <person name="Post J.C."/>
            <person name="Ehrlich G.D."/>
        </authorList>
    </citation>
    <scope>NUCLEOTIDE SEQUENCE [GENOMIC DNA] OF 263-361</scope>
    <scope>VARIANTS CS PRO-289; ARG-338; SER-342; TYR-342; GLY-344 AND CYS-354</scope>
</reference>
<reference key="25">
    <citation type="journal article" date="1996" name="Biochemistry">
        <title>Asparagine-344 is a key residue for ligand binding in keratinocyte growth factor receptor.</title>
        <authorList>
            <person name="Gray T.E."/>
            <person name="Eisenstein M."/>
            <person name="Yayon A."/>
            <person name="Givol D."/>
        </authorList>
    </citation>
    <scope>FUNCTION (ISOFORM 3)</scope>
    <scope>SUBUNIT</scope>
    <scope>DOMAIN</scope>
</reference>
<reference key="26">
    <citation type="journal article" date="1996" name="J. Biol. Chem.">
        <title>Receptor specificity of the fibroblast growth factor family.</title>
        <authorList>
            <person name="Ornitz D.M."/>
            <person name="Xu J."/>
            <person name="Colvin J.S."/>
            <person name="McEwen D.G."/>
            <person name="MacArthur C.A."/>
            <person name="Coulier F."/>
            <person name="Gao G."/>
            <person name="Goldfarb M."/>
        </authorList>
    </citation>
    <scope>INTERACTION WITH FGF1; FGF2; FGF3; FGF4; FGF6; FGF7 AND FGF9</scope>
    <scope>FUNCTION IN CELL PROLIFERATION</scope>
</reference>
<reference key="27">
    <citation type="journal article" date="1998" name="Am. J. Hum. Genet.">
        <title>Genetic heterogeneity of Saethre-Chotzen syndrome, due to TWIST and FGFR mutations.</title>
        <authorList>
            <person name="Paznekas W.A."/>
            <person name="Cunningham M.L."/>
            <person name="Howard T.D."/>
            <person name="Korf B.R."/>
            <person name="Lipson M.H."/>
            <person name="Grix A.W."/>
            <person name="Feingold M."/>
            <person name="Goldberg R."/>
            <person name="Borochowitz Z."/>
            <person name="Aleck K."/>
            <person name="Mulliken J."/>
            <person name="Yin M."/>
            <person name="Jabs E.W."/>
        </authorList>
    </citation>
    <scope>INVOLVEMENT IN SCS</scope>
    <scope>VARIANT SCS 269-VAL-VAL-270 DEL</scope>
</reference>
<reference key="28">
    <citation type="journal article" date="2003" name="J. Biol. Chem.">
        <title>p21-activated protein kinase 4 (PAK4) interacts with the keratinocyte growth factor receptor and participates in keratinocyte growth factor-mediated inhibition of oxidant-induced cell death.</title>
        <authorList>
            <person name="Lu Y."/>
            <person name="Pan Z.-Z."/>
            <person name="Devaux Y."/>
            <person name="Ray P."/>
        </authorList>
    </citation>
    <scope>FUNCTION IN PHOSPHORYLATION OF PAK4; REGULATION OF CELL PROLIFERATION AND APOPTOSIS</scope>
    <scope>INTERACTION WITH GRB2 AND PAK4</scope>
</reference>
<reference key="29">
    <citation type="journal article" date="2004" name="J. Biol. Chem.">
        <title>Cbl-mediated degradation of Lyn and Fyn induced by constitutive fibroblast growth factor receptor-2 activation supports osteoblast differentiation.</title>
        <authorList>
            <person name="Kaabeche K."/>
            <person name="Lemonnier J."/>
            <person name="Le Mee S."/>
            <person name="Caverzasio J."/>
            <person name="Marie P.J."/>
        </authorList>
    </citation>
    <scope>FUNCTION IN OSTEOBLAST DIFFERENTIATION AND IN PHOSPHORYLATION OF CBL</scope>
    <scope>INTERACTION WITH CBL</scope>
    <scope>UBIQUITINATION</scope>
    <scope>CHARACTERIZATION OF VARIANT APRS TRP-252</scope>
</reference>
<reference key="30">
    <citation type="journal article" date="2005" name="Biochem. Biophys. Res. Commun.">
        <title>Tyrosine 769 of the keratinocyte growth factor receptor is required for receptor signaling but not endocytosis.</title>
        <authorList>
            <person name="Ceridono M."/>
            <person name="Belleudi F."/>
            <person name="Ceccarelli S."/>
            <person name="Torrisi M.R."/>
        </authorList>
    </citation>
    <scope>FUNCTION IN CELL PROLIFERATION AND ACTIVATION OF SIGNALING PATHWAYS</scope>
    <scope>MUTAGENESIS OF TYR-769</scope>
    <scope>PHOSPHORYLATION AT TYR-769</scope>
    <scope>INTERACTION WITH PLCG1</scope>
</reference>
<reference key="31">
    <citation type="journal article" date="2006" name="J. Biol. Chem.">
        <title>Receptor specificity of the fibroblast growth factor family. The complete mammalian FGF family.</title>
        <authorList>
            <person name="Zhang X."/>
            <person name="Ibrahimi O.A."/>
            <person name="Olsen S.K."/>
            <person name="Umemori H."/>
            <person name="Mohammadi M."/>
            <person name="Ornitz D.M."/>
        </authorList>
    </citation>
    <scope>INTERACTION WITH FGF1; FGF7; FGF8; FGF9; FGF10; FGF19; FGF21; FGF22 AND FGF23</scope>
    <scope>FUNCTION IN STIMULATION OF CELL PROLIFERATION</scope>
</reference>
<reference key="32">
    <citation type="journal article" date="2006" name="J. Biol. Chem.">
        <title>Intracellular retention, degradation, and signaling of glycosylation-deficient FGFR2 and craniosynostosis syndrome-associated FGFR2C278F.</title>
        <authorList>
            <person name="Hatch N.E."/>
            <person name="Hudson M."/>
            <person name="Seto M.L."/>
            <person name="Cunningham M.L."/>
            <person name="Bothwell M."/>
        </authorList>
    </citation>
    <scope>FUNCTION IN PHOSPHORYLATION OF PLCG1 (ISOFORM 1)</scope>
    <scope>CATALYTIC ACTIVITY</scope>
    <scope>AUTOPHOSPHORYLATION</scope>
    <scope>GLYCOSYLATION</scope>
    <scope>INTERACTION WITH PLCG1</scope>
    <scope>SUBCELLULAR LOCATION</scope>
    <scope>MUTAGENESIS OF ASN-265 AND 656-TYR-TYR-657</scope>
    <scope>UBIQUITINATION</scope>
    <scope>CHARACTERIZATION OF VARIANT PS PHE-278</scope>
</reference>
<reference key="33">
    <citation type="journal article" date="2007" name="J. Biol. Chem.">
        <title>Tissue-specific expression of betaKlotho and fibroblast growth factor (FGF) receptor isoforms determines metabolic activity of FGF19 and FGF21.</title>
        <authorList>
            <person name="Kurosu H."/>
            <person name="Choi M."/>
            <person name="Ogawa Y."/>
            <person name="Dickson A.S."/>
            <person name="Goetz R."/>
            <person name="Eliseenkova A.V."/>
            <person name="Mohammadi M."/>
            <person name="Rosenblatt K.P."/>
            <person name="Kliewer S.A."/>
            <person name="Kuro-o M."/>
        </authorList>
    </citation>
    <scope>INTERACTION WITH FGF19; FGF21 AND KLB</scope>
    <scope>FUNCTION IN PHOSPHORYLATION OF FRS2 AND ACTIVATION OF MAP KINASES</scope>
</reference>
<reference key="34">
    <citation type="journal article" date="2007" name="J. Cell. Physiol.">
        <title>Fibroblast growth factor receptor-induced phosphorylation of STAT1 at the Golgi apparatus without translocation to the nucleus.</title>
        <authorList>
            <person name="Citores L."/>
            <person name="Bai L."/>
            <person name="Sorensen V."/>
            <person name="Olsnes S."/>
        </authorList>
    </citation>
    <scope>FUNCTION IN STAT1 PHOSPHORYLATION</scope>
    <scope>GLYCOSYLATION</scope>
    <scope>SUBCELLULAR LOCATION</scope>
    <scope>PHOSPHORYLATION</scope>
</reference>
<reference key="35">
    <citation type="journal article" date="2008" name="Bone">
        <title>FGFR2-Cbl interaction in lipid rafts triggers attenuation of PI3K/Akt signaling and osteoblast survival.</title>
        <authorList>
            <person name="Dufour C."/>
            <person name="Guenou H."/>
            <person name="Kaabeche K."/>
            <person name="Bouvard D."/>
            <person name="Sanjay A."/>
            <person name="Marie P.J."/>
        </authorList>
    </citation>
    <scope>FUNCTION</scope>
    <scope>SUBCELLULAR LOCATION</scope>
</reference>
<reference key="36">
    <citation type="journal article" date="2009" name="Cell. Signal.">
        <title>Novel phosphotyrosine targets of FGFR2IIIb signaling.</title>
        <authorList>
            <person name="Luo Y."/>
            <person name="Yang C."/>
            <person name="Jin C."/>
            <person name="Xie R."/>
            <person name="Wang F."/>
            <person name="McKeehan W.L."/>
        </authorList>
    </citation>
    <scope>FUNCTION AS FGF7 RECEPTOR AND IN PHOSPHORYLATION OF PLCG1 AND FRS2</scope>
    <scope>CATALYTIC ACTIVITY</scope>
    <scope>PHOSPHORYLATION AT TYR-466; TYR-586; TYR-588; TYR-656 AND TYR-657</scope>
    <scope>IDENTIFICATION BY MASS SPECTROMETRY</scope>
</reference>
<reference key="37">
    <citation type="journal article" date="2009" name="J. Biol. Chem.">
        <title>Aberrant receptor internalization and enhanced FRS2-dependent signaling contribute to the transforming activity of the fibroblast growth factor receptor 2 IIIb C3 isoform.</title>
        <authorList>
            <person name="Cha J.Y."/>
            <person name="Maddileti S."/>
            <person name="Mitin N."/>
            <person name="Harden T.K."/>
            <person name="Der C.J."/>
        </authorList>
    </citation>
    <scope>FUNCTION IN FIBROBLAST PROLIFERATION; ACTIVATION OF MAP KINASES AND PHOSPHORYLATION OF PLCG1 AND FRS2</scope>
    <scope>INTERACTION WITH PLCG1 AND FRS2</scope>
    <scope>SUBCELLULAR LOCATION</scope>
    <scope>MUTAGENESIS OF TYR-769</scope>
</reference>
<reference key="38">
    <citation type="journal article" date="2009" name="Mol. Cell. Proteomics">
        <title>Large-scale proteomics analysis of the human kinome.</title>
        <authorList>
            <person name="Oppermann F.S."/>
            <person name="Gnad F."/>
            <person name="Olsen J.V."/>
            <person name="Hornberger R."/>
            <person name="Greff Z."/>
            <person name="Keri G."/>
            <person name="Mann M."/>
            <person name="Daub H."/>
        </authorList>
    </citation>
    <scope>IDENTIFICATION BY MASS SPECTROMETRY [LARGE SCALE ANALYSIS]</scope>
</reference>
<reference key="39">
    <citation type="journal article" date="2011" name="J. Biol. Chem.">
        <title>The Casitas B lineage lymphoma (Cbl) mutant G306E enhances osteogenic differentiation in human mesenchymal stromal cells in part by decreased Cbl-mediated platelet-derived growth factor receptor alpha and fibroblast growth factor receptor 2 ubiquitination.</title>
        <authorList>
            <person name="Severe N."/>
            <person name="Miraoui H."/>
            <person name="Marie P.J."/>
        </authorList>
    </citation>
    <scope>FUNCTION</scope>
    <scope>UBIQUITINATION</scope>
</reference>
<reference key="40">
    <citation type="journal article" date="2005" name="Cytokine Growth Factor Rev.">
        <title>Cellular signaling by fibroblast growth factor receptors.</title>
        <authorList>
            <person name="Eswarakumar V.P."/>
            <person name="Lax I."/>
            <person name="Schlessinger J."/>
        </authorList>
    </citation>
    <scope>REVIEW ON LIGAND SPECIFICITY</scope>
    <scope>ALTERNATIVE SPLICING</scope>
    <scope>SIGNALING</scope>
</reference>
<reference key="41">
    <citation type="journal article" date="2009" name="J. Invest. Dermatol.">
        <title>FGFR2 abnormalities underlie a spectrum of bone, skin, and cancer pathologies.</title>
        <authorList>
            <person name="Katoh M."/>
        </authorList>
    </citation>
    <scope>REVIEW ON LIGAND SPECIFICITY</scope>
    <scope>ALTERNATIVE SPLICING</scope>
    <scope>SIGNALING</scope>
    <scope>ROLE IN DISEASE</scope>
</reference>
<reference key="42">
    <citation type="journal article" date="2010" name="Nat. Rev. Cancer">
        <title>Fibroblast growth factor signalling: from development to cancer.</title>
        <authorList>
            <person name="Turner N."/>
            <person name="Grose R."/>
        </authorList>
    </citation>
    <scope>REVIEW ON FUNCTION IN FGF SIGNALING</scope>
</reference>
<reference key="43">
    <citation type="journal article" date="2014" name="J. Proteomics">
        <title>An enzyme assisted RP-RPLC approach for in-depth analysis of human liver phosphoproteome.</title>
        <authorList>
            <person name="Bian Y."/>
            <person name="Song C."/>
            <person name="Cheng K."/>
            <person name="Dong M."/>
            <person name="Wang F."/>
            <person name="Huang J."/>
            <person name="Sun D."/>
            <person name="Wang L."/>
            <person name="Ye M."/>
            <person name="Zou H."/>
        </authorList>
    </citation>
    <scope>PHOSPHORYLATION [LARGE SCALE ANALYSIS] AT SER-780</scope>
    <scope>IDENTIFICATION BY MASS SPECTROMETRY [LARGE SCALE ANALYSIS]</scope>
    <source>
        <tissue>Liver</tissue>
    </source>
</reference>
<reference key="44">
    <citation type="journal article" date="2000" name="Cell">
        <title>Crystal structures of two FGF-FGFR complexes reveal the determinants of ligand-receptor specificity.</title>
        <authorList>
            <person name="Plotnikov A.N."/>
            <person name="Hubbard S.R."/>
            <person name="Schlessinger J."/>
            <person name="Mohammadi M."/>
        </authorList>
    </citation>
    <scope>X-RAY CRYSTALLOGRAPHY (2.8 ANGSTROMS) OF 147-366 IN COMPLEX WITH FGF2</scope>
</reference>
<reference key="45">
    <citation type="journal article" date="2000" name="Nature">
        <title>Crystal structure of fibroblast growth factor receptor ectodomain bound to ligand and heparin.</title>
        <authorList>
            <person name="Pellegrini L."/>
            <person name="Burke D.F."/>
            <person name="von Delft F."/>
            <person name="Mulloy B."/>
            <person name="Blundell T.L."/>
        </authorList>
    </citation>
    <scope>X-RAY CRYSTALLOGRAPHY (2.4 ANGSTROMS) OF 148-366 IN COMPLEX WITH FGF1 AND HEPARIN</scope>
    <scope>INTERACTION WITH FGF1 AND HEPARIN</scope>
</reference>
<reference key="46">
    <citation type="journal article" date="2000" name="Proc. Natl. Acad. Sci. U.S.A.">
        <title>Structural interactions of fibroblast growth factor receptor with its ligands.</title>
        <authorList>
            <person name="Stauber D.J."/>
            <person name="DiGabriele A.D."/>
            <person name="Hendrickson W.A."/>
        </authorList>
    </citation>
    <scope>X-RAY CRYSTALLOGRAPHY (2.4 ANGSTROMS) OF 147-362 IN COMPLEX WITH FGF1</scope>
</reference>
<reference key="47">
    <citation type="journal article" date="2001" name="Proc. Natl. Acad. Sci. U.S.A.">
        <title>Structural basis for fibroblast growth factor receptor 2 activation in Apert syndrome.</title>
        <authorList>
            <person name="Ibrahimi O.A."/>
            <person name="Eliseenkova A.V."/>
            <person name="Plotnikov A.N."/>
            <person name="Yu K."/>
            <person name="Ornitz D.M."/>
            <person name="Mohammadi M."/>
        </authorList>
    </citation>
    <scope>X-RAY CRYSTALLOGRAPHY (2.7 ANGSTROMS) OF 147-366 OF VARIANTS APRS TRP-252 AND ARG-253 IN COMPLEX WITH FGF2</scope>
</reference>
<reference key="48">
    <citation type="journal article" date="2003" name="Proc. Natl. Acad. Sci. U.S.A.">
        <title>Structural basis by which alternative splicing confers specificity in fibroblast growth factor receptors.</title>
        <authorList>
            <person name="Yeh B.K."/>
            <person name="Igarashi M."/>
            <person name="Eliseenkova A.V."/>
            <person name="Plotnikov A.N."/>
            <person name="Sher I."/>
            <person name="Ron D."/>
            <person name="Aaronson S.A."/>
            <person name="Mohammadi M."/>
        </authorList>
    </citation>
    <scope>X-RAY CRYSTALLOGRAPHY (2.9 ANGSTROMS) OF 140-371 IN COMPLEX WITH FGF10</scope>
</reference>
<reference key="49">
    <citation type="journal article" date="2006" name="Genes Dev.">
        <title>Structural basis by which alternative splicing modulates the organizer activity of FGF8 in the brain.</title>
        <authorList>
            <person name="Olsen S.K."/>
            <person name="Li J.Y.H."/>
            <person name="Bromleigh C."/>
            <person name="Eliseenkova A.V."/>
            <person name="Ibrahimi O.A."/>
            <person name="Lao Z."/>
            <person name="Zhang F."/>
            <person name="Linhardt R.J."/>
            <person name="Joyner A.L."/>
            <person name="Mohammadi M."/>
        </authorList>
    </citation>
    <scope>X-RAY CRYSTALLOGRAPHY (2.28 ANGSTROMS) OF 149-368 IN COMPLEX WITH FGF8</scope>
    <scope>FUNCTION AS FGF8 RECEPTOR</scope>
    <scope>INTERACTION WITH FGF8</scope>
    <scope>DISULFIDE BONDS</scope>
</reference>
<reference key="50">
    <citation type="journal article" date="2007" name="Mol. Cell">
        <title>A molecular brake in the kinase hinge region regulates the activity of receptor tyrosine kinases.</title>
        <authorList>
            <person name="Chen H."/>
            <person name="Ma J."/>
            <person name="Li W."/>
            <person name="Eliseenkova A.V."/>
            <person name="Xu C."/>
            <person name="Neubert T.A."/>
            <person name="Miller W.T."/>
            <person name="Mohammadi M."/>
        </authorList>
    </citation>
    <scope>X-RAY CRYSTALLOGRAPHY (1.80 ANGSTROMS) OF 458-778 IN COMPLEX WITH ATP ANALOG; PEPTIDE SUBSTRATE AND MAGNESIUM</scope>
    <scope>ACTIVITY REGULATION</scope>
    <scope>PHOSPHORYLATION AT TYR-586; TYR-656 AND TYR-657</scope>
    <scope>MUTAGENESIS OF ASN-549 AND GLU-565</scope>
    <scope>CHARACTERIZATION OF VARIANT FSPC GLU-526</scope>
    <scope>CHARACTERIZATION OF VARIANT CS HIS-549</scope>
    <scope>CHARACTERIZATION OF VARIANTS PS GLY-565 AND ARG-641</scope>
    <scope>CHARACTERIZATION OF VARIANT CRANIOSYNOSTOSIS ASN-659</scope>
</reference>
<reference key="51">
    <citation type="journal article" date="2007" name="Proc. Natl. Acad. Sci. U.S.A.">
        <title>Structural basis for reduced FGFR2 activity in LADD syndrome: Implications for FGFR autoinhibition and activation.</title>
        <authorList>
            <person name="Lew E.D."/>
            <person name="Bae J.H."/>
            <person name="Rohmann E."/>
            <person name="Wollnik B."/>
            <person name="Schlessinger J."/>
        </authorList>
    </citation>
    <scope>X-RAY CRYSTALLOGRAPHY (1.80 ANGSTROMS) OF 458-766 OF VARIANT LADD1 THR-628 IN COMPLEX WITH ATP ANALOG</scope>
    <scope>CATALYTIC ACTIVITY</scope>
    <scope>SUBUNIT</scope>
    <scope>AUTOPHOSPHORYLATION</scope>
</reference>
<reference key="52">
    <citation type="journal article" date="2008" name="Proc. Natl. Acad. Sci. U.S.A.">
        <title>A crystallographic snapshot of tyrosine trans-phosphorylation in action.</title>
        <authorList>
            <person name="Chen H."/>
            <person name="Xu C.F."/>
            <person name="Ma J."/>
            <person name="Eliseenkova A.V."/>
            <person name="Li W."/>
            <person name="Pollock P.M."/>
            <person name="Pitteloud N."/>
            <person name="Miller W.T."/>
            <person name="Neubert T.A."/>
            <person name="Mohammadi M."/>
        </authorList>
    </citation>
    <scope>X-RAY CRYSTALLOGRAPHY (2.00 ANGSTROMS) OF 458-778 IN COMPLEX WITH ATP</scope>
    <scope>ACTIVE SITE</scope>
    <scope>IDENTIFICATION BY MASS SPECTROMETRY</scope>
    <scope>AUTOPHOSPHORYLATION</scope>
    <scope>PHOSPHORYLATION AT TYR-466; TYR-586; TYR-588; TYR-656; TYR-657 AND TYR-769</scope>
</reference>
<reference key="53">
    <citation type="journal article" date="2011" name="J. Biol. Chem.">
        <title>A novel mode of protein kinase inhibition exploiting hydrophobic motifs of autoinhibited kinases: discovery of ATP-independent inhibitors of fibroblast growth factor receptor.</title>
        <authorList>
            <person name="Eathiraj S."/>
            <person name="Palma R."/>
            <person name="Hirschi M."/>
            <person name="Volckova E."/>
            <person name="Nakuci E."/>
            <person name="Castro J."/>
            <person name="Chen C.R."/>
            <person name="Chan T.C."/>
            <person name="France D.S."/>
            <person name="Ashwell M.A."/>
        </authorList>
    </citation>
    <scope>X-RAY CRYSTALLOGRAPHY (2.10 ANGSTROMS) OF 458-768 IN COMPLEX WITH INHIBITOR</scope>
    <scope>CATALYTIC ACTIVITY</scope>
    <scope>AUTOPHOSPHORYLATION</scope>
    <scope>ACTIVITY REGULATION</scope>
</reference>
<reference key="54">
    <citation type="journal article" date="1994" name="Nat. Genet.">
        <title>Mutations in the fibroblast growth factor receptor 2 gene cause Crouzon syndrome.</title>
        <authorList>
            <person name="Reardon W."/>
            <person name="Winter R.M."/>
            <person name="Rutland P."/>
            <person name="Pulleyn L.J."/>
            <person name="Jones B.M."/>
            <person name="Malcolm S."/>
        </authorList>
    </citation>
    <scope>VARIANTS CS HIS-340; ARG-342; SER-342; TYR-342 AND CYS-354</scope>
</reference>
<reference key="55">
    <citation type="journal article" date="1994" name="Nat. Genet.">
        <title>Jackson-Weiss and Crouzon syndromes are allelic with mutations in fibroblast growth factor receptor 2.</title>
        <authorList>
            <person name="Jabs E.W."/>
            <person name="Li X."/>
            <person name="Scott A.F."/>
            <person name="Meyers G.A."/>
            <person name="Chen W."/>
            <person name="Eccles M."/>
            <person name="Mao J."/>
            <person name="Charnas L.R."/>
            <person name="Jackson C.E."/>
            <person name="Jaye M."/>
        </authorList>
    </citation>
    <scope>VARIANTS CS CYS-328 AND CYS-347</scope>
    <scope>VARIANT JWS GLY-344</scope>
</reference>
<reference key="56">
    <citation type="journal article" date="1995" name="Hum. Mol. Genet.">
        <title>Mutations in the third immunoglobulin domain of the fibroblast growth factor receptor-2 gene in Crouzon syndrome.</title>
        <authorList>
            <person name="Oldridge M."/>
            <person name="Wilkie A.O.M."/>
            <person name="Slaney S.F."/>
            <person name="Poole M.D."/>
            <person name="Pulleyn L.J."/>
            <person name="Rutland P."/>
            <person name="Hockley A.D."/>
            <person name="Wake M.J.C."/>
            <person name="Goldin J.H."/>
            <person name="Winter R.M."/>
            <person name="Reardon W."/>
            <person name="Malcolm S."/>
        </authorList>
    </citation>
    <scope>VARIANTS CS PRO-267; PHE-278 AND ARG-290</scope>
</reference>
<reference key="57">
    <citation type="journal article" date="1995" name="Hum. Mol. Genet.">
        <title>Novel FGFR2 mutations in Crouzon and Jackson-Weiss syndromes show allelic heterogeneity and phenotypic variability.</title>
        <authorList>
            <person name="Park W.-J."/>
            <person name="Meyers G.A."/>
            <person name="Li X."/>
            <person name="Theda C."/>
            <person name="Day D."/>
            <person name="Orlow S.J."/>
            <person name="Jones M.C."/>
            <person name="Jabs E.W."/>
        </authorList>
    </citation>
    <scope>VARIANTS CS GLY-290; TRP-342 AND CYS-354</scope>
    <scope>VARIANT JWS ARG-342</scope>
</reference>
<reference key="58">
    <citation type="journal article" date="1995" name="Nat. Genet.">
        <title>FGFR2 mutations in Pfeiffer syndrome.</title>
        <authorList>
            <person name="Lajeunie E."/>
            <person name="Wei M.H."/>
            <person name="Bonaventure J."/>
            <person name="Munnich A."/>
            <person name="le Merrer M."/>
            <person name="Renier D."/>
        </authorList>
    </citation>
    <scope>VARIANT PS ALA-321</scope>
</reference>
<reference key="59">
    <citation type="journal article" date="1995" name="Nat. Genet.">
        <title>Apert syndrome results from localized mutations of FGFR2 and is allelic with Crouzon syndrome.</title>
        <authorList>
            <person name="Wilkie A.O.M."/>
            <person name="Slaney S.F."/>
            <person name="Oldridge M."/>
            <person name="Poole M.D."/>
            <person name="Ashworth G.J."/>
            <person name="Hockley A.D."/>
            <person name="Hayward R.D."/>
            <person name="David D.J."/>
            <person name="Pulleyn L.J."/>
            <person name="Rutland P."/>
            <person name="Malcolm S."/>
            <person name="Winter R.M."/>
            <person name="Reardon W."/>
        </authorList>
    </citation>
    <scope>VARIANTS APRS TRP-252 AND ARG-253</scope>
</reference>
<reference key="60">
    <citation type="journal article" date="1995" name="Nat. Genet.">
        <title>Identical mutations in the FGFR2 gene cause both Pfeiffer and Crouzon syndrome phenotypes.</title>
        <authorList>
            <person name="Rutland P."/>
            <person name="Pulleyn L.J."/>
            <person name="Reardon W."/>
            <person name="Baraister M."/>
            <person name="Hayward R."/>
            <person name="Jones B.M."/>
            <person name="Malcolm S."/>
            <person name="Winter R.M."/>
            <person name="Oldridge M."/>
            <person name="Slaney S.F."/>
            <person name="Poole M.D."/>
            <person name="Wilkie A.O.M."/>
        </authorList>
    </citation>
    <scope>VARIANTS PS PRO-341; ARG-342 AND TYR-342</scope>
</reference>
<reference key="61">
    <citation type="journal article" date="1996" name="Am. J. Hum. Genet.">
        <title>FGFR2 exon IIIa and IIIc mutations in Crouzon, Jackson-Weiss, and Pfeiffer syndromes: evidence for missense changes, insertions, and a deletion due to alternative RNA splicing.</title>
        <authorList>
            <person name="Meyers G.A."/>
            <person name="Day D."/>
            <person name="Goldberg R."/>
            <person name="Daentl D.L."/>
            <person name="Przylepa K.A."/>
            <person name="Abrams L.J."/>
            <person name="Graham J.M. Jr."/>
            <person name="Feingold M."/>
            <person name="Moeschler J.B."/>
            <person name="Rawnsley E."/>
            <person name="Scott A.F."/>
            <person name="Jabs E.W."/>
        </authorList>
    </citation>
    <scope>VARIANTS CS GLY-268 INS; PHE-342 AND TYR-342</scope>
    <scope>VARIANTS PS PHE-278; ARG-342; SER-342; PRO-344 AND PHE-359</scope>
    <scope>VARIANT JWS PRO-289</scope>
</reference>
<reference key="62">
    <citation type="journal article" date="1996" name="Eur. J. Hum. Genet.">
        <title>Spectrum of craniosynostosis phenotypes associated with novel mutations at the fibroblast growth factor receptor 2 locus.</title>
        <authorList>
            <person name="Pulleyn L.J."/>
            <person name="Reardon W."/>
            <person name="Wilkes D."/>
            <person name="Rutland P."/>
            <person name="Jones B.M."/>
            <person name="Hayward R."/>
            <person name="Hall C.M."/>
            <person name="Brueton L."/>
            <person name="Chun N."/>
            <person name="Lammer E."/>
            <person name="Malcolm S."/>
            <person name="Winter R.M."/>
        </authorList>
    </citation>
    <scope>VARIANTS CS CYS-105; GLU-338; CYS-351 AND ARG-384</scope>
</reference>
<reference key="63">
    <citation type="journal article" date="1996" name="Hum. Mutat.">
        <title>Crouzon syndrome: previously unrecognized deletion, duplication, and point mutation within FGFR2 gene.</title>
        <authorList>
            <person name="Steinberger D."/>
            <person name="Mulliken J.B."/>
            <person name="Mueller U."/>
        </authorList>
    </citation>
    <scope>VARIANTS CS ILE-331; ASN-ALA-337 INS AND 356-TRP--THR-358 DEL</scope>
</reference>
<reference key="64">
    <citation type="journal article" date="1996" name="Nat. Genet.">
        <title>Fibroblast growth factor receptor 2 mutations in Beare-Stevenson cutis gyrata syndrome.</title>
        <authorList>
            <person name="Przylepa K.A."/>
            <person name="Paznekas W.A."/>
            <person name="Zhang M."/>
            <person name="Golabi M."/>
            <person name="Bias W."/>
            <person name="Bamshad M.J."/>
            <person name="Carey J.C."/>
            <person name="Hall B.D."/>
            <person name="Stevenson R."/>
            <person name="Orlow S.J."/>
            <person name="Cohen M.M. Jr."/>
            <person name="Jabs E.W."/>
        </authorList>
    </citation>
    <scope>VARIANTS BSTVS CYS-372 AND CYS-375</scope>
</reference>
<reference key="65">
    <citation type="journal article" date="1997" name="Hum. Genet.">
        <title>Trp290Cys mutation in exon IIIa of the fibroblast growth factor receptor 2 (FGFR2) gene is associated with Pfeiffer syndrome.</title>
        <authorList>
            <person name="Tartaglia M."/>
            <person name="Valeri S."/>
            <person name="Velardi F."/>
            <person name="di Rocco C."/>
            <person name="Battaglia P.A."/>
        </authorList>
    </citation>
    <scope>VARIANT PS CYS-290</scope>
</reference>
<reference key="66">
    <citation type="journal article" date="1997" name="Hum. Genet.">
        <title>Jackson-Weiss syndrome: identification of two novel FGFR2 missense mutations shared with Crouzon and Pfeiffer craniosynostotic disorders.</title>
        <authorList>
            <person name="Tartaglia M."/>
            <person name="Di Rocco C."/>
            <person name="Lajeunie E."/>
            <person name="Valeri S."/>
            <person name="Velardi F."/>
            <person name="Battaglia P.A."/>
        </authorList>
    </citation>
    <scope>VARIANT JWS SER-342</scope>
</reference>
<reference key="67">
    <citation type="journal article" date="1997" name="Hum. Mol. Genet.">
        <title>Genotype-phenotype correlation for nucleotide substitutions in the IgII-IgIII linker of FGFR2.</title>
        <authorList>
            <person name="Oldridge M."/>
            <person name="Lunt P.W."/>
            <person name="Zackai E.H."/>
            <person name="McDonald-Mcginn D.M."/>
            <person name="Muenke M."/>
            <person name="Moloney D.M."/>
            <person name="Twigg S.R.F."/>
            <person name="Heath J.K."/>
            <person name="Howard T.D."/>
            <person name="Hoganson G."/>
            <person name="Gagnon D.M."/>
            <person name="Jabs E.W."/>
            <person name="Wilkie A.O.M."/>
        </authorList>
    </citation>
    <scope>VARIANT LEU-252</scope>
    <scope>VARIANT APRS PHE-252</scope>
    <scope>VARIANT PS 252-SER-PRO-253 DELINS PHE-SER</scope>
</reference>
<reference key="68">
    <citation type="journal article" date="1997" name="J. Med. Genet.">
        <title>A novel mutation (a886g) in exon 5 of FGFR2 in members of a family with Crouzon phenotype and plagiocephaly.</title>
        <authorList>
            <person name="Steinberger D."/>
            <person name="Collmann H."/>
            <person name="Schmalenberger B."/>
            <person name="Mueller U."/>
        </authorList>
    </citation>
    <scope>VARIANT CS GLU-292</scope>
</reference>
<reference key="69">
    <citation type="journal article" date="1998" name="Am. J. Med. Genet.">
        <title>Description of a new mutation and characterization of FGFR1, FGFR2, and FGFR3 mutations among Brazilian patients with syndromic craniosynostoses.</title>
        <authorList>
            <person name="Passos-Bueno M.R."/>
            <person name="Sertie A.L."/>
            <person name="Richieri-Costa A."/>
            <person name="Alonso L.G."/>
            <person name="Zatz M."/>
            <person name="Alonso N."/>
            <person name="Brunoni D."/>
            <person name="Ribeiro S.F.M."/>
        </authorList>
    </citation>
    <scope>VARIANTS CS PHE-278; PRO-337; ARG-338; ARG-342; PHE-342 AND TYR-342</scope>
    <scope>VARIANTS APRS TRP-252 AND ARG-253</scope>
    <scope>VARIANT JWS PHE-278</scope>
</reference>
<reference key="70">
    <citation type="journal article" date="1998" name="Hum. Genet.">
        <title>The mutations in FGFR2-associated craniosynostoses are clustered in five structural elements of immunoglobulin-like domain III of the receptor.</title>
        <authorList>
            <person name="Steinberger D."/>
            <person name="Vriend G."/>
            <person name="Mulliken J.B."/>
            <person name="Mueller U."/>
        </authorList>
    </citation>
    <scope>VARIANTS CS VAL-276 AND CYS-301</scope>
    <scope>VARIANT CRANIOSYNOSTOSIS SER-314</scope>
</reference>
<reference key="71">
    <citation type="journal article" date="1998" name="Hum. Mutat. Suppl.">
        <title>Two common mutations 934C to G and 937C to G of fibroblast growth factor receptor 2 (FGFR2) gene in Chinese patients with Apert syndrome.</title>
        <authorList>
            <person name="Tsai F.-J."/>
            <person name="Hwu W.-L."/>
            <person name="Lin S.-P."/>
            <person name="Chang J.-G."/>
            <person name="Wang T.-R."/>
            <person name="Tsai C.-H."/>
        </authorList>
    </citation>
    <scope>VARIANTS APRS TRP-252 AND ARG-253</scope>
</reference>
<reference key="72">
    <citation type="journal article" date="1998" name="J. Craniofac. Surg.">
        <title>Pfeiffer's syndrome resulting from an S351C mutation in the fibroblast growth factor receptor-2 gene.</title>
        <authorList>
            <person name="Mathijssen I.M."/>
            <person name="Vaandrager J.M."/>
            <person name="Hoogeboom A.J."/>
            <person name="Hesseling-Janssen A.L.W."/>
            <person name="van den Ouweland A.M.W."/>
        </authorList>
    </citation>
    <scope>VARIANT PS CYS-351</scope>
</reference>
<reference key="73">
    <citation type="journal article" date="1998" name="J. Med. Genet.">
        <title>Presence of the Apert canonical S252W FGFR2 mutation in a patient without severe syndactyly.</title>
        <authorList>
            <person name="Passos-Bueno M.R."/>
            <person name="Richieri-Costa A."/>
            <person name="Sertie A.L."/>
            <person name="Kneppers A."/>
        </authorList>
    </citation>
    <scope>VARIANT PS TRP-252</scope>
</reference>
<reference key="74">
    <citation type="journal article" date="1999" name="Cleft Palate Craniofac. J.">
        <title>A novel FGFR2 gene mutation in Crouzon syndrome associated with apparent nonpenetrance.</title>
        <authorList>
            <person name="Everett E.T."/>
            <person name="Britto D.A."/>
            <person name="Ward R.E."/>
            <person name="Hartsfield J.K. Jr."/>
        </authorList>
    </citation>
    <scope>VARIANT CS SER-362</scope>
</reference>
<reference key="75">
    <citation type="journal article" date="1999" name="Hum. Genet.">
        <title>Analysis of the mutational spectrum of the FGFR2 gene in Pfeiffer syndrome.</title>
        <authorList>
            <person name="Cornejo-Roldan L.R."/>
            <person name="Roessler E."/>
            <person name="Muenke M."/>
        </authorList>
    </citation>
    <scope>VARIANTS PS CYS-340 AND GLY-342</scope>
</reference>
<reference key="76">
    <citation type="journal article" date="2000" name="Clin. Genet.">
        <title>Pfeiffer syndrome type 2 associated with a single amino acid deletion in the FGFR2 gene.</title>
        <authorList>
            <person name="Priolo M."/>
            <person name="Lerone M."/>
            <person name="Baffico M."/>
            <person name="Baldi M."/>
            <person name="Ravazzolo R."/>
            <person name="Cama A."/>
            <person name="Capra V."/>
            <person name="Silengo M."/>
        </authorList>
    </citation>
    <scope>VARIANT PS ASP-273 DEL</scope>
</reference>
<reference key="77">
    <citation type="journal article" date="2000" name="Cytogenet. Cell Genet.">
        <title>Clustering of FGFR2 gene mutations in patients with Pfeiffer and Crouzon syndromes (FGFR2-associated craniosynostoses).</title>
        <authorList>
            <person name="Kress W."/>
            <person name="Collmann H."/>
            <person name="Buesse M."/>
            <person name="Halliger-Keller B."/>
            <person name="Mueller C.R."/>
        </authorList>
    </citation>
    <scope>VARIANTS CS/PS ARG-342 AND TYR-342</scope>
    <scope>VARIANTS CS LEU-263; VAL-276; PHE-278; TYR-278; SER-288; PRO-289; PRO-341; TRP-342; CYS-354; TYR-354 AND PHE-359</scope>
    <scope>VARIANT PS SER-342</scope>
</reference>
<reference key="78">
    <citation type="journal article" date="2000" name="Eur. J. Hum. Genet.">
        <title>A novel mutation, Ala315Ser, in FGFR2: a gene-environment interaction leading to craniosynostosis?</title>
        <authorList>
            <person name="Johnson D."/>
            <person name="Wall S.A."/>
            <person name="Mann S."/>
            <person name="Wilkie A.O.M."/>
        </authorList>
    </citation>
    <scope>VARIANT SER-315</scope>
</reference>
<reference key="79">
    <citation type="journal article" date="2000" name="J. Med. Genet.">
        <title>Evidence for digenic inheritance in some cases of Antley-Bixler syndrome?</title>
        <authorList>
            <person name="Reardon W."/>
            <person name="Smith A."/>
            <person name="Honour J.W."/>
            <person name="Hindmarsh P."/>
            <person name="Das D."/>
            <person name="Rumsby G."/>
            <person name="Nelson I."/>
            <person name="Malcolm S."/>
            <person name="Ades L."/>
            <person name="Sillence D."/>
            <person name="Kumar D."/>
            <person name="DeLozier-Blanchet C."/>
            <person name="McKee S."/>
            <person name="Kelly T."/>
            <person name="McKeehan W.L."/>
            <person name="Baraitser M."/>
            <person name="Winter R.M."/>
        </authorList>
    </citation>
    <scope>VARIANTS ABS2 ARG-342; SER-342 AND CYS-351</scope>
</reference>
<reference key="80">
    <citation type="journal article" date="2001" name="Pediatr. Int.">
        <title>Mutation analysis of Crouzon syndrome and identification of one novel mutation in Taiwanese patients.</title>
        <authorList>
            <person name="Tsai F.-J."/>
            <person name="Yang C.-F."/>
            <person name="Wu J.-Y."/>
            <person name="Tsai C.-H."/>
            <person name="Lee C.-C."/>
        </authorList>
    </citation>
    <scope>VARIANTS CS CYS-281; PRO-289; ARG-342 AND TYR-342</scope>
</reference>
<reference key="81">
    <citation type="journal article" date="2002" name="Am. J. Hum. Genet.">
        <title>Genomic screening of fibroblast growth-factor receptor 2 reveals a wide spectrum of mutations in patients with syndromic craniosynostosis.</title>
        <authorList>
            <person name="Kan S.-H."/>
            <person name="Elanko N."/>
            <person name="Johnson D."/>
            <person name="Cornejo-Roldan L.R."/>
            <person name="Cook J."/>
            <person name="Reich E.W."/>
            <person name="Tomkins S."/>
            <person name="Verloes A."/>
            <person name="Twigg S.R.F."/>
            <person name="Rannan-Eliya S."/>
            <person name="McDonald-McGinn D.M."/>
            <person name="Zackai E.H."/>
            <person name="Wall S.A."/>
            <person name="Muenke M."/>
            <person name="Wilkie A.O.M."/>
        </authorList>
    </citation>
    <scope>VARIANTS CS CYS-105; PRO-267; VAL-276; CYS-281; PRO-289; ARG-338; HIS-340; PHE-342; TRP-342; CYS-347; CYS-354; HIS-549 AND GLY-678</scope>
    <scope>VARIANTS PS PHE-172; 252-SER-PRO-253 DELINS PHE-SER; CYS-290; CYS-340; PRO-341; ARG-342; SER-342; CYS-375; GLY-565; ARG-641 AND GLU-663</scope>
    <scope>VARIANTS APRS TRP-252 AND ARG-253</scope>
    <scope>VARIANTS CS/PS PHE-278 AND TYR-342</scope>
    <scope>VARIANT CRANIOSYNOSTOSIS ASN-659</scope>
    <scope>VARIANTS THR-186 AND SER-315</scope>
</reference>
<reference key="82">
    <citation type="journal article" date="2002" name="Clin. Genet.">
        <title>Mutation in the FGFR2 gene in a Taiwanese patient with Beare-Stevenson cutis gyrata syndrome.</title>
        <authorList>
            <person name="Wang T.-J."/>
            <person name="Huang C.-B."/>
            <person name="Tsai F.-J."/>
            <person name="Wu J.-Y."/>
            <person name="Lai R.-B."/>
            <person name="Hsiao M."/>
        </authorList>
    </citation>
    <scope>VARIANT BSTVS CYS-375</scope>
</reference>
<reference key="83">
    <citation type="journal article" date="2005" name="J. Med. Genet.">
        <title>Familial scaphocephaly syndrome caused by a novel mutation in the FGFR2 tyrosine kinase domain.</title>
        <authorList>
            <person name="McGillivray G."/>
            <person name="Savarirayan R."/>
            <person name="Cox T.C."/>
            <person name="Stojkoski C."/>
            <person name="McNeil R."/>
            <person name="Bankier A."/>
            <person name="Bateman J.F."/>
            <person name="Roscioli T."/>
            <person name="Gardner R.J.M."/>
            <person name="Lamande S.R."/>
        </authorList>
    </citation>
    <scope>VARIANT FSPC GLU-526</scope>
</reference>
<reference key="84">
    <citation type="journal article" date="2006" name="Nat. Genet.">
        <title>Mutations in different components of FGF signaling in LADD syndrome.</title>
        <authorList>
            <person name="Rohmann E."/>
            <person name="Brunner H.G."/>
            <person name="Kayserili H."/>
            <person name="Uyguner O."/>
            <person name="Nuernberg G."/>
            <person name="Lew E.D."/>
            <person name="Dobbie A."/>
            <person name="Eswarakumar V.P."/>
            <person name="Uzumcu A."/>
            <person name="Ulubil-Emeroglu M."/>
            <person name="Leroy J.G."/>
            <person name="Li Y."/>
            <person name="Becker C."/>
            <person name="Lehnerdt K."/>
            <person name="Cremers C.W.R.J."/>
            <person name="Yueksel-Apak M."/>
            <person name="Nuernberg P."/>
            <person name="Kubisch C."/>
            <person name="Schlessinger J."/>
            <person name="van Bokhoven H."/>
            <person name="Wollnik B."/>
        </authorList>
    </citation>
    <scope>VARIANTS LADD1 THR-628; THR-648 AND 649-ARG-ASP-650 DELINS SER</scope>
</reference>
<reference key="85">
    <citation type="journal article" date="2006" name="Science">
        <title>The consensus coding sequences of human breast and colorectal cancers.</title>
        <authorList>
            <person name="Sjoeblom T."/>
            <person name="Jones S."/>
            <person name="Wood L.D."/>
            <person name="Parsons D.W."/>
            <person name="Lin J."/>
            <person name="Barber T.D."/>
            <person name="Mandelker D."/>
            <person name="Leary R.J."/>
            <person name="Ptak J."/>
            <person name="Silliman N."/>
            <person name="Szabo S."/>
            <person name="Buckhaults P."/>
            <person name="Farrell C."/>
            <person name="Meeh P."/>
            <person name="Markowitz S.D."/>
            <person name="Willis J."/>
            <person name="Dawson D."/>
            <person name="Willson J.K.V."/>
            <person name="Gazdar A.F."/>
            <person name="Hartigan J."/>
            <person name="Wu L."/>
            <person name="Liu C."/>
            <person name="Parmigiani G."/>
            <person name="Park B.H."/>
            <person name="Bachman K.E."/>
            <person name="Papadopoulos N."/>
            <person name="Vogelstein B."/>
            <person name="Kinzler K.W."/>
            <person name="Velculescu V.E."/>
        </authorList>
    </citation>
    <scope>VARIANT [LARGE SCALE ANALYSIS] CYS-203</scope>
</reference>
<reference key="86">
    <citation type="journal article" date="2007" name="Nature">
        <title>Patterns of somatic mutation in human cancer genomes.</title>
        <authorList>
            <person name="Greenman C."/>
            <person name="Stephens P."/>
            <person name="Smith R."/>
            <person name="Dalgliesh G.L."/>
            <person name="Hunter C."/>
            <person name="Bignell G."/>
            <person name="Davies H."/>
            <person name="Teague J."/>
            <person name="Butler A."/>
            <person name="Stevens C."/>
            <person name="Edkins S."/>
            <person name="O'Meara S."/>
            <person name="Vastrik I."/>
            <person name="Schmidt E.E."/>
            <person name="Avis T."/>
            <person name="Barthorpe S."/>
            <person name="Bhamra G."/>
            <person name="Buck G."/>
            <person name="Choudhury B."/>
            <person name="Clements J."/>
            <person name="Cole J."/>
            <person name="Dicks E."/>
            <person name="Forbes S."/>
            <person name="Gray K."/>
            <person name="Halliday K."/>
            <person name="Harrison R."/>
            <person name="Hills K."/>
            <person name="Hinton J."/>
            <person name="Jenkinson A."/>
            <person name="Jones D."/>
            <person name="Menzies A."/>
            <person name="Mironenko T."/>
            <person name="Perry J."/>
            <person name="Raine K."/>
            <person name="Richardson D."/>
            <person name="Shepherd R."/>
            <person name="Small A."/>
            <person name="Tofts C."/>
            <person name="Varian J."/>
            <person name="Webb T."/>
            <person name="West S."/>
            <person name="Widaa S."/>
            <person name="Yates A."/>
            <person name="Cahill D.P."/>
            <person name="Louis D.N."/>
            <person name="Goldstraw P."/>
            <person name="Nicholson A.G."/>
            <person name="Brasseur F."/>
            <person name="Looijenga L."/>
            <person name="Weber B.L."/>
            <person name="Chiew Y.-E."/>
            <person name="DeFazio A."/>
            <person name="Greaves M.F."/>
            <person name="Green A.R."/>
            <person name="Campbell P."/>
            <person name="Birney E."/>
            <person name="Easton D.F."/>
            <person name="Chenevix-Trench G."/>
            <person name="Tan M.-H."/>
            <person name="Khoo S.K."/>
            <person name="Teh B.T."/>
            <person name="Yuen S.T."/>
            <person name="Leung S.Y."/>
            <person name="Wooster R."/>
            <person name="Futreal P.A."/>
            <person name="Stratton M.R."/>
        </authorList>
    </citation>
    <scope>VARIANTS [LARGE SCALE ANALYSIS] LEU-57; THR-186; CYS-203; VAL-272; ASN-283; CYS-290 AND THR-612</scope>
</reference>
<reference key="87">
    <citation type="journal article" date="2012" name="Am. J. Hum. Genet.">
        <title>Bent bone dysplasia-FGFR2 type, a distinct skeletal disorder, has deficient canonical FGF signaling.</title>
        <authorList>
            <person name="Merrill A.E."/>
            <person name="Sarukhanov A."/>
            <person name="Krejci P."/>
            <person name="Idoni B."/>
            <person name="Camacho N."/>
            <person name="Estrada K.D."/>
            <person name="Lyons K.M."/>
            <person name="Deixler H."/>
            <person name="Robinson H."/>
            <person name="Chitayat D."/>
            <person name="Curry C.J."/>
            <person name="Lachman R.S."/>
            <person name="Wilcox W.R."/>
            <person name="Krakow D."/>
        </authorList>
    </citation>
    <scope>VARIANTS BBDS1 ASP-381 AND ARG-391</scope>
    <scope>CHARACTERIZATION OF VARIANT BBDS1 ARG-391</scope>
</reference>
<reference key="88">
    <citation type="journal article" date="2015" name="J. Med. Genet.">
        <title>A human laterality disorder caused by a homozygous deleterious mutation in MMP21.</title>
        <authorList>
            <person name="Perles Z."/>
            <person name="Moon S."/>
            <person name="Ta-Shma A."/>
            <person name="Yaacov B."/>
            <person name="Francescatto L."/>
            <person name="Edvardson S."/>
            <person name="Rein A.J."/>
            <person name="Elpeleg O."/>
            <person name="Katsanis N."/>
        </authorList>
    </citation>
    <scope>VARIANT LEU-57</scope>
</reference>
<feature type="signal peptide" evidence="2">
    <location>
        <begin position="1"/>
        <end position="21"/>
    </location>
</feature>
<feature type="chain" id="PRO_0000016783" description="Fibroblast growth factor receptor 2">
    <location>
        <begin position="22"/>
        <end position="821"/>
    </location>
</feature>
<feature type="topological domain" description="Extracellular" evidence="2">
    <location>
        <begin position="22"/>
        <end position="377"/>
    </location>
</feature>
<feature type="transmembrane region" description="Helical" evidence="2">
    <location>
        <begin position="378"/>
        <end position="398"/>
    </location>
</feature>
<feature type="topological domain" description="Cytoplasmic" evidence="2">
    <location>
        <begin position="399"/>
        <end position="821"/>
    </location>
</feature>
<feature type="domain" description="Ig-like C2-type 1">
    <location>
        <begin position="25"/>
        <end position="125"/>
    </location>
</feature>
<feature type="domain" description="Ig-like C2-type 2">
    <location>
        <begin position="154"/>
        <end position="247"/>
    </location>
</feature>
<feature type="domain" description="Ig-like C2-type 3">
    <location>
        <begin position="256"/>
        <end position="358"/>
    </location>
</feature>
<feature type="domain" description="Protein kinase" evidence="4">
    <location>
        <begin position="481"/>
        <end position="770"/>
    </location>
</feature>
<feature type="region of interest" description="Disordered" evidence="6">
    <location>
        <begin position="131"/>
        <end position="151"/>
    </location>
</feature>
<feature type="region of interest" description="Heparin-binding">
    <location>
        <begin position="161"/>
        <end position="178"/>
    </location>
</feature>
<feature type="compositionally biased region" description="Acidic residues" evidence="6">
    <location>
        <begin position="131"/>
        <end position="144"/>
    </location>
</feature>
<feature type="active site" description="Proton acceptor" evidence="4 5 39">
    <location>
        <position position="626"/>
    </location>
</feature>
<feature type="binding site" evidence="4 39">
    <location>
        <begin position="487"/>
        <end position="495"/>
    </location>
    <ligand>
        <name>ATP</name>
        <dbReference type="ChEBI" id="CHEBI:30616"/>
    </ligand>
</feature>
<feature type="binding site" evidence="4 39">
    <location>
        <position position="517"/>
    </location>
    <ligand>
        <name>ATP</name>
        <dbReference type="ChEBI" id="CHEBI:30616"/>
    </ligand>
</feature>
<feature type="binding site" evidence="4 39">
    <location>
        <begin position="565"/>
        <end position="567"/>
    </location>
    <ligand>
        <name>ATP</name>
        <dbReference type="ChEBI" id="CHEBI:30616"/>
    </ligand>
</feature>
<feature type="binding site" evidence="4 39">
    <location>
        <position position="571"/>
    </location>
    <ligand>
        <name>ATP</name>
        <dbReference type="ChEBI" id="CHEBI:30616"/>
    </ligand>
</feature>
<feature type="modified residue" description="Phosphotyrosine; by autocatalysis" evidence="39 42">
    <location>
        <position position="466"/>
    </location>
</feature>
<feature type="modified residue" description="Phosphotyrosine; by autocatalysis" evidence="36 39 42">
    <location>
        <position position="586"/>
    </location>
</feature>
<feature type="modified residue" description="Phosphotyrosine; by autocatalysis" evidence="39 42">
    <location>
        <position position="588"/>
    </location>
</feature>
<feature type="modified residue" description="Phosphotyrosine; by autocatalysis" evidence="36 39 42">
    <location>
        <position position="656"/>
    </location>
</feature>
<feature type="modified residue" description="Phosphotyrosine; by autocatalysis" evidence="36 39 42">
    <location>
        <position position="657"/>
    </location>
</feature>
<feature type="modified residue" description="Phosphotyrosine; by autocatalysis" evidence="26 39">
    <location>
        <position position="769"/>
    </location>
</feature>
<feature type="modified residue" description="Phosphoserine" evidence="87">
    <location>
        <position position="780"/>
    </location>
</feature>
<feature type="glycosylation site" description="N-linked (GlcNAc...) asparagine" evidence="2">
    <location>
        <position position="83"/>
    </location>
</feature>
<feature type="glycosylation site" description="N-linked (GlcNAc...) asparagine" evidence="2">
    <location>
        <position position="123"/>
    </location>
</feature>
<feature type="glycosylation site" description="N-linked (GlcNAc...) asparagine" evidence="2">
    <location>
        <position position="228"/>
    </location>
</feature>
<feature type="glycosylation site" description="N-linked (GlcNAc...) asparagine" evidence="2">
    <location>
        <position position="241"/>
    </location>
</feature>
<feature type="glycosylation site" description="N-linked (GlcNAc...) asparagine" evidence="2">
    <location>
        <position position="265"/>
    </location>
</feature>
<feature type="glycosylation site" description="N-linked (GlcNAc...) asparagine" evidence="2">
    <location>
        <position position="297"/>
    </location>
</feature>
<feature type="glycosylation site" description="N-linked (GlcNAc...) asparagine" evidence="2">
    <location>
        <position position="318"/>
    </location>
</feature>
<feature type="glycosylation site" description="N-linked (GlcNAc...) asparagine" evidence="2">
    <location>
        <position position="331"/>
    </location>
</feature>
<feature type="disulfide bond" evidence="3">
    <location>
        <begin position="62"/>
        <end position="107"/>
    </location>
</feature>
<feature type="disulfide bond" evidence="3 28">
    <location>
        <begin position="179"/>
        <end position="231"/>
    </location>
</feature>
<feature type="disulfide bond" evidence="3 28">
    <location>
        <begin position="278"/>
        <end position="342"/>
    </location>
</feature>
<feature type="splice variant" id="VSP_019608" description="In isoform 14." evidence="79">
    <original>EPPTKYQISQPEVYVAAPGESLEVRCLLKDAAVISWTKDGVHLGPNNRTVLIGEYLQIKGATPRDSGLYACTASRTVDSETWYFMVNVTDAISSGDDEDDTDGAEDFVSENSNNKR</original>
    <variation>G</variation>
    <location>
        <begin position="37"/>
        <end position="152"/>
    </location>
</feature>
<feature type="splice variant" id="VSP_002964" description="In isoform 4, isoform 15 and isoform 16." evidence="78 82">
    <location>
        <begin position="37"/>
        <end position="125"/>
    </location>
</feature>
<feature type="splice variant" id="VSP_041914" description="In isoform 17." evidence="84">
    <location>
        <begin position="250"/>
        <end position="361"/>
    </location>
</feature>
<feature type="splice variant" id="VSP_002965" description="In isoform 8." evidence="76">
    <original>ERSPH</original>
    <variation>GSQGL</variation>
    <location>
        <begin position="250"/>
        <end position="254"/>
    </location>
</feature>
<feature type="splice variant" id="VSP_002966" description="In isoform 8." evidence="76">
    <location>
        <begin position="255"/>
        <end position="821"/>
    </location>
</feature>
<feature type="splice variant" id="VSP_002967" description="In isoform 10." evidence="81">
    <original>K</original>
    <variation>KVTK</variation>
    <location>
        <position position="313"/>
    </location>
</feature>
<feature type="splice variant" id="VSP_002968" description="In isoform 9." evidence="76">
    <location>
        <begin position="314"/>
        <end position="429"/>
    </location>
</feature>
<feature type="splice variant" id="VSP_002969" description="In isoform 3, isoform 4, isoform 11, isoform 12, isoform 13 and isoform 16." evidence="74 75 77 80 82 83">
    <original>AAGVNTTDKEIEVLYIR</original>
    <variation>HSGINSSNAEVLALF</variation>
    <location>
        <begin position="314"/>
        <end position="330"/>
    </location>
</feature>
<feature type="splice variant" id="VSP_002970" description="In isoform 3, isoform 4, isoform 11, isoform 12, isoform 13 and isoform 16." evidence="74 75 77 80 82 83">
    <original>FE</original>
    <variation>EA</variation>
    <location>
        <begin position="334"/>
        <end position="335"/>
    </location>
</feature>
<feature type="splice variant" id="VSP_002971" description="In isoform 3, isoform 4, isoform 11, isoform 12, isoform 13 and isoform 16." evidence="74 75 77 80 82 83">
    <original>TCLAGNSIGISFH</original>
    <variation>ICKVSNYIGQANQ</variation>
    <location>
        <begin position="341"/>
        <end position="353"/>
    </location>
</feature>
<feature type="splice variant" id="VSP_002972" description="In isoform 3, isoform 4, isoform 11, isoform 12, isoform 13 and isoform 16." evidence="74 75 77 80 82 83">
    <original>P</original>
    <variation>PKQQ</variation>
    <location>
        <position position="361"/>
    </location>
</feature>
<feature type="splice variant" id="VSP_002973" description="In isoform 13." evidence="75 83">
    <original>APGR</original>
    <variation>GRRC</variation>
    <location>
        <begin position="362"/>
        <end position="365"/>
    </location>
</feature>
<feature type="splice variant" id="VSP_002974" description="In isoform 13." evidence="75 83">
    <location>
        <begin position="366"/>
        <end position="821"/>
    </location>
</feature>
<feature type="splice variant" id="VSP_002975" description="In isoform 4, isoform 5, isoform 6, isoform 7, isoform 10 and isoform 12." evidence="76 81 82">
    <location>
        <begin position="428"/>
        <end position="429"/>
    </location>
</feature>
<feature type="splice variant" id="VSP_019609" description="In isoform 14." evidence="79">
    <location>
        <begin position="429"/>
        <end position="430"/>
    </location>
</feature>
<feature type="splice variant" id="VSP_002976" description="In isoform 4." evidence="82">
    <original>LTLTTNEEYLDLSQPLEQYSPSYPDTRSSCSSGDDSVFSPDPMPYEPCLPQYPHINGSVKT</original>
    <variation>PPNPSLMSIFRK</variation>
    <location>
        <begin position="761"/>
        <end position="821"/>
    </location>
</feature>
<feature type="splice variant" id="VSP_002978" description="In isoform 2, isoform 7, isoform 11 and isoform 16." evidence="80">
    <original>EYLDLSQPLEQYSPSYPDTRSSCSSGDDSVFSPDPMPYEPCLPQYPHINGSVKT</original>
    <variation>I</variation>
    <location>
        <begin position="768"/>
        <end position="821"/>
    </location>
</feature>
<feature type="splice variant" id="VSP_041915" description="In isoform 15." evidence="78">
    <original>YLDLSQPLEQYSPSYPDTRSSCSSGDDSVFSPDPMPYEPCLPQYPHINGSVKT</original>
    <variation>EKKVSGAVDCHKPPCNPSHLPCVLAVDQ</variation>
    <location>
        <begin position="769"/>
        <end position="821"/>
    </location>
</feature>
<feature type="splice variant" id="VSP_002984" description="In isoform 6." evidence="85">
    <original>QYSPSYPDTRSSCSSGDDSVFSPDPMPYEPCLPQYPHINGSVKT</original>
    <variation>PYSPCYPDPR</variation>
    <location>
        <begin position="778"/>
        <end position="821"/>
    </location>
</feature>
<feature type="sequence variant" id="VAR_017258" description="In dbSNP:rs3750819." evidence="73">
    <original>R</original>
    <variation>P</variation>
    <location>
        <position position="6"/>
    </location>
</feature>
<feature type="sequence variant" id="VAR_042204" description="In dbSNP:rs56226109." evidence="34 46">
    <original>S</original>
    <variation>L</variation>
    <location>
        <position position="57"/>
    </location>
</feature>
<feature type="sequence variant" id="VAR_004112" description="In CS; dbSNP:rs1434545235." evidence="19 59">
    <original>Y</original>
    <variation>C</variation>
    <location>
        <position position="105"/>
    </location>
</feature>
<feature type="sequence variant" id="VAR_017259" description="In PS; requires 2 nucleotide substitutions." evidence="19">
    <original>A</original>
    <variation>F</variation>
    <location>
        <position position="172"/>
    </location>
</feature>
<feature type="sequence variant" id="VAR_017260" description="In dbSNP:rs755793." evidence="19 34 73">
    <original>M</original>
    <variation>T</variation>
    <location>
        <position position="186"/>
    </location>
</feature>
<feature type="sequence variant" id="VAR_036380" description="In breast cancer samples; infiltrating ductal carcinoma; somatic mutation; dbSNP:rs2134829270." evidence="32 34">
    <original>R</original>
    <variation>C</variation>
    <location>
        <position position="203"/>
    </location>
</feature>
<feature type="sequence variant" id="VAR_004116" description="In PS; dbSNP:rs281865420." evidence="19 62">
    <original>SP</original>
    <variation>FS</variation>
    <location>
        <begin position="252"/>
        <end position="253"/>
    </location>
</feature>
<feature type="sequence variant" id="VAR_004114" description="In APRS; requires 2 nucleotide substitutions; dbSNP:rs121918498." evidence="62">
    <original>S</original>
    <variation>F</variation>
    <location>
        <position position="252"/>
    </location>
</feature>
<feature type="sequence variant" id="VAR_004113" description="In dbSNP:rs79184941." evidence="62">
    <original>S</original>
    <variation>L</variation>
    <location>
        <position position="252"/>
    </location>
</feature>
<feature type="sequence variant" id="VAR_004115" description="In APRS and PS; common mutation; dbSNP:rs79184941." evidence="19 25 49 51 66 69 71">
    <original>S</original>
    <variation>W</variation>
    <location>
        <position position="252"/>
    </location>
</feature>
<feature type="sequence variant" id="VAR_004117" description="In APRS; common mutation; dbSNP:rs77543610." evidence="19 49 51 66 69">
    <original>P</original>
    <variation>R</variation>
    <location>
        <position position="253"/>
    </location>
</feature>
<feature type="sequence variant" id="VAR_017261" description="In CS; dbSNP:rs779326224." evidence="16">
    <original>P</original>
    <variation>L</variation>
    <location>
        <position position="263"/>
    </location>
</feature>
<feature type="sequence variant" id="VAR_004118" description="In CS; dbSNP:rs121918505." evidence="19 48">
    <original>S</original>
    <variation>P</variation>
    <location>
        <position position="267"/>
    </location>
</feature>
<feature type="sequence variant" id="VAR_004119" description="In CS." evidence="56">
    <original>T</original>
    <variation>TG</variation>
    <location>
        <position position="268"/>
    </location>
</feature>
<feature type="sequence variant" id="VAR_075856" description="In SCS." evidence="68">
    <location>
        <begin position="269"/>
        <end position="270"/>
    </location>
</feature>
<feature type="sequence variant" id="VAR_042205" description="In an ovarian serous carcinoma sample; somatic mutation." evidence="34">
    <original>G</original>
    <variation>V</variation>
    <location>
        <position position="272"/>
    </location>
</feature>
<feature type="sequence variant" id="VAR_017262" description="In PS; type 2; dbSNP:rs121918503." evidence="13">
    <location>
        <position position="273"/>
    </location>
</feature>
<feature type="sequence variant" id="VAR_004120" description="In CS; dbSNP:rs1057519036." evidence="16 19 67">
    <original>F</original>
    <variation>V</variation>
    <location>
        <position position="276"/>
    </location>
</feature>
<feature type="sequence variant" id="VAR_004121" description="In CS, JWS and PS; forms disulfide-linked dimers with constitutive kinase activity, is retained in an intracellular compartment and not detected at the cell surface; dbSNP:rs776587763." evidence="16 19 31 48 56 69">
    <original>C</original>
    <variation>F</variation>
    <location>
        <position position="278"/>
    </location>
</feature>
<feature type="sequence variant" id="VAR_017263" description="In CS; dbSNP:rs776587763." evidence="16">
    <original>C</original>
    <variation>Y</variation>
    <location>
        <position position="278"/>
    </location>
</feature>
<feature type="sequence variant" id="VAR_017264" description="In CS; dbSNP:rs1057519038." evidence="17 19">
    <original>Y</original>
    <variation>C</variation>
    <location>
        <position position="281"/>
    </location>
</feature>
<feature type="sequence variant" id="VAR_042206" description="In a lung squamous cell carcinoma sample; somatic mutation; dbSNP:rs2134313441." evidence="34">
    <original>D</original>
    <variation>N</variation>
    <location>
        <position position="283"/>
    </location>
</feature>
<feature type="sequence variant" id="VAR_004122" description="In CS.">
    <location>
        <begin position="287"/>
        <end position="289"/>
    </location>
</feature>
<feature type="sequence variant" id="VAR_017265" description="In CS." evidence="16">
    <original>I</original>
    <variation>S</variation>
    <location>
        <position position="288"/>
    </location>
</feature>
<feature type="sequence variant" id="VAR_004123" description="In CS and JWS; dbSNP:rs121918497." evidence="16 17 19 47 56">
    <original>Q</original>
    <variation>P</variation>
    <location>
        <position position="289"/>
    </location>
</feature>
<feature type="sequence variant" id="VAR_004124" description="In PS; severe; also in a lung squamous cell carcinoma sample; somatic mutation; dbSNP:rs121918499." evidence="19 34 63">
    <original>W</original>
    <variation>C</variation>
    <location>
        <position position="290"/>
    </location>
</feature>
<feature type="sequence variant" id="VAR_017266" description="In CS; dbSNP:rs121918501." evidence="55">
    <original>W</original>
    <variation>G</variation>
    <location>
        <position position="290"/>
    </location>
</feature>
<feature type="sequence variant" id="VAR_004125" description="In CS; dbSNP:rs121918501." evidence="48">
    <original>W</original>
    <variation>R</variation>
    <location>
        <position position="290"/>
    </location>
</feature>
<feature type="sequence variant" id="VAR_004126" description="In CS; dbSNP:rs121918500." evidence="64">
    <original>K</original>
    <variation>E</variation>
    <location>
        <position position="292"/>
    </location>
</feature>
<feature type="sequence variant" id="VAR_004127" description="In CS; dbSNP:rs1554930684." evidence="67">
    <original>Y</original>
    <variation>C</variation>
    <location>
        <position position="301"/>
    </location>
</feature>
<feature type="sequence variant" id="VAR_004128" description="In craniosynostosis; dbSNP:rs1358919643." evidence="67">
    <original>A</original>
    <variation>S</variation>
    <location>
        <position position="314"/>
    </location>
</feature>
<feature type="sequence variant" id="VAR_017267" description="In a non-syndromic craniosynostosis patient with abnormal intrauterine history; confers predisposition to craniosynostosis; dbSNP:rs121918504." evidence="14 19">
    <original>A</original>
    <variation>S</variation>
    <location>
        <position position="315"/>
    </location>
</feature>
<feature type="sequence variant" id="VAR_004129" description="In PS; dbSNP:rs121918510." evidence="50">
    <original>D</original>
    <variation>A</variation>
    <location>
        <position position="321"/>
    </location>
</feature>
<feature type="sequence variant" id="VAR_004130" description="In CS; dbSNP:rs121918493." evidence="53">
    <original>Y</original>
    <variation>C</variation>
    <location>
        <position position="328"/>
    </location>
</feature>
<feature type="sequence variant" id="VAR_004131" description="In CS; dbSNP:rs2134258264." evidence="60">
    <original>N</original>
    <variation>I</variation>
    <location>
        <position position="331"/>
    </location>
</feature>
<feature type="sequence variant" id="VAR_004132" description="In CS.">
    <original>A</original>
    <variation>ANA</variation>
    <location>
        <position position="337"/>
    </location>
</feature>
<feature type="sequence variant" id="VAR_017268" description="In CS; dbSNP:rs387906676." evidence="69">
    <original>A</original>
    <variation>P</variation>
    <location>
        <position position="337"/>
    </location>
</feature>
<feature type="sequence variant" id="VAR_004133" description="In CS; dbSNP:rs1057519044." evidence="59">
    <original>G</original>
    <variation>E</variation>
    <location>
        <position position="338"/>
    </location>
</feature>
<feature type="sequence variant" id="VAR_015011" description="In CS; dbSNP:rs1057519043." evidence="19 47 69">
    <original>G</original>
    <variation>R</variation>
    <location>
        <position position="338"/>
    </location>
</feature>
<feature type="sequence variant" id="VAR_017269" description="In PS; dbSNP:rs1554928884." evidence="7 19">
    <original>Y</original>
    <variation>C</variation>
    <location>
        <position position="340"/>
    </location>
</feature>
<feature type="sequence variant" id="VAR_004134" description="In CS; dbSNP:rs121918489." evidence="19 54">
    <original>Y</original>
    <variation>H</variation>
    <location>
        <position position="340"/>
    </location>
</feature>
<feature type="sequence variant" id="VAR_004135" description="In PS and CS; dbSNP:rs121918495." evidence="16 19 52">
    <original>T</original>
    <variation>P</variation>
    <location>
        <position position="341"/>
    </location>
</feature>
<feature type="sequence variant" id="VAR_004136" description="In CS; dbSNP:rs121918487." evidence="19 56 69">
    <original>C</original>
    <variation>F</variation>
    <location>
        <position position="342"/>
    </location>
</feature>
<feature type="sequence variant" id="VAR_017270" description="In PS; dbSNP:rs121918488." evidence="7">
    <original>C</original>
    <variation>G</variation>
    <location>
        <position position="342"/>
    </location>
</feature>
<feature type="sequence variant" id="VAR_004137" description="In CS, JWS, PS and ABS2; dbSNP:rs121918488." evidence="11 16 17 19 52 54 55 56 69">
    <original>C</original>
    <variation>R</variation>
    <location>
        <position position="342"/>
    </location>
</feature>
<feature type="sequence variant" id="VAR_004138" description="In CS, JWS, PS and ABS2; dbSNP:rs121918488." evidence="11 16 19 47 54 56 65 72">
    <original>C</original>
    <variation>S</variation>
    <location>
        <position position="342"/>
    </location>
</feature>
<feature type="sequence variant" id="VAR_017271" description="In CS; dbSNP:rs121918496." evidence="16 19 55">
    <original>C</original>
    <variation>W</variation>
    <location>
        <position position="342"/>
    </location>
</feature>
<feature type="sequence variant" id="VAR_004139" description="In CS and PS; dbSNP:rs121918487." evidence="16 17 19 47 52 54 56 69">
    <original>C</original>
    <variation>Y</variation>
    <location>
        <position position="342"/>
    </location>
</feature>
<feature type="sequence variant" id="VAR_004140" description="In CS and JWS; dbSNP:rs121918492." evidence="47 53">
    <original>A</original>
    <variation>G</variation>
    <location>
        <position position="344"/>
    </location>
</feature>
<feature type="sequence variant" id="VAR_004141" description="In CS and PS; dbSNP:rs2134256250." evidence="56">
    <original>A</original>
    <variation>P</variation>
    <location>
        <position position="344"/>
    </location>
</feature>
<feature type="sequence variant" id="VAR_004142" description="In CS; dbSNP:rs121918494." evidence="19 53">
    <original>S</original>
    <variation>C</variation>
    <location>
        <position position="347"/>
    </location>
</feature>
<feature type="sequence variant" id="VAR_004143" description="In CS, PS and ABS2; dbSNP:rs121918502." evidence="11 59 70">
    <original>S</original>
    <variation>C</variation>
    <location>
        <position position="351"/>
    </location>
</feature>
<feature type="sequence variant" id="VAR_004144" description="In CS; dbSNP:rs121918490." evidence="16 19 47 54 55">
    <original>S</original>
    <variation>C</variation>
    <location>
        <position position="354"/>
    </location>
</feature>
<feature type="sequence variant" id="VAR_017272" description="In CS; dbSNP:rs121918490." evidence="16">
    <original>S</original>
    <variation>Y</variation>
    <location>
        <position position="354"/>
    </location>
</feature>
<feature type="sequence variant" id="VAR_004145" description="In CS." evidence="60">
    <location>
        <begin position="356"/>
        <end position="358"/>
    </location>
</feature>
<feature type="sequence variant" id="VAR_004146" description="In CS and PS; dbSNP:rs1274989878." evidence="16 56">
    <original>V</original>
    <variation>F</variation>
    <location>
        <position position="359"/>
    </location>
</feature>
<feature type="sequence variant" id="VAR_017273" description="In CS." evidence="8">
    <original>A</original>
    <variation>S</variation>
    <location>
        <position position="362"/>
    </location>
</feature>
<feature type="sequence variant" id="VAR_017274" description="In BSTVS; dbSNP:rs121913477." evidence="58">
    <original>S</original>
    <variation>C</variation>
    <location>
        <position position="372"/>
    </location>
</feature>
<feature type="sequence variant" id="VAR_017275" description="In PS and BSTVS; dbSNP:rs121913478." evidence="19 20 58">
    <original>Y</original>
    <variation>C</variation>
    <location>
        <position position="375"/>
    </location>
</feature>
<feature type="sequence variant" id="VAR_067977" description="In BBDS1; dbSNP:rs387906678." evidence="45">
    <original>Y</original>
    <variation>D</variation>
    <location>
        <position position="381"/>
    </location>
</feature>
<feature type="sequence variant" id="VAR_004147" description="In CS; dbSNP:rs1554927408." evidence="59">
    <original>G</original>
    <variation>R</variation>
    <location>
        <position position="384"/>
    </location>
</feature>
<feature type="sequence variant" id="VAR_067978" description="In BBDS1; the mutation selectively reduces plasma-membrane levels of the protein and markedly diminishes the receptor's responsiveness to extracellular FGF; dbSNP:rs387906677." evidence="45">
    <original>M</original>
    <variation>R</variation>
    <location>
        <position position="391"/>
    </location>
</feature>
<feature type="sequence variant" id="VAR_023788" description="In FSPC; constitutive kinase activity; dbSNP:rs121918507." evidence="27 36">
    <original>K</original>
    <variation>E</variation>
    <location>
        <position position="526"/>
    </location>
</feature>
<feature type="sequence variant" id="VAR_017276" description="In CS; constitutive kinase activity; dbSNP:rs1057519045." evidence="19 36">
    <original>N</original>
    <variation>H</variation>
    <location>
        <position position="549"/>
    </location>
</feature>
<feature type="sequence variant" id="VAR_017277" description="In PS; constitutive kinase activity; dbSNP:rs121918506." evidence="19 36">
    <original>E</original>
    <variation>G</variation>
    <location>
        <position position="565"/>
    </location>
</feature>
<feature type="sequence variant" id="VAR_046071" description="In a lung adenocarcinoma sample; somatic mutation; dbSNP:rs1846839725." evidence="34">
    <original>R</original>
    <variation>T</variation>
    <location>
        <position position="612"/>
    </location>
</feature>
<feature type="sequence variant" id="VAR_015012" description="In dbSNP:rs2133933864." evidence="10 23">
    <original>G</original>
    <variation>R</variation>
    <location>
        <position position="613"/>
    </location>
</feature>
<feature type="sequence variant" id="VAR_029884" description="In LADD1; strongly reduced kinase activity; dbSNP:rs121918509." evidence="29">
    <original>A</original>
    <variation>T</variation>
    <location>
        <position position="628"/>
    </location>
</feature>
<feature type="sequence variant" id="VAR_017278" description="In PS; constitutive kinase activity; dbSNP:rs1057519047." evidence="19 36">
    <original>K</original>
    <variation>R</variation>
    <location>
        <position position="641"/>
    </location>
</feature>
<feature type="sequence variant" id="VAR_029885" description="In LADD1; dbSNP:rs121918508." evidence="29">
    <original>A</original>
    <variation>T</variation>
    <location>
        <position position="648"/>
    </location>
</feature>
<feature type="sequence variant" id="VAR_029886" description="In LADD1." evidence="29">
    <original>RD</original>
    <variation>S</variation>
    <location>
        <begin position="649"/>
        <end position="650"/>
    </location>
</feature>
<feature type="sequence variant" id="VAR_017279" description="In craniosynostosis; constitutive kinase activity; dbSNP:rs1589722765." evidence="19 36">
    <original>K</original>
    <variation>N</variation>
    <location>
        <position position="659"/>
    </location>
</feature>
<feature type="sequence variant" id="VAR_017280" description="In PS; dbSNP:rs2133825396." evidence="19">
    <original>G</original>
    <variation>E</variation>
    <location>
        <position position="663"/>
    </location>
</feature>
<feature type="sequence variant" id="VAR_017281" description="In CS; dbSNP:rs1845559552." evidence="19">
    <original>R</original>
    <variation>G</variation>
    <location>
        <position position="678"/>
    </location>
</feature>
<feature type="mutagenesis site" description="Reduced N-glycosylation. Reduced expression at the cell surface." evidence="31">
    <original>N</original>
    <variation>Q</variation>
    <location>
        <position position="265"/>
    </location>
</feature>
<feature type="mutagenesis site" description="Constitutive kinase activity." evidence="36">
    <original>N</original>
    <variation>T</variation>
    <location>
        <position position="549"/>
    </location>
</feature>
<feature type="mutagenesis site" description="Constitutive kinase activity." evidence="36">
    <original>E</original>
    <variation>A</variation>
    <location>
        <position position="565"/>
    </location>
</feature>
<feature type="mutagenesis site" description="Loss of kinase activity." evidence="31">
    <location>
        <begin position="656"/>
        <end position="657"/>
    </location>
</feature>
<feature type="mutagenesis site" description="Increases fibroblast proliferation. Decreases phosphorylation of PLCG1 and FRS2. Decreases activation of MAP kinases." evidence="26 40">
    <original>Y</original>
    <variation>F</variation>
    <location>
        <position position="769"/>
    </location>
</feature>
<feature type="sequence conflict" description="In Ref. 16; BAG57383." evidence="85" ref="16">
    <original>L</original>
    <variation>P</variation>
    <location>
        <position position="246"/>
    </location>
</feature>
<feature type="sequence conflict" description="In Ref. 16; BAG57383." evidence="85" ref="16">
    <original>K</original>
    <variation>N</variation>
    <location>
        <position position="310"/>
    </location>
</feature>
<feature type="strand" evidence="95">
    <location>
        <begin position="152"/>
        <end position="157"/>
    </location>
</feature>
<feature type="turn" evidence="95">
    <location>
        <begin position="159"/>
        <end position="162"/>
    </location>
</feature>
<feature type="strand" evidence="95">
    <location>
        <begin position="166"/>
        <end position="170"/>
    </location>
</feature>
<feature type="strand" evidence="95">
    <location>
        <begin position="175"/>
        <end position="178"/>
    </location>
</feature>
<feature type="strand" evidence="95">
    <location>
        <begin position="181"/>
        <end position="185"/>
    </location>
</feature>
<feature type="strand" evidence="95">
    <location>
        <begin position="188"/>
        <end position="193"/>
    </location>
</feature>
<feature type="helix" evidence="95">
    <location>
        <begin position="200"/>
        <end position="202"/>
    </location>
</feature>
<feature type="strand" evidence="100">
    <location>
        <begin position="203"/>
        <end position="205"/>
    </location>
</feature>
<feature type="strand" evidence="95">
    <location>
        <begin position="208"/>
        <end position="210"/>
    </location>
</feature>
<feature type="helix" evidence="95">
    <location>
        <begin position="211"/>
        <end position="213"/>
    </location>
</feature>
<feature type="strand" evidence="95">
    <location>
        <begin position="215"/>
        <end position="218"/>
    </location>
</feature>
<feature type="helix" evidence="95">
    <location>
        <begin position="223"/>
        <end position="225"/>
    </location>
</feature>
<feature type="strand" evidence="95">
    <location>
        <begin position="227"/>
        <end position="235"/>
    </location>
</feature>
<feature type="strand" evidence="95">
    <location>
        <begin position="238"/>
        <end position="249"/>
    </location>
</feature>
<feature type="strand" evidence="98">
    <location>
        <begin position="266"/>
        <end position="269"/>
    </location>
</feature>
<feature type="strand" evidence="98">
    <location>
        <begin position="274"/>
        <end position="277"/>
    </location>
</feature>
<feature type="strand" evidence="98">
    <location>
        <begin position="287"/>
        <end position="293"/>
    </location>
</feature>
<feature type="strand" evidence="97">
    <location>
        <begin position="296"/>
        <end position="298"/>
    </location>
</feature>
<feature type="strand" evidence="98">
    <location>
        <begin position="299"/>
        <end position="301"/>
    </location>
</feature>
<feature type="strand" evidence="88">
    <location>
        <begin position="303"/>
        <end position="305"/>
    </location>
</feature>
<feature type="strand" evidence="98">
    <location>
        <begin position="309"/>
        <end position="314"/>
    </location>
</feature>
<feature type="strand" evidence="90">
    <location>
        <begin position="315"/>
        <end position="319"/>
    </location>
</feature>
<feature type="helix" evidence="88">
    <location>
        <begin position="321"/>
        <end position="323"/>
    </location>
</feature>
<feature type="strand" evidence="98">
    <location>
        <begin position="324"/>
        <end position="327"/>
    </location>
</feature>
<feature type="helix" evidence="98">
    <location>
        <begin position="334"/>
        <end position="336"/>
    </location>
</feature>
<feature type="strand" evidence="98">
    <location>
        <begin position="338"/>
        <end position="346"/>
    </location>
</feature>
<feature type="strand" evidence="98">
    <location>
        <begin position="349"/>
        <end position="360"/>
    </location>
</feature>
<feature type="turn" evidence="102">
    <location>
        <begin position="463"/>
        <end position="465"/>
    </location>
</feature>
<feature type="turn" evidence="91">
    <location>
        <begin position="472"/>
        <end position="474"/>
    </location>
</feature>
<feature type="helix" evidence="91">
    <location>
        <begin position="478"/>
        <end position="480"/>
    </location>
</feature>
<feature type="strand" evidence="91">
    <location>
        <begin position="481"/>
        <end position="489"/>
    </location>
</feature>
<feature type="strand" evidence="91">
    <location>
        <begin position="494"/>
        <end position="500"/>
    </location>
</feature>
<feature type="strand" evidence="96">
    <location>
        <begin position="504"/>
        <end position="506"/>
    </location>
</feature>
<feature type="strand" evidence="91">
    <location>
        <begin position="513"/>
        <end position="518"/>
    </location>
</feature>
<feature type="helix" evidence="91">
    <location>
        <begin position="525"/>
        <end position="541"/>
    </location>
</feature>
<feature type="strand" evidence="91">
    <location>
        <begin position="550"/>
        <end position="554"/>
    </location>
</feature>
<feature type="strand" evidence="91">
    <location>
        <begin position="556"/>
        <end position="558"/>
    </location>
</feature>
<feature type="strand" evidence="91">
    <location>
        <begin position="561"/>
        <end position="565"/>
    </location>
</feature>
<feature type="strand" evidence="89">
    <location>
        <begin position="568"/>
        <end position="571"/>
    </location>
</feature>
<feature type="helix" evidence="91">
    <location>
        <begin position="572"/>
        <end position="577"/>
    </location>
</feature>
<feature type="turn" evidence="99">
    <location>
        <begin position="585"/>
        <end position="588"/>
    </location>
</feature>
<feature type="helix" evidence="102">
    <location>
        <begin position="594"/>
        <end position="596"/>
    </location>
</feature>
<feature type="helix" evidence="91">
    <location>
        <begin position="600"/>
        <end position="619"/>
    </location>
</feature>
<feature type="helix" evidence="91">
    <location>
        <begin position="629"/>
        <end position="631"/>
    </location>
</feature>
<feature type="strand" evidence="91">
    <location>
        <begin position="632"/>
        <end position="634"/>
    </location>
</feature>
<feature type="turn" evidence="92">
    <location>
        <begin position="636"/>
        <end position="638"/>
    </location>
</feature>
<feature type="strand" evidence="91">
    <location>
        <begin position="640"/>
        <end position="642"/>
    </location>
</feature>
<feature type="helix" evidence="101">
    <location>
        <begin position="645"/>
        <end position="647"/>
    </location>
</feature>
<feature type="turn" evidence="91">
    <location>
        <begin position="652"/>
        <end position="654"/>
    </location>
</feature>
<feature type="strand" evidence="91">
    <location>
        <begin position="655"/>
        <end position="658"/>
    </location>
</feature>
<feature type="turn" evidence="94">
    <location>
        <begin position="659"/>
        <end position="662"/>
    </location>
</feature>
<feature type="strand" evidence="102">
    <location>
        <begin position="664"/>
        <end position="666"/>
    </location>
</feature>
<feature type="helix" evidence="91">
    <location>
        <begin position="667"/>
        <end position="669"/>
    </location>
</feature>
<feature type="helix" evidence="91">
    <location>
        <begin position="672"/>
        <end position="677"/>
    </location>
</feature>
<feature type="helix" evidence="91">
    <location>
        <begin position="682"/>
        <end position="697"/>
    </location>
</feature>
<feature type="helix" evidence="91">
    <location>
        <begin position="709"/>
        <end position="718"/>
    </location>
</feature>
<feature type="strand" evidence="93">
    <location>
        <begin position="726"/>
        <end position="728"/>
    </location>
</feature>
<feature type="helix" evidence="91">
    <location>
        <begin position="730"/>
        <end position="739"/>
    </location>
</feature>
<feature type="helix" evidence="91">
    <location>
        <begin position="744"/>
        <end position="746"/>
    </location>
</feature>
<feature type="helix" evidence="91">
    <location>
        <begin position="750"/>
        <end position="764"/>
    </location>
</feature>
<feature type="sequence conflict" description="In Ref. 2; AAA61188." evidence="85" ref="2">
    <original>T</original>
    <variation>L</variation>
    <location sequence="P21802-16">
        <position position="315"/>
    </location>
</feature>
<organism>
    <name type="scientific">Homo sapiens</name>
    <name type="common">Human</name>
    <dbReference type="NCBI Taxonomy" id="9606"/>
    <lineage>
        <taxon>Eukaryota</taxon>
        <taxon>Metazoa</taxon>
        <taxon>Chordata</taxon>
        <taxon>Craniata</taxon>
        <taxon>Vertebrata</taxon>
        <taxon>Euteleostomi</taxon>
        <taxon>Mammalia</taxon>
        <taxon>Eutheria</taxon>
        <taxon>Euarchontoglires</taxon>
        <taxon>Primates</taxon>
        <taxon>Haplorrhini</taxon>
        <taxon>Catarrhini</taxon>
        <taxon>Hominidae</taxon>
        <taxon>Homo</taxon>
    </lineage>
</organism>